<dbReference type="EC" id="3.2.1.17" evidence="1 6"/>
<dbReference type="EMBL" id="X04567">
    <property type="protein sequence ID" value="CAA28212.1"/>
    <property type="molecule type" value="Genomic_DNA"/>
</dbReference>
<dbReference type="EMBL" id="AF158101">
    <property type="protein sequence ID" value="AAD42568.1"/>
    <property type="molecule type" value="Genomic_DNA"/>
</dbReference>
<dbReference type="PIR" id="A92896">
    <property type="entry name" value="LZBPT4"/>
</dbReference>
<dbReference type="RefSeq" id="NP_049736.1">
    <property type="nucleotide sequence ID" value="NC_000866.4"/>
</dbReference>
<dbReference type="PDB" id="102L">
    <property type="method" value="X-ray"/>
    <property type="resolution" value="1.74 A"/>
    <property type="chains" value="A=1-164"/>
</dbReference>
<dbReference type="PDB" id="103L">
    <property type="method" value="X-ray"/>
    <property type="resolution" value="1.90 A"/>
    <property type="chains" value="A=1-164"/>
</dbReference>
<dbReference type="PDB" id="104L">
    <property type="method" value="X-ray"/>
    <property type="resolution" value="2.80 A"/>
    <property type="chains" value="A/B=1-164"/>
</dbReference>
<dbReference type="PDB" id="107L">
    <property type="method" value="X-ray"/>
    <property type="resolution" value="1.80 A"/>
    <property type="chains" value="A=1-164"/>
</dbReference>
<dbReference type="PDB" id="108L">
    <property type="method" value="X-ray"/>
    <property type="resolution" value="1.80 A"/>
    <property type="chains" value="A=1-164"/>
</dbReference>
<dbReference type="PDB" id="109L">
    <property type="method" value="X-ray"/>
    <property type="resolution" value="1.85 A"/>
    <property type="chains" value="A=1-164"/>
</dbReference>
<dbReference type="PDB" id="110L">
    <property type="method" value="X-ray"/>
    <property type="resolution" value="1.70 A"/>
    <property type="chains" value="A=1-164"/>
</dbReference>
<dbReference type="PDB" id="111L">
    <property type="method" value="X-ray"/>
    <property type="resolution" value="1.80 A"/>
    <property type="chains" value="A=1-164"/>
</dbReference>
<dbReference type="PDB" id="112L">
    <property type="method" value="X-ray"/>
    <property type="resolution" value="1.80 A"/>
    <property type="chains" value="A=1-164"/>
</dbReference>
<dbReference type="PDB" id="113L">
    <property type="method" value="X-ray"/>
    <property type="resolution" value="1.80 A"/>
    <property type="chains" value="A=1-164"/>
</dbReference>
<dbReference type="PDB" id="114L">
    <property type="method" value="X-ray"/>
    <property type="resolution" value="1.80 A"/>
    <property type="chains" value="A=1-164"/>
</dbReference>
<dbReference type="PDB" id="115L">
    <property type="method" value="X-ray"/>
    <property type="resolution" value="1.80 A"/>
    <property type="chains" value="A=1-164"/>
</dbReference>
<dbReference type="PDB" id="118L">
    <property type="method" value="X-ray"/>
    <property type="resolution" value="1.80 A"/>
    <property type="chains" value="A=1-164"/>
</dbReference>
<dbReference type="PDB" id="119L">
    <property type="method" value="X-ray"/>
    <property type="resolution" value="1.65 A"/>
    <property type="chains" value="A=1-164"/>
</dbReference>
<dbReference type="PDB" id="120L">
    <property type="method" value="X-ray"/>
    <property type="resolution" value="1.80 A"/>
    <property type="chains" value="A=1-164"/>
</dbReference>
<dbReference type="PDB" id="122L">
    <property type="method" value="X-ray"/>
    <property type="resolution" value="1.80 A"/>
    <property type="chains" value="A=1-164"/>
</dbReference>
<dbReference type="PDB" id="123L">
    <property type="method" value="X-ray"/>
    <property type="resolution" value="1.80 A"/>
    <property type="chains" value="A=1-164"/>
</dbReference>
<dbReference type="PDB" id="125L">
    <property type="method" value="X-ray"/>
    <property type="resolution" value="1.85 A"/>
    <property type="chains" value="A=1-164"/>
</dbReference>
<dbReference type="PDB" id="126L">
    <property type="method" value="X-ray"/>
    <property type="resolution" value="1.80 A"/>
    <property type="chains" value="A=1-164"/>
</dbReference>
<dbReference type="PDB" id="127L">
    <property type="method" value="X-ray"/>
    <property type="resolution" value="1.85 A"/>
    <property type="chains" value="A=1-164"/>
</dbReference>
<dbReference type="PDB" id="128L">
    <property type="method" value="X-ray"/>
    <property type="resolution" value="1.70 A"/>
    <property type="chains" value="A=1-164"/>
</dbReference>
<dbReference type="PDB" id="129L">
    <property type="method" value="X-ray"/>
    <property type="resolution" value="1.70 A"/>
    <property type="chains" value="A=1-164"/>
</dbReference>
<dbReference type="PDB" id="130L">
    <property type="method" value="X-ray"/>
    <property type="resolution" value="1.70 A"/>
    <property type="chains" value="A=1-164"/>
</dbReference>
<dbReference type="PDB" id="131L">
    <property type="method" value="X-ray"/>
    <property type="resolution" value="1.70 A"/>
    <property type="chains" value="A=1-164"/>
</dbReference>
<dbReference type="PDB" id="137L">
    <property type="method" value="X-ray"/>
    <property type="resolution" value="1.85 A"/>
    <property type="chains" value="A/B=1-164"/>
</dbReference>
<dbReference type="PDB" id="138L">
    <property type="method" value="X-ray"/>
    <property type="resolution" value="1.70 A"/>
    <property type="chains" value="A=1-164"/>
</dbReference>
<dbReference type="PDB" id="139L">
    <property type="method" value="X-ray"/>
    <property type="resolution" value="1.70 A"/>
    <property type="chains" value="A=1-164"/>
</dbReference>
<dbReference type="PDB" id="140L">
    <property type="method" value="X-ray"/>
    <property type="resolution" value="2.10 A"/>
    <property type="chains" value="A=1-164"/>
</dbReference>
<dbReference type="PDB" id="141L">
    <property type="method" value="X-ray"/>
    <property type="resolution" value="2.00 A"/>
    <property type="chains" value="A=1-164"/>
</dbReference>
<dbReference type="PDB" id="142L">
    <property type="method" value="X-ray"/>
    <property type="resolution" value="2.00 A"/>
    <property type="chains" value="A=1-164"/>
</dbReference>
<dbReference type="PDB" id="143L">
    <property type="method" value="X-ray"/>
    <property type="resolution" value="2.00 A"/>
    <property type="chains" value="A=1-164"/>
</dbReference>
<dbReference type="PDB" id="144L">
    <property type="method" value="X-ray"/>
    <property type="resolution" value="2.10 A"/>
    <property type="chains" value="A=1-164"/>
</dbReference>
<dbReference type="PDB" id="145L">
    <property type="method" value="X-ray"/>
    <property type="resolution" value="2.00 A"/>
    <property type="chains" value="A=1-164"/>
</dbReference>
<dbReference type="PDB" id="146L">
    <property type="method" value="X-ray"/>
    <property type="resolution" value="1.85 A"/>
    <property type="chains" value="A=1-164"/>
</dbReference>
<dbReference type="PDB" id="147L">
    <property type="method" value="X-ray"/>
    <property type="resolution" value="2.00 A"/>
    <property type="chains" value="A=1-164"/>
</dbReference>
<dbReference type="PDB" id="148L">
    <property type="method" value="X-ray"/>
    <property type="resolution" value="1.90 A"/>
    <property type="chains" value="E=1-164"/>
</dbReference>
<dbReference type="PDB" id="149L">
    <property type="method" value="X-ray"/>
    <property type="resolution" value="2.60 A"/>
    <property type="chains" value="A=1-164"/>
</dbReference>
<dbReference type="PDB" id="150L">
    <property type="method" value="X-ray"/>
    <property type="resolution" value="2.20 A"/>
    <property type="chains" value="A/B/C/D=1-164"/>
</dbReference>
<dbReference type="PDB" id="151L">
    <property type="method" value="X-ray"/>
    <property type="resolution" value="2.20 A"/>
    <property type="chains" value="A=1-164"/>
</dbReference>
<dbReference type="PDB" id="152L">
    <property type="method" value="X-ray"/>
    <property type="resolution" value="2.00 A"/>
    <property type="chains" value="A=1-163"/>
</dbReference>
<dbReference type="PDB" id="155L">
    <property type="method" value="X-ray"/>
    <property type="resolution" value="1.85 A"/>
    <property type="chains" value="A=1-164"/>
</dbReference>
<dbReference type="PDB" id="156L">
    <property type="method" value="X-ray"/>
    <property type="resolution" value="1.80 A"/>
    <property type="chains" value="A=1-164"/>
</dbReference>
<dbReference type="PDB" id="157L">
    <property type="method" value="X-ray"/>
    <property type="resolution" value="1.85 A"/>
    <property type="chains" value="A=1-164"/>
</dbReference>
<dbReference type="PDB" id="158L">
    <property type="method" value="X-ray"/>
    <property type="resolution" value="1.80 A"/>
    <property type="chains" value="A=1-164"/>
</dbReference>
<dbReference type="PDB" id="159L">
    <property type="method" value="X-ray"/>
    <property type="resolution" value="1.80 A"/>
    <property type="chains" value="A=1-164"/>
</dbReference>
<dbReference type="PDB" id="160L">
    <property type="method" value="X-ray"/>
    <property type="resolution" value="1.80 A"/>
    <property type="chains" value="A=1-164"/>
</dbReference>
<dbReference type="PDB" id="161L">
    <property type="method" value="X-ray"/>
    <property type="resolution" value="1.70 A"/>
    <property type="chains" value="A=1-164"/>
</dbReference>
<dbReference type="PDB" id="162L">
    <property type="method" value="X-ray"/>
    <property type="resolution" value="1.80 A"/>
    <property type="chains" value="A=1-164"/>
</dbReference>
<dbReference type="PDB" id="163L">
    <property type="method" value="X-ray"/>
    <property type="resolution" value="1.80 A"/>
    <property type="chains" value="A=1-164"/>
</dbReference>
<dbReference type="PDB" id="164L">
    <property type="method" value="X-ray"/>
    <property type="resolution" value="1.80 A"/>
    <property type="chains" value="A=1-164"/>
</dbReference>
<dbReference type="PDB" id="165L">
    <property type="method" value="X-ray"/>
    <property type="resolution" value="1.75 A"/>
    <property type="chains" value="A=1-164"/>
</dbReference>
<dbReference type="PDB" id="166L">
    <property type="method" value="X-ray"/>
    <property type="resolution" value="1.75 A"/>
    <property type="chains" value="A=1-164"/>
</dbReference>
<dbReference type="PDB" id="167L">
    <property type="method" value="X-ray"/>
    <property type="resolution" value="2.20 A"/>
    <property type="chains" value="A/B=1-163"/>
</dbReference>
<dbReference type="PDB" id="168L">
    <property type="method" value="X-ray"/>
    <property type="resolution" value="2.90 A"/>
    <property type="chains" value="A/B/C/D/E=1-164"/>
</dbReference>
<dbReference type="PDB" id="169L">
    <property type="method" value="X-ray"/>
    <property type="resolution" value="3.00 A"/>
    <property type="chains" value="A/B/C/D/E=1-164"/>
</dbReference>
<dbReference type="PDB" id="170L">
    <property type="method" value="X-ray"/>
    <property type="resolution" value="2.60 A"/>
    <property type="chains" value="A=1-164"/>
</dbReference>
<dbReference type="PDB" id="171L">
    <property type="method" value="X-ray"/>
    <property type="resolution" value="2.50 A"/>
    <property type="chains" value="A=1-164"/>
</dbReference>
<dbReference type="PDB" id="172L">
    <property type="method" value="X-ray"/>
    <property type="resolution" value="1.90 A"/>
    <property type="chains" value="A=1-164"/>
</dbReference>
<dbReference type="PDB" id="173L">
    <property type="method" value="X-ray"/>
    <property type="resolution" value="1.70 A"/>
    <property type="chains" value="A=1-164"/>
</dbReference>
<dbReference type="PDB" id="174L">
    <property type="method" value="X-ray"/>
    <property type="resolution" value="2.30 A"/>
    <property type="chains" value="A/B=1-164"/>
</dbReference>
<dbReference type="PDB" id="175L">
    <property type="method" value="X-ray"/>
    <property type="resolution" value="2.10 A"/>
    <property type="chains" value="A/B=1-164"/>
</dbReference>
<dbReference type="PDB" id="176L">
    <property type="method" value="X-ray"/>
    <property type="resolution" value="2.20 A"/>
    <property type="chains" value="A/B=1-164"/>
</dbReference>
<dbReference type="PDB" id="177L">
    <property type="method" value="X-ray"/>
    <property type="resolution" value="2.50 A"/>
    <property type="chains" value="A=1-164"/>
</dbReference>
<dbReference type="PDB" id="178L">
    <property type="method" value="X-ray"/>
    <property type="resolution" value="2.71 A"/>
    <property type="chains" value="A=1-164"/>
</dbReference>
<dbReference type="PDB" id="180L">
    <property type="method" value="X-ray"/>
    <property type="resolution" value="1.75 A"/>
    <property type="chains" value="A/B=1-164"/>
</dbReference>
<dbReference type="PDB" id="181L">
    <property type="method" value="X-ray"/>
    <property type="resolution" value="1.80 A"/>
    <property type="chains" value="A=1-164"/>
</dbReference>
<dbReference type="PDB" id="182L">
    <property type="method" value="X-ray"/>
    <property type="resolution" value="1.80 A"/>
    <property type="chains" value="A=1-164"/>
</dbReference>
<dbReference type="PDB" id="183L">
    <property type="method" value="X-ray"/>
    <property type="resolution" value="1.80 A"/>
    <property type="chains" value="A=1-164"/>
</dbReference>
<dbReference type="PDB" id="184L">
    <property type="method" value="X-ray"/>
    <property type="resolution" value="1.80 A"/>
    <property type="chains" value="A=1-164"/>
</dbReference>
<dbReference type="PDB" id="185L">
    <property type="method" value="X-ray"/>
    <property type="resolution" value="1.80 A"/>
    <property type="chains" value="A=1-164"/>
</dbReference>
<dbReference type="PDB" id="186L">
    <property type="method" value="X-ray"/>
    <property type="resolution" value="1.80 A"/>
    <property type="chains" value="A=1-164"/>
</dbReference>
<dbReference type="PDB" id="187L">
    <property type="method" value="X-ray"/>
    <property type="resolution" value="1.80 A"/>
    <property type="chains" value="A=1-164"/>
</dbReference>
<dbReference type="PDB" id="188L">
    <property type="method" value="X-ray"/>
    <property type="resolution" value="1.80 A"/>
    <property type="chains" value="A=1-164"/>
</dbReference>
<dbReference type="PDB" id="189L">
    <property type="method" value="X-ray"/>
    <property type="resolution" value="2.50 A"/>
    <property type="chains" value="A=1-164"/>
</dbReference>
<dbReference type="PDB" id="190L">
    <property type="method" value="X-ray"/>
    <property type="resolution" value="2.00 A"/>
    <property type="chains" value="A=1-164"/>
</dbReference>
<dbReference type="PDB" id="191L">
    <property type="method" value="X-ray"/>
    <property type="resolution" value="1.95 A"/>
    <property type="chains" value="A=1-164"/>
</dbReference>
<dbReference type="PDB" id="192L">
    <property type="method" value="X-ray"/>
    <property type="resolution" value="1.90 A"/>
    <property type="chains" value="A=1-164"/>
</dbReference>
<dbReference type="PDB" id="195L">
    <property type="method" value="X-ray"/>
    <property type="resolution" value="1.90 A"/>
    <property type="chains" value="A=1-164"/>
</dbReference>
<dbReference type="PDB" id="196L">
    <property type="method" value="X-ray"/>
    <property type="resolution" value="2.30 A"/>
    <property type="chains" value="A=1-164"/>
</dbReference>
<dbReference type="PDB" id="197L">
    <property type="method" value="X-ray"/>
    <property type="resolution" value="2.10 A"/>
    <property type="chains" value="A=1-164"/>
</dbReference>
<dbReference type="PDB" id="198L">
    <property type="method" value="X-ray"/>
    <property type="resolution" value="2.00 A"/>
    <property type="chains" value="A=1-164"/>
</dbReference>
<dbReference type="PDB" id="199L">
    <property type="method" value="X-ray"/>
    <property type="resolution" value="1.85 A"/>
    <property type="chains" value="A=1-164"/>
</dbReference>
<dbReference type="PDB" id="1B6I">
    <property type="method" value="X-ray"/>
    <property type="resolution" value="1.90 A"/>
    <property type="chains" value="A=1-164"/>
</dbReference>
<dbReference type="PDB" id="1C60">
    <property type="method" value="X-ray"/>
    <property type="resolution" value="2.00 A"/>
    <property type="chains" value="A=1-164"/>
</dbReference>
<dbReference type="PDB" id="1C61">
    <property type="method" value="X-ray"/>
    <property type="resolution" value="2.00 A"/>
    <property type="chains" value="A=1-164"/>
</dbReference>
<dbReference type="PDB" id="1C62">
    <property type="method" value="X-ray"/>
    <property type="resolution" value="2.30 A"/>
    <property type="chains" value="A=1-164"/>
</dbReference>
<dbReference type="PDB" id="1C63">
    <property type="method" value="X-ray"/>
    <property type="resolution" value="2.00 A"/>
    <property type="chains" value="A=1-164"/>
</dbReference>
<dbReference type="PDB" id="1C64">
    <property type="method" value="X-ray"/>
    <property type="resolution" value="2.00 A"/>
    <property type="chains" value="A=1-164"/>
</dbReference>
<dbReference type="PDB" id="1C65">
    <property type="method" value="X-ray"/>
    <property type="resolution" value="2.00 A"/>
    <property type="chains" value="A=1-164"/>
</dbReference>
<dbReference type="PDB" id="1C66">
    <property type="method" value="X-ray"/>
    <property type="resolution" value="2.10 A"/>
    <property type="chains" value="A=1-164"/>
</dbReference>
<dbReference type="PDB" id="1C67">
    <property type="method" value="X-ray"/>
    <property type="resolution" value="2.20 A"/>
    <property type="chains" value="A=1-164"/>
</dbReference>
<dbReference type="PDB" id="1C68">
    <property type="method" value="X-ray"/>
    <property type="resolution" value="2.50 A"/>
    <property type="chains" value="A=1-164"/>
</dbReference>
<dbReference type="PDB" id="1C69">
    <property type="method" value="X-ray"/>
    <property type="resolution" value="1.80 A"/>
    <property type="chains" value="A=1-164"/>
</dbReference>
<dbReference type="PDB" id="1C6A">
    <property type="method" value="X-ray"/>
    <property type="resolution" value="2.10 A"/>
    <property type="chains" value="A=1-164"/>
</dbReference>
<dbReference type="PDB" id="1C6B">
    <property type="method" value="X-ray"/>
    <property type="resolution" value="2.20 A"/>
    <property type="chains" value="A=1-164"/>
</dbReference>
<dbReference type="PDB" id="1C6C">
    <property type="method" value="X-ray"/>
    <property type="resolution" value="2.00 A"/>
    <property type="chains" value="A=1-164"/>
</dbReference>
<dbReference type="PDB" id="1C6D">
    <property type="method" value="X-ray"/>
    <property type="resolution" value="2.00 A"/>
    <property type="chains" value="A=1-164"/>
</dbReference>
<dbReference type="PDB" id="1C6E">
    <property type="method" value="X-ray"/>
    <property type="resolution" value="1.90 A"/>
    <property type="chains" value="A=1-164"/>
</dbReference>
<dbReference type="PDB" id="1C6F">
    <property type="method" value="X-ray"/>
    <property type="resolution" value="2.00 A"/>
    <property type="chains" value="A=1-164"/>
</dbReference>
<dbReference type="PDB" id="1C6G">
    <property type="method" value="X-ray"/>
    <property type="resolution" value="1.90 A"/>
    <property type="chains" value="A=1-164"/>
</dbReference>
<dbReference type="PDB" id="1C6H">
    <property type="method" value="X-ray"/>
    <property type="resolution" value="1.90 A"/>
    <property type="chains" value="A=1-164"/>
</dbReference>
<dbReference type="PDB" id="1C6I">
    <property type="method" value="X-ray"/>
    <property type="resolution" value="1.90 A"/>
    <property type="chains" value="A=1-164"/>
</dbReference>
<dbReference type="PDB" id="1C6J">
    <property type="method" value="X-ray"/>
    <property type="resolution" value="1.90 A"/>
    <property type="chains" value="A=1-164"/>
</dbReference>
<dbReference type="PDB" id="1C6K">
    <property type="method" value="X-ray"/>
    <property type="resolution" value="1.90 A"/>
    <property type="chains" value="A=1-164"/>
</dbReference>
<dbReference type="PDB" id="1C6L">
    <property type="method" value="X-ray"/>
    <property type="resolution" value="1.90 A"/>
    <property type="chains" value="A=1-164"/>
</dbReference>
<dbReference type="PDB" id="1C6M">
    <property type="method" value="X-ray"/>
    <property type="resolution" value="2.10 A"/>
    <property type="chains" value="A=1-164"/>
</dbReference>
<dbReference type="PDB" id="1C6N">
    <property type="method" value="X-ray"/>
    <property type="resolution" value="2.20 A"/>
    <property type="chains" value="A=1-164"/>
</dbReference>
<dbReference type="PDB" id="1C6P">
    <property type="method" value="X-ray"/>
    <property type="resolution" value="1.90 A"/>
    <property type="chains" value="A=1-164"/>
</dbReference>
<dbReference type="PDB" id="1C6Q">
    <property type="method" value="X-ray"/>
    <property type="resolution" value="1.90 A"/>
    <property type="chains" value="A=1-164"/>
</dbReference>
<dbReference type="PDB" id="1C6T">
    <property type="method" value="X-ray"/>
    <property type="resolution" value="2.00 A"/>
    <property type="chains" value="A=1-164"/>
</dbReference>
<dbReference type="PDB" id="1CTW">
    <property type="method" value="X-ray"/>
    <property type="resolution" value="2.10 A"/>
    <property type="chains" value="A=1-164"/>
</dbReference>
<dbReference type="PDB" id="1CU0">
    <property type="method" value="X-ray"/>
    <property type="resolution" value="2.20 A"/>
    <property type="chains" value="A=1-164"/>
</dbReference>
<dbReference type="PDB" id="1CU2">
    <property type="method" value="X-ray"/>
    <property type="resolution" value="1.85 A"/>
    <property type="chains" value="A=1-164"/>
</dbReference>
<dbReference type="PDB" id="1CU3">
    <property type="method" value="X-ray"/>
    <property type="resolution" value="2.12 A"/>
    <property type="chains" value="A=1-164"/>
</dbReference>
<dbReference type="PDB" id="1CU5">
    <property type="method" value="X-ray"/>
    <property type="resolution" value="2.05 A"/>
    <property type="chains" value="A=1-164"/>
</dbReference>
<dbReference type="PDB" id="1CU6">
    <property type="method" value="X-ray"/>
    <property type="resolution" value="2.10 A"/>
    <property type="chains" value="A=1-164"/>
</dbReference>
<dbReference type="PDB" id="1CUP">
    <property type="method" value="X-ray"/>
    <property type="resolution" value="1.89 A"/>
    <property type="chains" value="A=1-164"/>
</dbReference>
<dbReference type="PDB" id="1CUQ">
    <property type="method" value="X-ray"/>
    <property type="resolution" value="2.05 A"/>
    <property type="chains" value="A=1-164"/>
</dbReference>
<dbReference type="PDB" id="1CV0">
    <property type="method" value="X-ray"/>
    <property type="resolution" value="2.12 A"/>
    <property type="chains" value="A=1-164"/>
</dbReference>
<dbReference type="PDB" id="1CV1">
    <property type="method" value="X-ray"/>
    <property type="resolution" value="2.10 A"/>
    <property type="chains" value="A=1-164"/>
</dbReference>
<dbReference type="PDB" id="1CV3">
    <property type="method" value="X-ray"/>
    <property type="resolution" value="1.80 A"/>
    <property type="chains" value="A=1-164"/>
</dbReference>
<dbReference type="PDB" id="1CV4">
    <property type="method" value="X-ray"/>
    <property type="resolution" value="1.90 A"/>
    <property type="chains" value="A=1-164"/>
</dbReference>
<dbReference type="PDB" id="1CV5">
    <property type="method" value="X-ray"/>
    <property type="resolution" value="1.87 A"/>
    <property type="chains" value="A=1-164"/>
</dbReference>
<dbReference type="PDB" id="1CV6">
    <property type="method" value="X-ray"/>
    <property type="resolution" value="1.90 A"/>
    <property type="chains" value="A=1-164"/>
</dbReference>
<dbReference type="PDB" id="1CVK">
    <property type="method" value="X-ray"/>
    <property type="resolution" value="1.80 A"/>
    <property type="chains" value="A=1-164"/>
</dbReference>
<dbReference type="PDB" id="1CX6">
    <property type="method" value="X-ray"/>
    <property type="resolution" value="2.01 A"/>
    <property type="chains" value="A=1-164"/>
</dbReference>
<dbReference type="PDB" id="1CX7">
    <property type="method" value="X-ray"/>
    <property type="resolution" value="1.94 A"/>
    <property type="chains" value="A=1-164"/>
</dbReference>
<dbReference type="PDB" id="1D2W">
    <property type="method" value="X-ray"/>
    <property type="resolution" value="1.89 A"/>
    <property type="chains" value="A=1-164"/>
</dbReference>
<dbReference type="PDB" id="1D2Y">
    <property type="method" value="X-ray"/>
    <property type="resolution" value="2.06 A"/>
    <property type="chains" value="A=1-164"/>
</dbReference>
<dbReference type="PDB" id="1D3F">
    <property type="method" value="X-ray"/>
    <property type="resolution" value="2.05 A"/>
    <property type="chains" value="A=1-164"/>
</dbReference>
<dbReference type="PDB" id="1D3J">
    <property type="method" value="X-ray"/>
    <property type="resolution" value="1.97 A"/>
    <property type="chains" value="A=1-164"/>
</dbReference>
<dbReference type="PDB" id="1D3M">
    <property type="method" value="X-ray"/>
    <property type="resolution" value="2.12 A"/>
    <property type="chains" value="A=1-164"/>
</dbReference>
<dbReference type="PDB" id="1D3N">
    <property type="method" value="X-ray"/>
    <property type="resolution" value="2.00 A"/>
    <property type="chains" value="A=1-164"/>
</dbReference>
<dbReference type="PDB" id="1D9W">
    <property type="method" value="X-ray"/>
    <property type="resolution" value="1.70 A"/>
    <property type="chains" value="A=1-164"/>
</dbReference>
<dbReference type="PDB" id="1DYA">
    <property type="method" value="X-ray"/>
    <property type="resolution" value="1.90 A"/>
    <property type="chains" value="A=1-164"/>
</dbReference>
<dbReference type="PDB" id="1DYB">
    <property type="method" value="X-ray"/>
    <property type="resolution" value="1.75 A"/>
    <property type="chains" value="A=1-164"/>
</dbReference>
<dbReference type="PDB" id="1DYC">
    <property type="method" value="X-ray"/>
    <property type="resolution" value="2.10 A"/>
    <property type="chains" value="A=1-164"/>
</dbReference>
<dbReference type="PDB" id="1DYD">
    <property type="method" value="X-ray"/>
    <property type="resolution" value="2.10 A"/>
    <property type="chains" value="A=1-164"/>
</dbReference>
<dbReference type="PDB" id="1DYE">
    <property type="method" value="X-ray"/>
    <property type="resolution" value="1.80 A"/>
    <property type="chains" value="A=1-164"/>
</dbReference>
<dbReference type="PDB" id="1DYF">
    <property type="method" value="X-ray"/>
    <property type="resolution" value="1.90 A"/>
    <property type="chains" value="A=1-164"/>
</dbReference>
<dbReference type="PDB" id="1DYG">
    <property type="method" value="X-ray"/>
    <property type="resolution" value="2.10 A"/>
    <property type="chains" value="A=1-164"/>
</dbReference>
<dbReference type="PDB" id="1EPY">
    <property type="method" value="X-ray"/>
    <property type="resolution" value="1.85 A"/>
    <property type="chains" value="A=1-164"/>
</dbReference>
<dbReference type="PDB" id="1G06">
    <property type="method" value="X-ray"/>
    <property type="resolution" value="1.85 A"/>
    <property type="chains" value="A=1-164"/>
</dbReference>
<dbReference type="PDB" id="1G07">
    <property type="method" value="X-ray"/>
    <property type="resolution" value="1.70 A"/>
    <property type="chains" value="A=1-164"/>
</dbReference>
<dbReference type="PDB" id="1G0G">
    <property type="method" value="X-ray"/>
    <property type="resolution" value="1.90 A"/>
    <property type="chains" value="A=1-164"/>
</dbReference>
<dbReference type="PDB" id="1G0J">
    <property type="method" value="X-ray"/>
    <property type="resolution" value="1.80 A"/>
    <property type="chains" value="A=1-164"/>
</dbReference>
<dbReference type="PDB" id="1G0K">
    <property type="method" value="X-ray"/>
    <property type="resolution" value="1.85 A"/>
    <property type="chains" value="A=1-164"/>
</dbReference>
<dbReference type="PDB" id="1G0L">
    <property type="method" value="X-ray"/>
    <property type="resolution" value="1.80 A"/>
    <property type="chains" value="A=1-164"/>
</dbReference>
<dbReference type="PDB" id="1G0M">
    <property type="method" value="X-ray"/>
    <property type="resolution" value="1.70 A"/>
    <property type="chains" value="A=1-164"/>
</dbReference>
<dbReference type="PDB" id="1G0P">
    <property type="method" value="X-ray"/>
    <property type="resolution" value="1.80 A"/>
    <property type="chains" value="A=1-164"/>
</dbReference>
<dbReference type="PDB" id="1G0Q">
    <property type="method" value="X-ray"/>
    <property type="resolution" value="1.80 A"/>
    <property type="chains" value="A=1-164"/>
</dbReference>
<dbReference type="PDB" id="1G1V">
    <property type="method" value="X-ray"/>
    <property type="resolution" value="1.90 A"/>
    <property type="chains" value="A=1-164"/>
</dbReference>
<dbReference type="PDB" id="1G1W">
    <property type="method" value="X-ray"/>
    <property type="resolution" value="1.80 A"/>
    <property type="chains" value="A=1-164"/>
</dbReference>
<dbReference type="PDB" id="1I6S">
    <property type="method" value="X-ray"/>
    <property type="resolution" value="1.90 A"/>
    <property type="chains" value="A=1-164"/>
</dbReference>
<dbReference type="PDB" id="1JQU">
    <property type="method" value="X-ray"/>
    <property type="resolution" value="2.60 A"/>
    <property type="chains" value="A/B/C/D=1-164"/>
</dbReference>
<dbReference type="PDB" id="1JTM">
    <property type="method" value="X-ray"/>
    <property type="resolution" value="1.90 A"/>
    <property type="chains" value="A=1-164"/>
</dbReference>
<dbReference type="PDB" id="1JTN">
    <property type="method" value="X-ray"/>
    <property type="resolution" value="2.30 A"/>
    <property type="chains" value="A/B=1-164"/>
</dbReference>
<dbReference type="PDB" id="1KNI">
    <property type="method" value="X-ray"/>
    <property type="resolution" value="1.70 A"/>
    <property type="chains" value="A=1-164"/>
</dbReference>
<dbReference type="PDB" id="1KS3">
    <property type="method" value="X-ray"/>
    <property type="resolution" value="2.16 A"/>
    <property type="chains" value="A=1-162"/>
</dbReference>
<dbReference type="PDB" id="1KW5">
    <property type="method" value="X-ray"/>
    <property type="resolution" value="1.75 A"/>
    <property type="chains" value="A=1-162"/>
</dbReference>
<dbReference type="PDB" id="1KW7">
    <property type="method" value="X-ray"/>
    <property type="resolution" value="1.89 A"/>
    <property type="chains" value="A=1-162"/>
</dbReference>
<dbReference type="PDB" id="1KY0">
    <property type="method" value="X-ray"/>
    <property type="resolution" value="1.97 A"/>
    <property type="chains" value="A=1-162"/>
</dbReference>
<dbReference type="PDB" id="1KY1">
    <property type="method" value="X-ray"/>
    <property type="resolution" value="2.05 A"/>
    <property type="chains" value="A=1-162"/>
</dbReference>
<dbReference type="PDB" id="1L00">
    <property type="method" value="X-ray"/>
    <property type="resolution" value="1.90 A"/>
    <property type="chains" value="A=1-164"/>
</dbReference>
<dbReference type="PDB" id="1L01">
    <property type="method" value="X-ray"/>
    <property type="resolution" value="1.70 A"/>
    <property type="chains" value="A=1-164"/>
</dbReference>
<dbReference type="PDB" id="1L02">
    <property type="method" value="X-ray"/>
    <property type="resolution" value="1.70 A"/>
    <property type="chains" value="A=1-164"/>
</dbReference>
<dbReference type="PDB" id="1L03">
    <property type="method" value="X-ray"/>
    <property type="resolution" value="1.70 A"/>
    <property type="chains" value="A=1-164"/>
</dbReference>
<dbReference type="PDB" id="1L04">
    <property type="method" value="X-ray"/>
    <property type="resolution" value="1.70 A"/>
    <property type="chains" value="A=1-164"/>
</dbReference>
<dbReference type="PDB" id="1L05">
    <property type="method" value="X-ray"/>
    <property type="resolution" value="1.70 A"/>
    <property type="chains" value="A=1-164"/>
</dbReference>
<dbReference type="PDB" id="1L06">
    <property type="method" value="X-ray"/>
    <property type="resolution" value="1.70 A"/>
    <property type="chains" value="A=1-164"/>
</dbReference>
<dbReference type="PDB" id="1L07">
    <property type="method" value="X-ray"/>
    <property type="resolution" value="1.70 A"/>
    <property type="chains" value="A=1-164"/>
</dbReference>
<dbReference type="PDB" id="1L08">
    <property type="method" value="X-ray"/>
    <property type="resolution" value="1.70 A"/>
    <property type="chains" value="A=1-164"/>
</dbReference>
<dbReference type="PDB" id="1L09">
    <property type="method" value="X-ray"/>
    <property type="resolution" value="1.70 A"/>
    <property type="chains" value="A=1-164"/>
</dbReference>
<dbReference type="PDB" id="1L0J">
    <property type="method" value="X-ray"/>
    <property type="resolution" value="1.98 A"/>
    <property type="chains" value="A=1-162"/>
</dbReference>
<dbReference type="PDB" id="1L0K">
    <property type="method" value="X-ray"/>
    <property type="resolution" value="2.02 A"/>
    <property type="chains" value="A=1-162"/>
</dbReference>
<dbReference type="PDB" id="1L10">
    <property type="method" value="X-ray"/>
    <property type="resolution" value="1.70 A"/>
    <property type="chains" value="A=1-164"/>
</dbReference>
<dbReference type="PDB" id="1L11">
    <property type="method" value="X-ray"/>
    <property type="resolution" value="1.70 A"/>
    <property type="chains" value="A=1-164"/>
</dbReference>
<dbReference type="PDB" id="1L12">
    <property type="method" value="X-ray"/>
    <property type="resolution" value="1.70 A"/>
    <property type="chains" value="A=1-164"/>
</dbReference>
<dbReference type="PDB" id="1L13">
    <property type="method" value="X-ray"/>
    <property type="resolution" value="1.70 A"/>
    <property type="chains" value="A=1-164"/>
</dbReference>
<dbReference type="PDB" id="1L14">
    <property type="method" value="X-ray"/>
    <property type="resolution" value="1.70 A"/>
    <property type="chains" value="A=1-164"/>
</dbReference>
<dbReference type="PDB" id="1L15">
    <property type="method" value="X-ray"/>
    <property type="resolution" value="1.70 A"/>
    <property type="chains" value="A=1-164"/>
</dbReference>
<dbReference type="PDB" id="1L16">
    <property type="method" value="X-ray"/>
    <property type="resolution" value="1.70 A"/>
    <property type="chains" value="A=1-164"/>
</dbReference>
<dbReference type="PDB" id="1L17">
    <property type="method" value="X-ray"/>
    <property type="resolution" value="1.70 A"/>
    <property type="chains" value="A=1-164"/>
</dbReference>
<dbReference type="PDB" id="1L18">
    <property type="method" value="X-ray"/>
    <property type="resolution" value="1.70 A"/>
    <property type="chains" value="A=1-164"/>
</dbReference>
<dbReference type="PDB" id="1L19">
    <property type="method" value="X-ray"/>
    <property type="resolution" value="1.70 A"/>
    <property type="chains" value="A=1-164"/>
</dbReference>
<dbReference type="PDB" id="1L20">
    <property type="method" value="X-ray"/>
    <property type="resolution" value="1.85 A"/>
    <property type="chains" value="A=1-164"/>
</dbReference>
<dbReference type="PDB" id="1L21">
    <property type="method" value="X-ray"/>
    <property type="resolution" value="1.85 A"/>
    <property type="chains" value="A=1-164"/>
</dbReference>
<dbReference type="PDB" id="1L22">
    <property type="method" value="X-ray"/>
    <property type="resolution" value="1.70 A"/>
    <property type="chains" value="A=1-164"/>
</dbReference>
<dbReference type="PDB" id="1L23">
    <property type="method" value="X-ray"/>
    <property type="resolution" value="1.70 A"/>
    <property type="chains" value="A=1-164"/>
</dbReference>
<dbReference type="PDB" id="1L24">
    <property type="method" value="X-ray"/>
    <property type="resolution" value="1.70 A"/>
    <property type="chains" value="A=1-164"/>
</dbReference>
<dbReference type="PDB" id="1L25">
    <property type="method" value="X-ray"/>
    <property type="resolution" value="1.80 A"/>
    <property type="chains" value="A=1-164"/>
</dbReference>
<dbReference type="PDB" id="1L26">
    <property type="method" value="X-ray"/>
    <property type="resolution" value="1.70 A"/>
    <property type="chains" value="A=1-164"/>
</dbReference>
<dbReference type="PDB" id="1L27">
    <property type="method" value="X-ray"/>
    <property type="resolution" value="1.80 A"/>
    <property type="chains" value="A=1-164"/>
</dbReference>
<dbReference type="PDB" id="1L28">
    <property type="method" value="X-ray"/>
    <property type="resolution" value="1.90 A"/>
    <property type="chains" value="A=1-164"/>
</dbReference>
<dbReference type="PDB" id="1L29">
    <property type="method" value="X-ray"/>
    <property type="resolution" value="1.70 A"/>
    <property type="chains" value="A=1-164"/>
</dbReference>
<dbReference type="PDB" id="1L30">
    <property type="method" value="X-ray"/>
    <property type="resolution" value="1.70 A"/>
    <property type="chains" value="A=1-164"/>
</dbReference>
<dbReference type="PDB" id="1L31">
    <property type="method" value="X-ray"/>
    <property type="resolution" value="1.80 A"/>
    <property type="chains" value="A=1-164"/>
</dbReference>
<dbReference type="PDB" id="1L32">
    <property type="method" value="X-ray"/>
    <property type="resolution" value="1.70 A"/>
    <property type="chains" value="A=1-164"/>
</dbReference>
<dbReference type="PDB" id="1L33">
    <property type="method" value="X-ray"/>
    <property type="resolution" value="1.70 A"/>
    <property type="chains" value="A=1-164"/>
</dbReference>
<dbReference type="PDB" id="1L34">
    <property type="method" value="X-ray"/>
    <property type="resolution" value="1.90 A"/>
    <property type="chains" value="A=1-164"/>
</dbReference>
<dbReference type="PDB" id="1L35">
    <property type="method" value="X-ray"/>
    <property type="resolution" value="1.80 A"/>
    <property type="chains" value="A=1-163"/>
</dbReference>
<dbReference type="PDB" id="1L36">
    <property type="method" value="X-ray"/>
    <property type="resolution" value="1.70 A"/>
    <property type="chains" value="A=1-164"/>
</dbReference>
<dbReference type="PDB" id="1L37">
    <property type="method" value="X-ray"/>
    <property type="resolution" value="1.85 A"/>
    <property type="chains" value="A=1-164"/>
</dbReference>
<dbReference type="PDB" id="1L38">
    <property type="method" value="X-ray"/>
    <property type="resolution" value="1.80 A"/>
    <property type="chains" value="A=1-164"/>
</dbReference>
<dbReference type="PDB" id="1L39">
    <property type="method" value="X-ray"/>
    <property type="resolution" value="1.85 A"/>
    <property type="chains" value="A=1-164"/>
</dbReference>
<dbReference type="PDB" id="1L40">
    <property type="method" value="X-ray"/>
    <property type="resolution" value="1.85 A"/>
    <property type="chains" value="A=1-164"/>
</dbReference>
<dbReference type="PDB" id="1L41">
    <property type="method" value="X-ray"/>
    <property type="resolution" value="1.75 A"/>
    <property type="chains" value="A=1-164"/>
</dbReference>
<dbReference type="PDB" id="1L42">
    <property type="method" value="X-ray"/>
    <property type="resolution" value="1.80 A"/>
    <property type="chains" value="A=1-164"/>
</dbReference>
<dbReference type="PDB" id="1L43">
    <property type="method" value="X-ray"/>
    <property type="resolution" value="1.80 A"/>
    <property type="chains" value="A=1-164"/>
</dbReference>
<dbReference type="PDB" id="1L44">
    <property type="method" value="X-ray"/>
    <property type="resolution" value="1.70 A"/>
    <property type="chains" value="A=1-164"/>
</dbReference>
<dbReference type="PDB" id="1L45">
    <property type="method" value="X-ray"/>
    <property type="resolution" value="1.70 A"/>
    <property type="chains" value="A=1-164"/>
</dbReference>
<dbReference type="PDB" id="1L46">
    <property type="method" value="X-ray"/>
    <property type="resolution" value="1.70 A"/>
    <property type="chains" value="A=1-164"/>
</dbReference>
<dbReference type="PDB" id="1L47">
    <property type="method" value="X-ray"/>
    <property type="resolution" value="1.70 A"/>
    <property type="chains" value="A=1-164"/>
</dbReference>
<dbReference type="PDB" id="1L48">
    <property type="method" value="X-ray"/>
    <property type="resolution" value="1.70 A"/>
    <property type="chains" value="A=1-164"/>
</dbReference>
<dbReference type="PDB" id="1L49">
    <property type="method" value="X-ray"/>
    <property type="resolution" value="1.80 A"/>
    <property type="chains" value="A=1-164"/>
</dbReference>
<dbReference type="PDB" id="1L50">
    <property type="method" value="X-ray"/>
    <property type="resolution" value="1.85 A"/>
    <property type="chains" value="A=1-164"/>
</dbReference>
<dbReference type="PDB" id="1L51">
    <property type="method" value="X-ray"/>
    <property type="resolution" value="1.90 A"/>
    <property type="chains" value="A=1-164"/>
</dbReference>
<dbReference type="PDB" id="1L52">
    <property type="method" value="X-ray"/>
    <property type="resolution" value="1.70 A"/>
    <property type="chains" value="A=1-164"/>
</dbReference>
<dbReference type="PDB" id="1L53">
    <property type="method" value="X-ray"/>
    <property type="resolution" value="1.85 A"/>
    <property type="chains" value="A=1-164"/>
</dbReference>
<dbReference type="PDB" id="1L54">
    <property type="method" value="X-ray"/>
    <property type="resolution" value="1.90 A"/>
    <property type="chains" value="A=1-164"/>
</dbReference>
<dbReference type="PDB" id="1L55">
    <property type="method" value="X-ray"/>
    <property type="resolution" value="1.90 A"/>
    <property type="chains" value="A=1-164"/>
</dbReference>
<dbReference type="PDB" id="1L56">
    <property type="method" value="X-ray"/>
    <property type="resolution" value="1.80 A"/>
    <property type="chains" value="A=1-164"/>
</dbReference>
<dbReference type="PDB" id="1L57">
    <property type="method" value="X-ray"/>
    <property type="resolution" value="1.90 A"/>
    <property type="chains" value="A=1-164"/>
</dbReference>
<dbReference type="PDB" id="1L58">
    <property type="method" value="X-ray"/>
    <property type="resolution" value="1.65 A"/>
    <property type="chains" value="A=1-164"/>
</dbReference>
<dbReference type="PDB" id="1L59">
    <property type="method" value="X-ray"/>
    <property type="resolution" value="1.75 A"/>
    <property type="chains" value="A=1-164"/>
</dbReference>
<dbReference type="PDB" id="1L60">
    <property type="method" value="X-ray"/>
    <property type="resolution" value="1.70 A"/>
    <property type="chains" value="A=1-164"/>
</dbReference>
<dbReference type="PDB" id="1L61">
    <property type="method" value="X-ray"/>
    <property type="resolution" value="1.80 A"/>
    <property type="chains" value="A=1-164"/>
</dbReference>
<dbReference type="PDB" id="1L62">
    <property type="method" value="X-ray"/>
    <property type="resolution" value="1.70 A"/>
    <property type="chains" value="A=1-164"/>
</dbReference>
<dbReference type="PDB" id="1L63">
    <property type="method" value="X-ray"/>
    <property type="resolution" value="1.75 A"/>
    <property type="chains" value="A=1-164"/>
</dbReference>
<dbReference type="PDB" id="1L64">
    <property type="method" value="X-ray"/>
    <property type="resolution" value="1.90 A"/>
    <property type="chains" value="A=1-164"/>
</dbReference>
<dbReference type="PDB" id="1L65">
    <property type="method" value="X-ray"/>
    <property type="resolution" value="1.70 A"/>
    <property type="chains" value="A=1-164"/>
</dbReference>
<dbReference type="PDB" id="1L66">
    <property type="method" value="X-ray"/>
    <property type="resolution" value="1.70 A"/>
    <property type="chains" value="A=1-164"/>
</dbReference>
<dbReference type="PDB" id="1L67">
    <property type="method" value="X-ray"/>
    <property type="resolution" value="1.90 A"/>
    <property type="chains" value="A=1-164"/>
</dbReference>
<dbReference type="PDB" id="1L68">
    <property type="method" value="X-ray"/>
    <property type="resolution" value="1.70 A"/>
    <property type="chains" value="A=1-164"/>
</dbReference>
<dbReference type="PDB" id="1L69">
    <property type="method" value="X-ray"/>
    <property type="resolution" value="1.90 A"/>
    <property type="chains" value="A=1-164"/>
</dbReference>
<dbReference type="PDB" id="1L70">
    <property type="method" value="X-ray"/>
    <property type="resolution" value="1.90 A"/>
    <property type="chains" value="A=1-164"/>
</dbReference>
<dbReference type="PDB" id="1L71">
    <property type="method" value="X-ray"/>
    <property type="resolution" value="1.85 A"/>
    <property type="chains" value="A=1-164"/>
</dbReference>
<dbReference type="PDB" id="1L72">
    <property type="method" value="X-ray"/>
    <property type="resolution" value="1.85 A"/>
    <property type="chains" value="A=1-164"/>
</dbReference>
<dbReference type="PDB" id="1L73">
    <property type="method" value="X-ray"/>
    <property type="resolution" value="1.85 A"/>
    <property type="chains" value="A=1-164"/>
</dbReference>
<dbReference type="PDB" id="1L74">
    <property type="method" value="X-ray"/>
    <property type="resolution" value="1.70 A"/>
    <property type="chains" value="A=1-164"/>
</dbReference>
<dbReference type="PDB" id="1L75">
    <property type="method" value="X-ray"/>
    <property type="resolution" value="1.90 A"/>
    <property type="chains" value="A=1-164"/>
</dbReference>
<dbReference type="PDB" id="1L76">
    <property type="method" value="X-ray"/>
    <property type="resolution" value="1.90 A"/>
    <property type="chains" value="A=1-164"/>
</dbReference>
<dbReference type="PDB" id="1L77">
    <property type="method" value="X-ray"/>
    <property type="resolution" value="2.05 A"/>
    <property type="chains" value="A=1-164"/>
</dbReference>
<dbReference type="PDB" id="1L79">
    <property type="method" value="X-ray"/>
    <property type="resolution" value="1.90 A"/>
    <property type="chains" value="A=1-164"/>
</dbReference>
<dbReference type="PDB" id="1L80">
    <property type="method" value="X-ray"/>
    <property type="resolution" value="1.80 A"/>
    <property type="chains" value="A=1-164"/>
</dbReference>
<dbReference type="PDB" id="1L81">
    <property type="method" value="X-ray"/>
    <property type="resolution" value="2.00 A"/>
    <property type="chains" value="A=1-164"/>
</dbReference>
<dbReference type="PDB" id="1L82">
    <property type="method" value="X-ray"/>
    <property type="resolution" value="2.10 A"/>
    <property type="chains" value="A=1-164"/>
</dbReference>
<dbReference type="PDB" id="1L83">
    <property type="method" value="X-ray"/>
    <property type="resolution" value="1.70 A"/>
    <property type="chains" value="A=1-164"/>
</dbReference>
<dbReference type="PDB" id="1L84">
    <property type="method" value="X-ray"/>
    <property type="resolution" value="1.90 A"/>
    <property type="chains" value="A=1-164"/>
</dbReference>
<dbReference type="PDB" id="1L85">
    <property type="method" value="X-ray"/>
    <property type="resolution" value="2.00 A"/>
    <property type="chains" value="A=1-164"/>
</dbReference>
<dbReference type="PDB" id="1L86">
    <property type="method" value="X-ray"/>
    <property type="resolution" value="1.80 A"/>
    <property type="chains" value="A=1-164"/>
</dbReference>
<dbReference type="PDB" id="1L87">
    <property type="method" value="X-ray"/>
    <property type="resolution" value="1.80 A"/>
    <property type="chains" value="A=1-164"/>
</dbReference>
<dbReference type="PDB" id="1L88">
    <property type="method" value="X-ray"/>
    <property type="resolution" value="1.85 A"/>
    <property type="chains" value="A=1-164"/>
</dbReference>
<dbReference type="PDB" id="1L89">
    <property type="method" value="X-ray"/>
    <property type="resolution" value="1.90 A"/>
    <property type="chains" value="A=1-164"/>
</dbReference>
<dbReference type="PDB" id="1L90">
    <property type="method" value="X-ray"/>
    <property type="resolution" value="1.75 A"/>
    <property type="chains" value="A=1-164"/>
</dbReference>
<dbReference type="PDB" id="1L91">
    <property type="method" value="X-ray"/>
    <property type="resolution" value="1.80 A"/>
    <property type="chains" value="A=1-164"/>
</dbReference>
<dbReference type="PDB" id="1L92">
    <property type="method" value="X-ray"/>
    <property type="resolution" value="1.70 A"/>
    <property type="chains" value="A=1-164"/>
</dbReference>
<dbReference type="PDB" id="1L93">
    <property type="method" value="X-ray"/>
    <property type="resolution" value="1.80 A"/>
    <property type="chains" value="A=1-164"/>
</dbReference>
<dbReference type="PDB" id="1L94">
    <property type="method" value="X-ray"/>
    <property type="resolution" value="1.80 A"/>
    <property type="chains" value="A=1-164"/>
</dbReference>
<dbReference type="PDB" id="1L95">
    <property type="method" value="X-ray"/>
    <property type="resolution" value="2.00 A"/>
    <property type="chains" value="A=1-164"/>
</dbReference>
<dbReference type="PDB" id="1L96">
    <property type="method" value="X-ray"/>
    <property type="resolution" value="2.00 A"/>
    <property type="chains" value="A=1-164"/>
</dbReference>
<dbReference type="PDB" id="1L97">
    <property type="method" value="X-ray"/>
    <property type="resolution" value="2.00 A"/>
    <property type="chains" value="A/B=1-164"/>
</dbReference>
<dbReference type="PDB" id="1L98">
    <property type="method" value="X-ray"/>
    <property type="resolution" value="1.80 A"/>
    <property type="chains" value="A=1-164"/>
</dbReference>
<dbReference type="PDB" id="1L99">
    <property type="method" value="X-ray"/>
    <property type="resolution" value="1.95 A"/>
    <property type="chains" value="A=1-164"/>
</dbReference>
<dbReference type="PDB" id="1LGU">
    <property type="method" value="X-ray"/>
    <property type="resolution" value="1.90 A"/>
    <property type="chains" value="A=1-164"/>
</dbReference>
<dbReference type="PDB" id="1LGW">
    <property type="method" value="X-ray"/>
    <property type="resolution" value="1.85 A"/>
    <property type="chains" value="A=1-164"/>
</dbReference>
<dbReference type="PDB" id="1LGX">
    <property type="method" value="X-ray"/>
    <property type="resolution" value="1.90 A"/>
    <property type="chains" value="A=1-164"/>
</dbReference>
<dbReference type="PDB" id="1LI2">
    <property type="method" value="X-ray"/>
    <property type="resolution" value="2.00 A"/>
    <property type="chains" value="A=1-164"/>
</dbReference>
<dbReference type="PDB" id="1LI3">
    <property type="method" value="X-ray"/>
    <property type="resolution" value="1.85 A"/>
    <property type="chains" value="A=1-164"/>
</dbReference>
<dbReference type="PDB" id="1LI6">
    <property type="method" value="X-ray"/>
    <property type="resolution" value="2.00 A"/>
    <property type="chains" value="A=1-164"/>
</dbReference>
<dbReference type="PDB" id="1LLH">
    <property type="method" value="X-ray"/>
    <property type="resolution" value="1.80 A"/>
    <property type="chains" value="A=1-164"/>
</dbReference>
<dbReference type="PDB" id="1LPY">
    <property type="method" value="X-ray"/>
    <property type="resolution" value="1.65 A"/>
    <property type="chains" value="A=1-164"/>
</dbReference>
<dbReference type="PDB" id="1LW9">
    <property type="method" value="X-ray"/>
    <property type="resolution" value="1.45 A"/>
    <property type="chains" value="A=1-164"/>
</dbReference>
<dbReference type="PDB" id="1LWG">
    <property type="method" value="X-ray"/>
    <property type="resolution" value="1.70 A"/>
    <property type="chains" value="A=1-164"/>
</dbReference>
<dbReference type="PDB" id="1LWK">
    <property type="method" value="X-ray"/>
    <property type="resolution" value="2.10 A"/>
    <property type="chains" value="A=1-164"/>
</dbReference>
<dbReference type="PDB" id="1LYD">
    <property type="method" value="X-ray"/>
    <property type="resolution" value="2.00 A"/>
    <property type="chains" value="A=1-164"/>
</dbReference>
<dbReference type="PDB" id="1LYE">
    <property type="method" value="X-ray"/>
    <property type="resolution" value="1.80 A"/>
    <property type="chains" value="A=1-164"/>
</dbReference>
<dbReference type="PDB" id="1LYF">
    <property type="method" value="X-ray"/>
    <property type="resolution" value="1.80 A"/>
    <property type="chains" value="A=1-164"/>
</dbReference>
<dbReference type="PDB" id="1LYG">
    <property type="method" value="X-ray"/>
    <property type="resolution" value="1.80 A"/>
    <property type="chains" value="A=1-164"/>
</dbReference>
<dbReference type="PDB" id="1LYH">
    <property type="method" value="X-ray"/>
    <property type="resolution" value="1.70 A"/>
    <property type="chains" value="A=1-164"/>
</dbReference>
<dbReference type="PDB" id="1LYI">
    <property type="method" value="X-ray"/>
    <property type="resolution" value="2.00 A"/>
    <property type="chains" value="A=1-164"/>
</dbReference>
<dbReference type="PDB" id="1LYJ">
    <property type="method" value="X-ray"/>
    <property type="resolution" value="1.80 A"/>
    <property type="chains" value="A=1-164"/>
</dbReference>
<dbReference type="PDB" id="1NHB">
    <property type="method" value="X-ray"/>
    <property type="resolution" value="1.80 A"/>
    <property type="chains" value="A=1-164"/>
</dbReference>
<dbReference type="PDB" id="1OV5">
    <property type="method" value="X-ray"/>
    <property type="resolution" value="2.10 A"/>
    <property type="chains" value="A=1-164"/>
</dbReference>
<dbReference type="PDB" id="1OV7">
    <property type="method" value="X-ray"/>
    <property type="resolution" value="2.00 A"/>
    <property type="chains" value="A=1-164"/>
</dbReference>
<dbReference type="PDB" id="1OVH">
    <property type="method" value="X-ray"/>
    <property type="resolution" value="1.95 A"/>
    <property type="chains" value="A=1-164"/>
</dbReference>
<dbReference type="PDB" id="1OVJ">
    <property type="method" value="X-ray"/>
    <property type="resolution" value="2.00 A"/>
    <property type="chains" value="A=1-164"/>
</dbReference>
<dbReference type="PDB" id="1OVK">
    <property type="method" value="X-ray"/>
    <property type="resolution" value="2.10 A"/>
    <property type="chains" value="A=1-164"/>
</dbReference>
<dbReference type="PDB" id="1OWY">
    <property type="method" value="X-ray"/>
    <property type="resolution" value="1.90 A"/>
    <property type="chains" value="A=1-164"/>
</dbReference>
<dbReference type="PDB" id="1OWZ">
    <property type="method" value="X-ray"/>
    <property type="resolution" value="1.90 A"/>
    <property type="chains" value="A=1-164"/>
</dbReference>
<dbReference type="PDB" id="1OYU">
    <property type="method" value="X-ray"/>
    <property type="resolution" value="2.50 A"/>
    <property type="chains" value="A/B=1-164"/>
</dbReference>
<dbReference type="PDB" id="1P2L">
    <property type="method" value="X-ray"/>
    <property type="resolution" value="1.58 A"/>
    <property type="chains" value="A=1-164"/>
</dbReference>
<dbReference type="PDB" id="1P2R">
    <property type="method" value="X-ray"/>
    <property type="resolution" value="1.58 A"/>
    <property type="chains" value="A=1-164"/>
</dbReference>
<dbReference type="PDB" id="1P36">
    <property type="method" value="X-ray"/>
    <property type="resolution" value="1.45 A"/>
    <property type="chains" value="A=1-164"/>
</dbReference>
<dbReference type="PDB" id="1P37">
    <property type="method" value="X-ray"/>
    <property type="resolution" value="1.57 A"/>
    <property type="chains" value="A=1-164"/>
</dbReference>
<dbReference type="PDB" id="1P3N">
    <property type="method" value="X-ray"/>
    <property type="resolution" value="1.55 A"/>
    <property type="chains" value="A=1-164"/>
</dbReference>
<dbReference type="PDB" id="1P46">
    <property type="method" value="X-ray"/>
    <property type="resolution" value="1.67 A"/>
    <property type="chains" value="A=1-164"/>
</dbReference>
<dbReference type="PDB" id="1P56">
    <property type="method" value="X-ray"/>
    <property type="resolution" value="1.80 A"/>
    <property type="chains" value="A=1-162"/>
</dbReference>
<dbReference type="PDB" id="1P5C">
    <property type="method" value="X-ray"/>
    <property type="resolution" value="2.50 A"/>
    <property type="chains" value="A/B/C/D=12-163"/>
</dbReference>
<dbReference type="PDB" id="1P64">
    <property type="method" value="X-ray"/>
    <property type="resolution" value="1.62 A"/>
    <property type="chains" value="A=1-164"/>
</dbReference>
<dbReference type="PDB" id="1P6Y">
    <property type="method" value="X-ray"/>
    <property type="resolution" value="1.54 A"/>
    <property type="chains" value="A=1-164"/>
</dbReference>
<dbReference type="PDB" id="1P7S">
    <property type="method" value="X-ray"/>
    <property type="resolution" value="1.50 A"/>
    <property type="chains" value="A=1-164"/>
</dbReference>
<dbReference type="PDB" id="1PQD">
    <property type="method" value="X-ray"/>
    <property type="resolution" value="1.65 A"/>
    <property type="chains" value="A=1-164"/>
</dbReference>
<dbReference type="PDB" id="1PQI">
    <property type="method" value="X-ray"/>
    <property type="resolution" value="1.57 A"/>
    <property type="chains" value="A=1-164"/>
</dbReference>
<dbReference type="PDB" id="1PQJ">
    <property type="method" value="X-ray"/>
    <property type="resolution" value="1.90 A"/>
    <property type="chains" value="A=1-164"/>
</dbReference>
<dbReference type="PDB" id="1PQK">
    <property type="method" value="X-ray"/>
    <property type="resolution" value="2.00 A"/>
    <property type="chains" value="A/B/C=1-164"/>
</dbReference>
<dbReference type="PDB" id="1PQM">
    <property type="method" value="X-ray"/>
    <property type="resolution" value="1.52 A"/>
    <property type="chains" value="A=1-164"/>
</dbReference>
<dbReference type="PDB" id="1PQO">
    <property type="method" value="X-ray"/>
    <property type="resolution" value="1.65 A"/>
    <property type="chains" value="A=1-164"/>
</dbReference>
<dbReference type="PDB" id="1QS5">
    <property type="method" value="X-ray"/>
    <property type="resolution" value="2.50 A"/>
    <property type="chains" value="A=1-162"/>
</dbReference>
<dbReference type="PDB" id="1QS9">
    <property type="method" value="X-ray"/>
    <property type="resolution" value="1.85 A"/>
    <property type="chains" value="A=1-162"/>
</dbReference>
<dbReference type="PDB" id="1QSB">
    <property type="method" value="X-ray"/>
    <property type="resolution" value="1.80 A"/>
    <property type="chains" value="A=1-162"/>
</dbReference>
<dbReference type="PDB" id="1QSQ">
    <property type="method" value="X-ray"/>
    <property type="resolution" value="1.90 A"/>
    <property type="chains" value="A=1-164"/>
</dbReference>
<dbReference type="PDB" id="1QT3">
    <property type="method" value="X-ray"/>
    <property type="resolution" value="1.85 A"/>
    <property type="chains" value="A=1-164"/>
</dbReference>
<dbReference type="PDB" id="1QT4">
    <property type="method" value="X-ray"/>
    <property type="resolution" value="2.10 A"/>
    <property type="chains" value="A=1-164"/>
</dbReference>
<dbReference type="PDB" id="1QT5">
    <property type="method" value="X-ray"/>
    <property type="resolution" value="1.80 A"/>
    <property type="chains" value="A=1-164"/>
</dbReference>
<dbReference type="PDB" id="1QT6">
    <property type="method" value="X-ray"/>
    <property type="resolution" value="1.90 A"/>
    <property type="chains" value="A=1-164"/>
</dbReference>
<dbReference type="PDB" id="1QT7">
    <property type="method" value="X-ray"/>
    <property type="resolution" value="1.80 A"/>
    <property type="chains" value="A=1-164"/>
</dbReference>
<dbReference type="PDB" id="1QT8">
    <property type="method" value="X-ray"/>
    <property type="resolution" value="1.90 A"/>
    <property type="chains" value="A=1-164"/>
</dbReference>
<dbReference type="PDB" id="1QTB">
    <property type="method" value="X-ray"/>
    <property type="resolution" value="1.90 A"/>
    <property type="chains" value="A=1-162"/>
</dbReference>
<dbReference type="PDB" id="1QTC">
    <property type="method" value="X-ray"/>
    <property type="resolution" value="2.50 A"/>
    <property type="chains" value="A=1-162"/>
</dbReference>
<dbReference type="PDB" id="1QTD">
    <property type="method" value="X-ray"/>
    <property type="resolution" value="2.50 A"/>
    <property type="chains" value="A=1-162"/>
</dbReference>
<dbReference type="PDB" id="1QTH">
    <property type="method" value="X-ray"/>
    <property type="resolution" value="1.90 A"/>
    <property type="chains" value="A/B=1-164"/>
</dbReference>
<dbReference type="PDB" id="1QTV">
    <property type="method" value="X-ray"/>
    <property type="resolution" value="2.30 A"/>
    <property type="chains" value="A=1-164"/>
</dbReference>
<dbReference type="PDB" id="1QTZ">
    <property type="method" value="X-ray"/>
    <property type="resolution" value="2.00 A"/>
    <property type="chains" value="A=1-164"/>
</dbReference>
<dbReference type="PDB" id="1QUD">
    <property type="method" value="X-ray"/>
    <property type="resolution" value="1.75 A"/>
    <property type="chains" value="A=1-162"/>
</dbReference>
<dbReference type="PDB" id="1QUG">
    <property type="method" value="X-ray"/>
    <property type="resolution" value="1.90 A"/>
    <property type="chains" value="A=1-162"/>
</dbReference>
<dbReference type="PDB" id="1QUH">
    <property type="method" value="X-ray"/>
    <property type="resolution" value="1.85 A"/>
    <property type="chains" value="A=1-162"/>
</dbReference>
<dbReference type="PDB" id="1QUO">
    <property type="method" value="X-ray"/>
    <property type="resolution" value="1.90 A"/>
    <property type="chains" value="A=1-162"/>
</dbReference>
<dbReference type="PDB" id="1SSW">
    <property type="method" value="X-ray"/>
    <property type="resolution" value="2.13 A"/>
    <property type="chains" value="A=1-164"/>
</dbReference>
<dbReference type="PDB" id="1SSY">
    <property type="method" value="X-ray"/>
    <property type="resolution" value="2.40 A"/>
    <property type="chains" value="A/B=1-164"/>
</dbReference>
<dbReference type="PDB" id="1SWY">
    <property type="method" value="X-ray"/>
    <property type="resolution" value="1.06 A"/>
    <property type="chains" value="A=1-164"/>
</dbReference>
<dbReference type="PDB" id="1SWZ">
    <property type="method" value="X-ray"/>
    <property type="resolution" value="1.06 A"/>
    <property type="chains" value="A=1-164"/>
</dbReference>
<dbReference type="PDB" id="1SX2">
    <property type="method" value="X-ray"/>
    <property type="resolution" value="1.06 A"/>
    <property type="chains" value="A=1-164"/>
</dbReference>
<dbReference type="PDB" id="1SX7">
    <property type="method" value="X-ray"/>
    <property type="resolution" value="1.06 A"/>
    <property type="chains" value="A=1-164"/>
</dbReference>
<dbReference type="PDB" id="1T6H">
    <property type="method" value="X-ray"/>
    <property type="resolution" value="2.01 A"/>
    <property type="chains" value="A=1-164"/>
</dbReference>
<dbReference type="PDB" id="1T8A">
    <property type="method" value="X-ray"/>
    <property type="resolution" value="2.00 A"/>
    <property type="chains" value="A=1-164"/>
</dbReference>
<dbReference type="PDB" id="1T8F">
    <property type="method" value="X-ray"/>
    <property type="resolution" value="2.15 A"/>
    <property type="chains" value="A=1-164"/>
</dbReference>
<dbReference type="PDB" id="1T8G">
    <property type="method" value="X-ray"/>
    <property type="resolution" value="1.80 A"/>
    <property type="chains" value="A=1-164"/>
</dbReference>
<dbReference type="PDB" id="1T97">
    <property type="method" value="X-ray"/>
    <property type="resolution" value="2.70 A"/>
    <property type="chains" value="A/B=1-164"/>
</dbReference>
<dbReference type="PDB" id="1TLA">
    <property type="method" value="X-ray"/>
    <property type="resolution" value="2.00 A"/>
    <property type="chains" value="A=1-164"/>
</dbReference>
<dbReference type="PDB" id="1XEP">
    <property type="method" value="X-ray"/>
    <property type="resolution" value="1.55 A"/>
    <property type="chains" value="A=1-164"/>
</dbReference>
<dbReference type="PDB" id="1ZUR">
    <property type="method" value="X-ray"/>
    <property type="resolution" value="1.60 A"/>
    <property type="chains" value="A=1-164"/>
</dbReference>
<dbReference type="PDB" id="1ZWN">
    <property type="method" value="X-ray"/>
    <property type="resolution" value="1.80 A"/>
    <property type="chains" value="A=1-164"/>
</dbReference>
<dbReference type="PDB" id="1ZYT">
    <property type="method" value="X-ray"/>
    <property type="resolution" value="1.70 A"/>
    <property type="chains" value="A=1-164"/>
</dbReference>
<dbReference type="PDB" id="200L">
    <property type="method" value="X-ray"/>
    <property type="resolution" value="1.95 A"/>
    <property type="chains" value="A=1-164"/>
</dbReference>
<dbReference type="PDB" id="201L">
    <property type="method" value="X-ray"/>
    <property type="resolution" value="2.00 A"/>
    <property type="chains" value="A/B=1-164"/>
</dbReference>
<dbReference type="PDB" id="205L">
    <property type="method" value="X-ray"/>
    <property type="resolution" value="2.10 A"/>
    <property type="chains" value="A=1-164"/>
</dbReference>
<dbReference type="PDB" id="206L">
    <property type="method" value="X-ray"/>
    <property type="resolution" value="1.75 A"/>
    <property type="chains" value="A=1-164"/>
</dbReference>
<dbReference type="PDB" id="209L">
    <property type="method" value="X-ray"/>
    <property type="resolution" value="2.70 A"/>
    <property type="chains" value="A=1-164"/>
</dbReference>
<dbReference type="PDB" id="210L">
    <property type="method" value="X-ray"/>
    <property type="resolution" value="1.89 A"/>
    <property type="chains" value="A=1-164"/>
</dbReference>
<dbReference type="PDB" id="211L">
    <property type="method" value="X-ray"/>
    <property type="resolution" value="1.70 A"/>
    <property type="chains" value="A=1-164"/>
</dbReference>
<dbReference type="PDB" id="212L">
    <property type="method" value="X-ray"/>
    <property type="resolution" value="1.76 A"/>
    <property type="chains" value="A=1-164"/>
</dbReference>
<dbReference type="PDB" id="213L">
    <property type="method" value="X-ray"/>
    <property type="resolution" value="2.13 A"/>
    <property type="chains" value="A=1-164"/>
</dbReference>
<dbReference type="PDB" id="214L">
    <property type="method" value="X-ray"/>
    <property type="resolution" value="1.89 A"/>
    <property type="chains" value="A=1-164"/>
</dbReference>
<dbReference type="PDB" id="215L">
    <property type="method" value="X-ray"/>
    <property type="resolution" value="1.96 A"/>
    <property type="chains" value="A=1-164"/>
</dbReference>
<dbReference type="PDB" id="216L">
    <property type="method" value="X-ray"/>
    <property type="resolution" value="2.10 A"/>
    <property type="chains" value="A/B=1-164"/>
</dbReference>
<dbReference type="PDB" id="217L">
    <property type="method" value="X-ray"/>
    <property type="resolution" value="1.70 A"/>
    <property type="chains" value="A=1-164"/>
</dbReference>
<dbReference type="PDB" id="218L">
    <property type="method" value="X-ray"/>
    <property type="resolution" value="2.05 A"/>
    <property type="chains" value="A=1-164"/>
</dbReference>
<dbReference type="PDB" id="219L">
    <property type="method" value="X-ray"/>
    <property type="resolution" value="1.66 A"/>
    <property type="chains" value="A=1-164"/>
</dbReference>
<dbReference type="PDB" id="220L">
    <property type="method" value="X-ray"/>
    <property type="resolution" value="1.85 A"/>
    <property type="chains" value="A=1-164"/>
</dbReference>
<dbReference type="PDB" id="221L">
    <property type="method" value="X-ray"/>
    <property type="resolution" value="1.70 A"/>
    <property type="chains" value="A=1-164"/>
</dbReference>
<dbReference type="PDB" id="222L">
    <property type="method" value="X-ray"/>
    <property type="resolution" value="1.90 A"/>
    <property type="chains" value="A=1-164"/>
</dbReference>
<dbReference type="PDB" id="223L">
    <property type="method" value="X-ray"/>
    <property type="resolution" value="1.90 A"/>
    <property type="chains" value="A=1-164"/>
</dbReference>
<dbReference type="PDB" id="224L">
    <property type="method" value="X-ray"/>
    <property type="resolution" value="1.85 A"/>
    <property type="chains" value="A=1-164"/>
</dbReference>
<dbReference type="PDB" id="225L">
    <property type="method" value="X-ray"/>
    <property type="resolution" value="1.90 A"/>
    <property type="chains" value="A=1-164"/>
</dbReference>
<dbReference type="PDB" id="226L">
    <property type="method" value="X-ray"/>
    <property type="resolution" value="1.80 A"/>
    <property type="chains" value="A=1-164"/>
</dbReference>
<dbReference type="PDB" id="227L">
    <property type="method" value="X-ray"/>
    <property type="resolution" value="2.00 A"/>
    <property type="chains" value="A=1-164"/>
</dbReference>
<dbReference type="PDB" id="228L">
    <property type="method" value="X-ray"/>
    <property type="resolution" value="1.90 A"/>
    <property type="chains" value="A=1-164"/>
</dbReference>
<dbReference type="PDB" id="229L">
    <property type="method" value="X-ray"/>
    <property type="resolution" value="1.80 A"/>
    <property type="chains" value="A=1-164"/>
</dbReference>
<dbReference type="PDB" id="230L">
    <property type="method" value="X-ray"/>
    <property type="resolution" value="1.90 A"/>
    <property type="chains" value="A=1-164"/>
</dbReference>
<dbReference type="PDB" id="231L">
    <property type="method" value="X-ray"/>
    <property type="resolution" value="2.50 A"/>
    <property type="chains" value="A=1-164"/>
</dbReference>
<dbReference type="PDB" id="232L">
    <property type="method" value="X-ray"/>
    <property type="resolution" value="1.73 A"/>
    <property type="chains" value="A=1-164"/>
</dbReference>
<dbReference type="PDB" id="233L">
    <property type="method" value="X-ray"/>
    <property type="resolution" value="1.90 A"/>
    <property type="chains" value="A=1-164"/>
</dbReference>
<dbReference type="PDB" id="234L">
    <property type="method" value="X-ray"/>
    <property type="resolution" value="1.90 A"/>
    <property type="chains" value="A=1-164"/>
</dbReference>
<dbReference type="PDB" id="235L">
    <property type="method" value="X-ray"/>
    <property type="resolution" value="1.90 A"/>
    <property type="chains" value="A=1-164"/>
</dbReference>
<dbReference type="PDB" id="236L">
    <property type="method" value="X-ray"/>
    <property type="resolution" value="1.90 A"/>
    <property type="chains" value="A=1-164"/>
</dbReference>
<dbReference type="PDB" id="237L">
    <property type="method" value="X-ray"/>
    <property type="resolution" value="1.70 A"/>
    <property type="chains" value="A=1-164"/>
</dbReference>
<dbReference type="PDB" id="238L">
    <property type="method" value="X-ray"/>
    <property type="resolution" value="1.80 A"/>
    <property type="chains" value="A=1-164"/>
</dbReference>
<dbReference type="PDB" id="239L">
    <property type="method" value="X-ray"/>
    <property type="resolution" value="1.80 A"/>
    <property type="chains" value="A=1-164"/>
</dbReference>
<dbReference type="PDB" id="240L">
    <property type="method" value="X-ray"/>
    <property type="resolution" value="1.75 A"/>
    <property type="chains" value="A=1-164"/>
</dbReference>
<dbReference type="PDB" id="241L">
    <property type="method" value="X-ray"/>
    <property type="resolution" value="1.70 A"/>
    <property type="chains" value="A=1-164"/>
</dbReference>
<dbReference type="PDB" id="242L">
    <property type="method" value="X-ray"/>
    <property type="resolution" value="1.80 A"/>
    <property type="chains" value="A=1-164"/>
</dbReference>
<dbReference type="PDB" id="243L">
    <property type="method" value="X-ray"/>
    <property type="resolution" value="1.75 A"/>
    <property type="chains" value="A=1-164"/>
</dbReference>
<dbReference type="PDB" id="244L">
    <property type="method" value="X-ray"/>
    <property type="resolution" value="1.70 A"/>
    <property type="chains" value="A=1-164"/>
</dbReference>
<dbReference type="PDB" id="245L">
    <property type="method" value="X-ray"/>
    <property type="resolution" value="1.80 A"/>
    <property type="chains" value="A=1-164"/>
</dbReference>
<dbReference type="PDB" id="246L">
    <property type="method" value="X-ray"/>
    <property type="resolution" value="1.80 A"/>
    <property type="chains" value="A=1-164"/>
</dbReference>
<dbReference type="PDB" id="247L">
    <property type="method" value="X-ray"/>
    <property type="resolution" value="1.75 A"/>
    <property type="chains" value="A=1-164"/>
</dbReference>
<dbReference type="PDB" id="248L">
    <property type="method" value="X-ray"/>
    <property type="resolution" value="1.90 A"/>
    <property type="chains" value="A=1-164"/>
</dbReference>
<dbReference type="PDB" id="249L">
    <property type="method" value="X-ray"/>
    <property type="resolution" value="1.90 A"/>
    <property type="chains" value="A=1-164"/>
</dbReference>
<dbReference type="PDB" id="250L">
    <property type="method" value="X-ray"/>
    <property type="resolution" value="1.80 A"/>
    <property type="chains" value="A=1-164"/>
</dbReference>
<dbReference type="PDB" id="251L">
    <property type="method" value="X-ray"/>
    <property type="resolution" value="2.60 A"/>
    <property type="chains" value="A=1-164"/>
</dbReference>
<dbReference type="PDB" id="252L">
    <property type="method" value="X-ray"/>
    <property type="resolution" value="2.10 A"/>
    <property type="chains" value="A=1-164"/>
</dbReference>
<dbReference type="PDB" id="253L">
    <property type="method" value="X-ray"/>
    <property type="resolution" value="2.00 A"/>
    <property type="chains" value="A=1-164"/>
</dbReference>
<dbReference type="PDB" id="254L">
    <property type="method" value="X-ray"/>
    <property type="resolution" value="1.90 A"/>
    <property type="chains" value="A=1-164"/>
</dbReference>
<dbReference type="PDB" id="255L">
    <property type="method" value="X-ray"/>
    <property type="resolution" value="1.80 A"/>
    <property type="chains" value="A=1-164"/>
</dbReference>
<dbReference type="PDB" id="256L">
    <property type="method" value="X-ray"/>
    <property type="resolution" value="1.80 A"/>
    <property type="chains" value="A=1-164"/>
</dbReference>
<dbReference type="PDB" id="257L">
    <property type="method" value="X-ray"/>
    <property type="resolution" value="1.90 A"/>
    <property type="chains" value="A=1-164"/>
</dbReference>
<dbReference type="PDB" id="258L">
    <property type="method" value="X-ray"/>
    <property type="resolution" value="1.80 A"/>
    <property type="chains" value="A=1-164"/>
</dbReference>
<dbReference type="PDB" id="259L">
    <property type="method" value="X-ray"/>
    <property type="resolution" value="1.92 A"/>
    <property type="chains" value="A=1-164"/>
</dbReference>
<dbReference type="PDB" id="260L">
    <property type="method" value="X-ray"/>
    <property type="resolution" value="1.80 A"/>
    <property type="chains" value="A=1-164"/>
</dbReference>
<dbReference type="PDB" id="261L">
    <property type="method" value="X-ray"/>
    <property type="resolution" value="2.50 A"/>
    <property type="chains" value="A=1-162"/>
</dbReference>
<dbReference type="PDB" id="262L">
    <property type="method" value="X-ray"/>
    <property type="resolution" value="2.50 A"/>
    <property type="chains" value="A/B=1-162"/>
</dbReference>
<dbReference type="PDB" id="2A4T">
    <property type="method" value="X-ray"/>
    <property type="resolution" value="1.70 A"/>
    <property type="chains" value="A=1-164"/>
</dbReference>
<dbReference type="PDB" id="2B6T">
    <property type="method" value="X-ray"/>
    <property type="resolution" value="2.10 A"/>
    <property type="chains" value="A=1-162"/>
</dbReference>
<dbReference type="PDB" id="2B6W">
    <property type="method" value="X-ray"/>
    <property type="resolution" value="2.20 A"/>
    <property type="chains" value="A=1-162"/>
</dbReference>
<dbReference type="PDB" id="2B6X">
    <property type="method" value="X-ray"/>
    <property type="resolution" value="2.11 A"/>
    <property type="chains" value="A=1-162"/>
</dbReference>
<dbReference type="PDB" id="2B6Y">
    <property type="method" value="X-ray"/>
    <property type="resolution" value="2.40 A"/>
    <property type="chains" value="A=1-162"/>
</dbReference>
<dbReference type="PDB" id="2B6Z">
    <property type="method" value="X-ray"/>
    <property type="resolution" value="2.40 A"/>
    <property type="chains" value="A=1-162"/>
</dbReference>
<dbReference type="PDB" id="2B70">
    <property type="method" value="X-ray"/>
    <property type="resolution" value="2.40 A"/>
    <property type="chains" value="A=1-162"/>
</dbReference>
<dbReference type="PDB" id="2B72">
    <property type="method" value="X-ray"/>
    <property type="resolution" value="2.10 A"/>
    <property type="chains" value="A=1-162"/>
</dbReference>
<dbReference type="PDB" id="2B73">
    <property type="method" value="X-ray"/>
    <property type="resolution" value="2.15 A"/>
    <property type="chains" value="A=1-162"/>
</dbReference>
<dbReference type="PDB" id="2B74">
    <property type="method" value="X-ray"/>
    <property type="resolution" value="2.10 A"/>
    <property type="chains" value="A=1-162"/>
</dbReference>
<dbReference type="PDB" id="2B75">
    <property type="method" value="X-ray"/>
    <property type="resolution" value="2.10 A"/>
    <property type="chains" value="A=1-162"/>
</dbReference>
<dbReference type="PDB" id="2B7X">
    <property type="method" value="X-ray"/>
    <property type="resolution" value="3.00 A"/>
    <property type="chains" value="A/B/C/D=1-164"/>
</dbReference>
<dbReference type="PDB" id="2CUU">
    <property type="method" value="X-ray"/>
    <property type="resolution" value="1.75 A"/>
    <property type="chains" value="A=1-164"/>
</dbReference>
<dbReference type="PDB" id="2F2Q">
    <property type="method" value="X-ray"/>
    <property type="resolution" value="1.45 A"/>
    <property type="chains" value="A=1-164"/>
</dbReference>
<dbReference type="PDB" id="2F32">
    <property type="method" value="X-ray"/>
    <property type="resolution" value="1.80 A"/>
    <property type="chains" value="A=1-164"/>
</dbReference>
<dbReference type="PDB" id="2F47">
    <property type="method" value="X-ray"/>
    <property type="resolution" value="1.70 A"/>
    <property type="chains" value="A=1-164"/>
</dbReference>
<dbReference type="PDB" id="2HUK">
    <property type="method" value="X-ray"/>
    <property type="resolution" value="2.00 A"/>
    <property type="chains" value="A=1-164"/>
</dbReference>
<dbReference type="PDB" id="2HUL">
    <property type="method" value="X-ray"/>
    <property type="resolution" value="1.80 A"/>
    <property type="chains" value="A=1-164"/>
</dbReference>
<dbReference type="PDB" id="2HUM">
    <property type="method" value="X-ray"/>
    <property type="resolution" value="2.35 A"/>
    <property type="chains" value="A/B=1-164"/>
</dbReference>
<dbReference type="PDB" id="2IGC">
    <property type="method" value="X-ray"/>
    <property type="resolution" value="1.40 A"/>
    <property type="chains" value="A=1-164"/>
</dbReference>
<dbReference type="PDB" id="2L78">
    <property type="method" value="X-ray"/>
    <property type="resolution" value="2.00 A"/>
    <property type="chains" value="A=1-164"/>
</dbReference>
<dbReference type="PDB" id="2LC9">
    <property type="method" value="NMR"/>
    <property type="chains" value="A=1-164"/>
</dbReference>
<dbReference type="PDB" id="2LCB">
    <property type="method" value="NMR"/>
    <property type="chains" value="A=1-164"/>
</dbReference>
<dbReference type="PDB" id="2LZM">
    <property type="method" value="X-ray"/>
    <property type="resolution" value="1.70 A"/>
    <property type="chains" value="A=1-164"/>
</dbReference>
<dbReference type="PDB" id="2NTG">
    <property type="method" value="X-ray"/>
    <property type="resolution" value="1.40 A"/>
    <property type="chains" value="A=1-164"/>
</dbReference>
<dbReference type="PDB" id="2NTH">
    <property type="method" value="X-ray"/>
    <property type="resolution" value="1.80 A"/>
    <property type="chains" value="A=1-164"/>
</dbReference>
<dbReference type="PDB" id="2O4W">
    <property type="method" value="X-ray"/>
    <property type="resolution" value="1.90 A"/>
    <property type="chains" value="A=13-164"/>
</dbReference>
<dbReference type="PDB" id="2O79">
    <property type="method" value="X-ray"/>
    <property type="resolution" value="1.80 A"/>
    <property type="chains" value="A=1-164"/>
</dbReference>
<dbReference type="PDB" id="2O7A">
    <property type="method" value="X-ray"/>
    <property type="resolution" value="0.84 A"/>
    <property type="chains" value="A=60-164"/>
</dbReference>
<dbReference type="PDB" id="2OE4">
    <property type="method" value="X-ray"/>
    <property type="resolution" value="2.10 A"/>
    <property type="chains" value="X=1-164"/>
</dbReference>
<dbReference type="PDB" id="2OE7">
    <property type="method" value="X-ray"/>
    <property type="resolution" value="2.10 A"/>
    <property type="chains" value="X=1-164"/>
</dbReference>
<dbReference type="PDB" id="2OE9">
    <property type="method" value="X-ray"/>
    <property type="resolution" value="2.01 A"/>
    <property type="chains" value="X=1-164"/>
</dbReference>
<dbReference type="PDB" id="2OEA">
    <property type="method" value="X-ray"/>
    <property type="resolution" value="2.01 A"/>
    <property type="chains" value="X=1-164"/>
</dbReference>
<dbReference type="PDB" id="2OTY">
    <property type="method" value="X-ray"/>
    <property type="resolution" value="1.83 A"/>
    <property type="chains" value="X=1-162"/>
</dbReference>
<dbReference type="PDB" id="2OTZ">
    <property type="method" value="X-ray"/>
    <property type="resolution" value="2.07 A"/>
    <property type="chains" value="X=1-162"/>
</dbReference>
<dbReference type="PDB" id="2OU0">
    <property type="method" value="X-ray"/>
    <property type="resolution" value="1.94 A"/>
    <property type="chains" value="X=1-162"/>
</dbReference>
<dbReference type="PDB" id="2OU8">
    <property type="method" value="X-ray"/>
    <property type="resolution" value="1.80 A"/>
    <property type="chains" value="A=1-164"/>
</dbReference>
<dbReference type="PDB" id="2OU9">
    <property type="method" value="X-ray"/>
    <property type="resolution" value="1.55 A"/>
    <property type="chains" value="A=1-164"/>
</dbReference>
<dbReference type="PDB" id="2Q9D">
    <property type="method" value="X-ray"/>
    <property type="resolution" value="1.40 A"/>
    <property type="chains" value="A=1-164"/>
</dbReference>
<dbReference type="PDB" id="2Q9E">
    <property type="method" value="X-ray"/>
    <property type="resolution" value="2.10 A"/>
    <property type="chains" value="A/B/C=1-164"/>
</dbReference>
<dbReference type="PDB" id="2QAR">
    <property type="method" value="X-ray"/>
    <property type="resolution" value="2.40 A"/>
    <property type="chains" value="C/F=2-162"/>
</dbReference>
<dbReference type="PDB" id="2QB0">
    <property type="method" value="X-ray"/>
    <property type="resolution" value="2.56 A"/>
    <property type="chains" value="B/D=2-162"/>
</dbReference>
<dbReference type="PDB" id="2RAY">
    <property type="method" value="X-ray"/>
    <property type="resolution" value="1.80 A"/>
    <property type="chains" value="X=1-162"/>
</dbReference>
<dbReference type="PDB" id="2RAZ">
    <property type="method" value="X-ray"/>
    <property type="resolution" value="1.64 A"/>
    <property type="chains" value="X=1-162"/>
</dbReference>
<dbReference type="PDB" id="2RB0">
    <property type="method" value="X-ray"/>
    <property type="resolution" value="1.84 A"/>
    <property type="chains" value="X=1-162"/>
</dbReference>
<dbReference type="PDB" id="2RB1">
    <property type="method" value="X-ray"/>
    <property type="resolution" value="1.70 A"/>
    <property type="chains" value="X=1-162"/>
</dbReference>
<dbReference type="PDB" id="2RB2">
    <property type="method" value="X-ray"/>
    <property type="resolution" value="1.46 A"/>
    <property type="chains" value="X=1-162"/>
</dbReference>
<dbReference type="PDB" id="2RBN">
    <property type="method" value="X-ray"/>
    <property type="resolution" value="1.29 A"/>
    <property type="chains" value="A=1-162"/>
</dbReference>
<dbReference type="PDB" id="2RBO">
    <property type="method" value="X-ray"/>
    <property type="resolution" value="1.29 A"/>
    <property type="chains" value="A=1-162"/>
</dbReference>
<dbReference type="PDB" id="2RBP">
    <property type="method" value="X-ray"/>
    <property type="resolution" value="1.47 A"/>
    <property type="chains" value="A=1-162"/>
</dbReference>
<dbReference type="PDB" id="2RBQ">
    <property type="method" value="X-ray"/>
    <property type="resolution" value="1.63 A"/>
    <property type="chains" value="A=1-162"/>
</dbReference>
<dbReference type="PDB" id="2RBR">
    <property type="method" value="X-ray"/>
    <property type="resolution" value="1.43 A"/>
    <property type="chains" value="A=1-162"/>
</dbReference>
<dbReference type="PDB" id="2RBS">
    <property type="method" value="X-ray"/>
    <property type="resolution" value="1.56 A"/>
    <property type="chains" value="A=1-162"/>
</dbReference>
<dbReference type="PDB" id="2RH1">
    <property type="method" value="X-ray"/>
    <property type="resolution" value="2.40 A"/>
    <property type="chains" value="A=2-161"/>
</dbReference>
<dbReference type="PDB" id="3C7W">
    <property type="method" value="X-ray"/>
    <property type="resolution" value="1.77 A"/>
    <property type="chains" value="A=1-164"/>
</dbReference>
<dbReference type="PDB" id="3C7Y">
    <property type="method" value="X-ray"/>
    <property type="resolution" value="1.95 A"/>
    <property type="chains" value="A=1-164"/>
</dbReference>
<dbReference type="PDB" id="3C7Z">
    <property type="method" value="X-ray"/>
    <property type="resolution" value="1.67 A"/>
    <property type="chains" value="A=1-164"/>
</dbReference>
<dbReference type="PDB" id="3C80">
    <property type="method" value="X-ray"/>
    <property type="resolution" value="1.99 A"/>
    <property type="chains" value="A=1-164"/>
</dbReference>
<dbReference type="PDB" id="3C81">
    <property type="method" value="X-ray"/>
    <property type="resolution" value="1.85 A"/>
    <property type="chains" value="A=1-164"/>
</dbReference>
<dbReference type="PDB" id="3C82">
    <property type="method" value="X-ray"/>
    <property type="resolution" value="1.68 A"/>
    <property type="chains" value="A=1-164"/>
</dbReference>
<dbReference type="PDB" id="3C83">
    <property type="method" value="X-ray"/>
    <property type="resolution" value="1.84 A"/>
    <property type="chains" value="A=1-164"/>
</dbReference>
<dbReference type="PDB" id="3C8Q">
    <property type="method" value="X-ray"/>
    <property type="resolution" value="1.64 A"/>
    <property type="chains" value="A=1-164"/>
</dbReference>
<dbReference type="PDB" id="3C8R">
    <property type="method" value="X-ray"/>
    <property type="resolution" value="1.80 A"/>
    <property type="chains" value="A=1-164"/>
</dbReference>
<dbReference type="PDB" id="3C8S">
    <property type="method" value="X-ray"/>
    <property type="resolution" value="1.68 A"/>
    <property type="chains" value="A=1-164"/>
</dbReference>
<dbReference type="PDB" id="3CDO">
    <property type="method" value="X-ray"/>
    <property type="resolution" value="1.87 A"/>
    <property type="chains" value="A/B/C/D=1-164"/>
</dbReference>
<dbReference type="PDB" id="3CDQ">
    <property type="method" value="X-ray"/>
    <property type="resolution" value="1.68 A"/>
    <property type="chains" value="A=1-164"/>
</dbReference>
<dbReference type="PDB" id="3CDR">
    <property type="method" value="X-ray"/>
    <property type="resolution" value="1.70 A"/>
    <property type="chains" value="A=1-164"/>
</dbReference>
<dbReference type="PDB" id="3CDT">
    <property type="method" value="X-ray"/>
    <property type="resolution" value="1.63 A"/>
    <property type="chains" value="A=1-164"/>
</dbReference>
<dbReference type="PDB" id="3CDV">
    <property type="method" value="X-ray"/>
    <property type="resolution" value="1.73 A"/>
    <property type="chains" value="A=1-164"/>
</dbReference>
<dbReference type="PDB" id="3D4S">
    <property type="method" value="X-ray"/>
    <property type="resolution" value="2.80 A"/>
    <property type="chains" value="A=2-161"/>
</dbReference>
<dbReference type="PDB" id="3DKE">
    <property type="method" value="X-ray"/>
    <property type="resolution" value="1.25 A"/>
    <property type="chains" value="X=1-164"/>
</dbReference>
<dbReference type="PDB" id="3DMV">
    <property type="method" value="X-ray"/>
    <property type="resolution" value="1.65 A"/>
    <property type="chains" value="A=1-164"/>
</dbReference>
<dbReference type="PDB" id="3DMX">
    <property type="method" value="X-ray"/>
    <property type="resolution" value="1.80 A"/>
    <property type="chains" value="A=1-164"/>
</dbReference>
<dbReference type="PDB" id="3DMZ">
    <property type="method" value="X-ray"/>
    <property type="resolution" value="2.00 A"/>
    <property type="chains" value="A=1-164"/>
</dbReference>
<dbReference type="PDB" id="3DN0">
    <property type="method" value="X-ray"/>
    <property type="resolution" value="1.80 A"/>
    <property type="chains" value="A=1-164"/>
</dbReference>
<dbReference type="PDB" id="3DN1">
    <property type="method" value="X-ray"/>
    <property type="resolution" value="1.80 A"/>
    <property type="chains" value="A=1-164"/>
</dbReference>
<dbReference type="PDB" id="3DN2">
    <property type="method" value="X-ray"/>
    <property type="resolution" value="1.80 A"/>
    <property type="chains" value="A=1-164"/>
</dbReference>
<dbReference type="PDB" id="3DN3">
    <property type="method" value="X-ray"/>
    <property type="resolution" value="1.80 A"/>
    <property type="chains" value="A=1-164"/>
</dbReference>
<dbReference type="PDB" id="3DN4">
    <property type="method" value="X-ray"/>
    <property type="resolution" value="1.80 A"/>
    <property type="chains" value="A=1-164"/>
</dbReference>
<dbReference type="PDB" id="3DN6">
    <property type="method" value="X-ray"/>
    <property type="resolution" value="1.80 A"/>
    <property type="chains" value="A=1-164"/>
</dbReference>
<dbReference type="PDB" id="3DN8">
    <property type="method" value="X-ray"/>
    <property type="resolution" value="1.70 A"/>
    <property type="chains" value="A=1-164"/>
</dbReference>
<dbReference type="PDB" id="3DNA">
    <property type="method" value="X-ray"/>
    <property type="resolution" value="1.70 A"/>
    <property type="chains" value="A=1-164"/>
</dbReference>
<dbReference type="PDB" id="3EML">
    <property type="method" value="X-ray"/>
    <property type="resolution" value="2.60 A"/>
    <property type="chains" value="A=2-161"/>
</dbReference>
<dbReference type="PDB" id="3F8V">
    <property type="method" value="X-ray"/>
    <property type="resolution" value="1.08 A"/>
    <property type="chains" value="A=1-164"/>
</dbReference>
<dbReference type="PDB" id="3F9L">
    <property type="method" value="X-ray"/>
    <property type="resolution" value="1.19 A"/>
    <property type="chains" value="A=1-164"/>
</dbReference>
<dbReference type="PDB" id="3FA0">
    <property type="method" value="X-ray"/>
    <property type="resolution" value="1.09 A"/>
    <property type="chains" value="A=1-162"/>
</dbReference>
<dbReference type="PDB" id="3FAD">
    <property type="method" value="X-ray"/>
    <property type="resolution" value="1.20 A"/>
    <property type="chains" value="A=1-164"/>
</dbReference>
<dbReference type="PDB" id="3FI5">
    <property type="method" value="X-ray"/>
    <property type="resolution" value="1.53 A"/>
    <property type="chains" value="A/B/C/D=1-164"/>
</dbReference>
<dbReference type="PDB" id="3G3V">
    <property type="method" value="X-ray"/>
    <property type="resolution" value="2.10 A"/>
    <property type="chains" value="A=1-164"/>
</dbReference>
<dbReference type="PDB" id="3G3W">
    <property type="method" value="X-ray"/>
    <property type="resolution" value="2.30 A"/>
    <property type="chains" value="A=1-164"/>
</dbReference>
<dbReference type="PDB" id="3G3X">
    <property type="method" value="X-ray"/>
    <property type="resolution" value="1.80 A"/>
    <property type="chains" value="A=1-164"/>
</dbReference>
<dbReference type="PDB" id="3GUI">
    <property type="method" value="X-ray"/>
    <property type="resolution" value="1.45 A"/>
    <property type="chains" value="A=1-164"/>
</dbReference>
<dbReference type="PDB" id="3GUJ">
    <property type="method" value="X-ray"/>
    <property type="resolution" value="1.60 A"/>
    <property type="chains" value="A=1-164"/>
</dbReference>
<dbReference type="PDB" id="3GUK">
    <property type="method" value="X-ray"/>
    <property type="resolution" value="1.85 A"/>
    <property type="chains" value="A/B=1-164"/>
</dbReference>
<dbReference type="PDB" id="3GUL">
    <property type="method" value="X-ray"/>
    <property type="resolution" value="2.07 A"/>
    <property type="chains" value="A/B=1-164"/>
</dbReference>
<dbReference type="PDB" id="3GUM">
    <property type="method" value="X-ray"/>
    <property type="resolution" value="2.24 A"/>
    <property type="chains" value="A/B=1-164"/>
</dbReference>
<dbReference type="PDB" id="3GUN">
    <property type="method" value="X-ray"/>
    <property type="resolution" value="1.50 A"/>
    <property type="chains" value="A/B=1-164"/>
</dbReference>
<dbReference type="PDB" id="3GUO">
    <property type="method" value="X-ray"/>
    <property type="resolution" value="2.16 A"/>
    <property type="chains" value="A/B=1-164"/>
</dbReference>
<dbReference type="PDB" id="3GUP">
    <property type="method" value="X-ray"/>
    <property type="resolution" value="1.50 A"/>
    <property type="chains" value="A/B=1-164"/>
</dbReference>
<dbReference type="PDB" id="3HH3">
    <property type="method" value="X-ray"/>
    <property type="resolution" value="1.25 A"/>
    <property type="chains" value="A=1-164"/>
</dbReference>
<dbReference type="PDB" id="3HH4">
    <property type="method" value="X-ray"/>
    <property type="resolution" value="1.25 A"/>
    <property type="chains" value="A=1-164"/>
</dbReference>
<dbReference type="PDB" id="3HH5">
    <property type="method" value="X-ray"/>
    <property type="resolution" value="1.25 A"/>
    <property type="chains" value="A=1-164"/>
</dbReference>
<dbReference type="PDB" id="3HH6">
    <property type="method" value="X-ray"/>
    <property type="resolution" value="1.25 A"/>
    <property type="chains" value="A=1-164"/>
</dbReference>
<dbReference type="PDB" id="3HT6">
    <property type="method" value="X-ray"/>
    <property type="resolution" value="1.59 A"/>
    <property type="chains" value="A=1-164"/>
</dbReference>
<dbReference type="PDB" id="3HT7">
    <property type="method" value="X-ray"/>
    <property type="resolution" value="1.70 A"/>
    <property type="chains" value="A=1-164"/>
</dbReference>
<dbReference type="PDB" id="3HT8">
    <property type="method" value="X-ray"/>
    <property type="resolution" value="1.60 A"/>
    <property type="chains" value="A=1-164"/>
</dbReference>
<dbReference type="PDB" id="3HT9">
    <property type="method" value="X-ray"/>
    <property type="resolution" value="2.02 A"/>
    <property type="chains" value="A=1-164"/>
</dbReference>
<dbReference type="PDB" id="3HTB">
    <property type="method" value="X-ray"/>
    <property type="resolution" value="1.81 A"/>
    <property type="chains" value="A=1-164"/>
</dbReference>
<dbReference type="PDB" id="3HTD">
    <property type="method" value="X-ray"/>
    <property type="resolution" value="1.40 A"/>
    <property type="chains" value="A=1-164"/>
</dbReference>
<dbReference type="PDB" id="3HTF">
    <property type="method" value="X-ray"/>
    <property type="resolution" value="1.85 A"/>
    <property type="chains" value="A=1-164"/>
</dbReference>
<dbReference type="PDB" id="3HTG">
    <property type="method" value="X-ray"/>
    <property type="resolution" value="1.26 A"/>
    <property type="chains" value="A=1-164"/>
</dbReference>
<dbReference type="PDB" id="3HU8">
    <property type="method" value="X-ray"/>
    <property type="resolution" value="1.80 A"/>
    <property type="chains" value="A=1-164"/>
</dbReference>
<dbReference type="PDB" id="3HU9">
    <property type="method" value="X-ray"/>
    <property type="resolution" value="1.46 A"/>
    <property type="chains" value="A=1-164"/>
</dbReference>
<dbReference type="PDB" id="3HUA">
    <property type="method" value="X-ray"/>
    <property type="resolution" value="1.40 A"/>
    <property type="chains" value="A=1-164"/>
</dbReference>
<dbReference type="PDB" id="3HUK">
    <property type="method" value="X-ray"/>
    <property type="resolution" value="1.29 A"/>
    <property type="chains" value="A=1-164"/>
</dbReference>
<dbReference type="PDB" id="3HUQ">
    <property type="method" value="X-ray"/>
    <property type="resolution" value="1.45 A"/>
    <property type="chains" value="A=1-162"/>
</dbReference>
<dbReference type="PDB" id="3HWL">
    <property type="method" value="X-ray"/>
    <property type="resolution" value="1.80 A"/>
    <property type="chains" value="A=1-164"/>
</dbReference>
<dbReference type="PDB" id="3JR6">
    <property type="method" value="X-ray"/>
    <property type="resolution" value="3.00 A"/>
    <property type="chains" value="A/B/C/D=1-164"/>
</dbReference>
<dbReference type="PDB" id="3K2R">
    <property type="method" value="X-ray"/>
    <property type="resolution" value="1.50 A"/>
    <property type="chains" value="A=1-164"/>
</dbReference>
<dbReference type="PDB" id="3L2X">
    <property type="method" value="X-ray"/>
    <property type="resolution" value="1.80 A"/>
    <property type="chains" value="A=1-164"/>
</dbReference>
<dbReference type="PDB" id="3L64">
    <property type="method" value="X-ray"/>
    <property type="resolution" value="1.90 A"/>
    <property type="chains" value="A=1-164"/>
</dbReference>
<dbReference type="PDB" id="3LZM">
    <property type="method" value="X-ray"/>
    <property type="resolution" value="1.70 A"/>
    <property type="chains" value="A=1-164"/>
</dbReference>
<dbReference type="PDB" id="3NY8">
    <property type="method" value="X-ray"/>
    <property type="resolution" value="2.84 A"/>
    <property type="chains" value="A=2-161"/>
</dbReference>
<dbReference type="PDB" id="3NY9">
    <property type="method" value="X-ray"/>
    <property type="resolution" value="2.84 A"/>
    <property type="chains" value="A=2-161"/>
</dbReference>
<dbReference type="PDB" id="3NYA">
    <property type="method" value="X-ray"/>
    <property type="resolution" value="3.16 A"/>
    <property type="chains" value="A=2-161"/>
</dbReference>
<dbReference type="PDB" id="3ODU">
    <property type="method" value="X-ray"/>
    <property type="resolution" value="2.50 A"/>
    <property type="chains" value="A/B=2-161"/>
</dbReference>
<dbReference type="PDB" id="3OE0">
    <property type="method" value="X-ray"/>
    <property type="resolution" value="2.90 A"/>
    <property type="chains" value="A=2-161"/>
</dbReference>
<dbReference type="PDB" id="3OE6">
    <property type="method" value="X-ray"/>
    <property type="resolution" value="3.20 A"/>
    <property type="chains" value="A=2-161"/>
</dbReference>
<dbReference type="PDB" id="3OE8">
    <property type="method" value="X-ray"/>
    <property type="resolution" value="3.10 A"/>
    <property type="chains" value="A/B/C=2-161"/>
</dbReference>
<dbReference type="PDB" id="3OE9">
    <property type="method" value="X-ray"/>
    <property type="resolution" value="3.10 A"/>
    <property type="chains" value="A/B=2-161"/>
</dbReference>
<dbReference type="PDB" id="3P0G">
    <property type="method" value="X-ray"/>
    <property type="resolution" value="3.50 A"/>
    <property type="chains" value="A=2-161"/>
</dbReference>
<dbReference type="PDB" id="3PBL">
    <property type="method" value="X-ray"/>
    <property type="resolution" value="2.89 A"/>
    <property type="chains" value="A/B=2-161"/>
</dbReference>
<dbReference type="PDB" id="3PDS">
    <property type="method" value="X-ray"/>
    <property type="resolution" value="3.50 A"/>
    <property type="chains" value="A=2-162"/>
</dbReference>
<dbReference type="PDB" id="3QAK">
    <property type="method" value="X-ray"/>
    <property type="resolution" value="2.71 A"/>
    <property type="chains" value="A=2-161"/>
</dbReference>
<dbReference type="PDB" id="3RUN">
    <property type="method" value="X-ray"/>
    <property type="resolution" value="1.40 A"/>
    <property type="chains" value="A=1-164"/>
</dbReference>
<dbReference type="PDB" id="3RZE">
    <property type="method" value="X-ray"/>
    <property type="resolution" value="3.10 A"/>
    <property type="chains" value="A=2-161"/>
</dbReference>
<dbReference type="PDB" id="3SB5">
    <property type="method" value="X-ray"/>
    <property type="resolution" value="2.46 A"/>
    <property type="chains" value="A/B/C/D=1-162"/>
</dbReference>
<dbReference type="PDB" id="3SB6">
    <property type="method" value="X-ray"/>
    <property type="resolution" value="2.70 A"/>
    <property type="chains" value="A/B=1-162"/>
</dbReference>
<dbReference type="PDB" id="3SB7">
    <property type="method" value="X-ray"/>
    <property type="resolution" value="2.70 A"/>
    <property type="chains" value="A/B=1-162"/>
</dbReference>
<dbReference type="PDB" id="3SB8">
    <property type="method" value="X-ray"/>
    <property type="resolution" value="2.65 A"/>
    <property type="chains" value="A/B/C=1-162"/>
</dbReference>
<dbReference type="PDB" id="3SB9">
    <property type="method" value="X-ray"/>
    <property type="resolution" value="2.45 A"/>
    <property type="chains" value="A/B=1-162"/>
</dbReference>
<dbReference type="PDB" id="3SBA">
    <property type="method" value="X-ray"/>
    <property type="resolution" value="2.75 A"/>
    <property type="chains" value="A/B/C/D/E/F=1-162"/>
</dbReference>
<dbReference type="PDB" id="3SBB">
    <property type="method" value="X-ray"/>
    <property type="resolution" value="1.43 A"/>
    <property type="chains" value="C=1-162"/>
</dbReference>
<dbReference type="PDB" id="3SN6">
    <property type="method" value="X-ray"/>
    <property type="resolution" value="3.20 A"/>
    <property type="chains" value="R=2-161"/>
</dbReference>
<dbReference type="PDB" id="3UON">
    <property type="method" value="X-ray"/>
    <property type="resolution" value="3.00 A"/>
    <property type="chains" value="A=2-161"/>
</dbReference>
<dbReference type="PDB" id="3V2W">
    <property type="method" value="X-ray"/>
    <property type="resolution" value="3.35 A"/>
    <property type="chains" value="A=2-161"/>
</dbReference>
<dbReference type="PDB" id="3V2Y">
    <property type="method" value="X-ray"/>
    <property type="resolution" value="2.80 A"/>
    <property type="chains" value="A=2-161"/>
</dbReference>
<dbReference type="PDB" id="3VW7">
    <property type="method" value="X-ray"/>
    <property type="resolution" value="2.20 A"/>
    <property type="chains" value="A=2-161"/>
</dbReference>
<dbReference type="PDB" id="4ARJ">
    <property type="method" value="X-ray"/>
    <property type="resolution" value="2.59 A"/>
    <property type="chains" value="A/B=2-164"/>
</dbReference>
<dbReference type="PDB" id="4DAJ">
    <property type="method" value="X-ray"/>
    <property type="resolution" value="3.40 A"/>
    <property type="chains" value="A/B/C/D=1-161"/>
</dbReference>
<dbReference type="PDB" id="4DJH">
    <property type="method" value="X-ray"/>
    <property type="resolution" value="2.90 A"/>
    <property type="chains" value="A/B=2-161"/>
</dbReference>
<dbReference type="PDB" id="4DKL">
    <property type="method" value="X-ray"/>
    <property type="resolution" value="2.80 A"/>
    <property type="chains" value="A=2-161"/>
</dbReference>
<dbReference type="PDB" id="4E97">
    <property type="method" value="X-ray"/>
    <property type="resolution" value="1.30 A"/>
    <property type="chains" value="A/B=1-164"/>
</dbReference>
<dbReference type="PDB" id="4EJ4">
    <property type="method" value="X-ray"/>
    <property type="resolution" value="3.40 A"/>
    <property type="chains" value="A=2-161"/>
</dbReference>
<dbReference type="PDB" id="4EKP">
    <property type="method" value="X-ray"/>
    <property type="resolution" value="1.64 A"/>
    <property type="chains" value="A/B=1-164"/>
</dbReference>
<dbReference type="PDB" id="4EKQ">
    <property type="method" value="X-ray"/>
    <property type="resolution" value="1.54 A"/>
    <property type="chains" value="A/B=1-164"/>
</dbReference>
<dbReference type="PDB" id="4EKR">
    <property type="method" value="X-ray"/>
    <property type="resolution" value="1.49 A"/>
    <property type="chains" value="A/B=1-164"/>
</dbReference>
<dbReference type="PDB" id="4EKS">
    <property type="method" value="X-ray"/>
    <property type="resolution" value="1.64 A"/>
    <property type="chains" value="A/B=1-164"/>
</dbReference>
<dbReference type="PDB" id="4EPI">
    <property type="method" value="X-ray"/>
    <property type="resolution" value="1.74 A"/>
    <property type="chains" value="A=3-164"/>
</dbReference>
<dbReference type="PDB" id="4EXM">
    <property type="method" value="X-ray"/>
    <property type="resolution" value="2.60 A"/>
    <property type="chains" value="A/B/C/D=3-164"/>
</dbReference>
<dbReference type="PDB" id="4GBR">
    <property type="method" value="X-ray"/>
    <property type="resolution" value="3.99 A"/>
    <property type="chains" value="B=2-161"/>
</dbReference>
<dbReference type="PDB" id="4GRV">
    <property type="method" value="X-ray"/>
    <property type="resolution" value="2.80 A"/>
    <property type="chains" value="A=2-161"/>
</dbReference>
<dbReference type="PDB" id="4HTT">
    <property type="method" value="X-ray"/>
    <property type="resolution" value="6.80 A"/>
    <property type="chains" value="A/B=1-164"/>
</dbReference>
<dbReference type="PDB" id="4I7J">
    <property type="method" value="X-ray"/>
    <property type="resolution" value="1.67 A"/>
    <property type="chains" value="A/B=1-164"/>
</dbReference>
<dbReference type="PDB" id="4I7K">
    <property type="method" value="X-ray"/>
    <property type="resolution" value="1.72 A"/>
    <property type="chains" value="A/B=1-164"/>
</dbReference>
<dbReference type="PDB" id="4I7L">
    <property type="method" value="X-ray"/>
    <property type="resolution" value="1.52 A"/>
    <property type="chains" value="A/B=1-164"/>
</dbReference>
<dbReference type="PDB" id="4I7M">
    <property type="method" value="X-ray"/>
    <property type="resolution" value="1.48 A"/>
    <property type="chains" value="A/B=1-164"/>
</dbReference>
<dbReference type="PDB" id="4I7N">
    <property type="method" value="X-ray"/>
    <property type="resolution" value="1.58 A"/>
    <property type="chains" value="A/B=1-164"/>
</dbReference>
<dbReference type="PDB" id="4I7O">
    <property type="method" value="X-ray"/>
    <property type="resolution" value="1.73 A"/>
    <property type="chains" value="A/B=1-164"/>
</dbReference>
<dbReference type="PDB" id="4I7P">
    <property type="method" value="X-ray"/>
    <property type="resolution" value="1.60 A"/>
    <property type="chains" value="A/B=1-164"/>
</dbReference>
<dbReference type="PDB" id="4I7Q">
    <property type="method" value="X-ray"/>
    <property type="resolution" value="1.58 A"/>
    <property type="chains" value="A/B=1-164"/>
</dbReference>
<dbReference type="PDB" id="4I7R">
    <property type="method" value="X-ray"/>
    <property type="resolution" value="1.52 A"/>
    <property type="chains" value="A/B=1-164"/>
</dbReference>
<dbReference type="PDB" id="4I7S">
    <property type="method" value="X-ray"/>
    <property type="resolution" value="1.69 A"/>
    <property type="chains" value="A/B=1-164"/>
</dbReference>
<dbReference type="PDB" id="4I7T">
    <property type="method" value="X-ray"/>
    <property type="resolution" value="1.55 A"/>
    <property type="chains" value="A/B=1-164"/>
</dbReference>
<dbReference type="PDB" id="4IAP">
    <property type="method" value="X-ray"/>
    <property type="resolution" value="2.30 A"/>
    <property type="chains" value="A/B=2-161"/>
</dbReference>
<dbReference type="PDB" id="4K5Y">
    <property type="method" value="X-ray"/>
    <property type="resolution" value="2.98 A"/>
    <property type="chains" value="A/B/C=2-161"/>
</dbReference>
<dbReference type="PDB" id="4LDE">
    <property type="method" value="X-ray"/>
    <property type="resolution" value="2.79 A"/>
    <property type="chains" value="A=2-161"/>
</dbReference>
<dbReference type="PDB" id="4LDL">
    <property type="method" value="X-ray"/>
    <property type="resolution" value="3.10 A"/>
    <property type="chains" value="A=2-161"/>
</dbReference>
<dbReference type="PDB" id="4LDO">
    <property type="method" value="X-ray"/>
    <property type="resolution" value="3.20 A"/>
    <property type="chains" value="A=2-161"/>
</dbReference>
<dbReference type="PDB" id="4LZM">
    <property type="method" value="X-ray"/>
    <property type="resolution" value="1.70 A"/>
    <property type="chains" value="A=1-164"/>
</dbReference>
<dbReference type="PDB" id="4N9N">
    <property type="method" value="X-ray"/>
    <property type="resolution" value="2.90 A"/>
    <property type="chains" value="A/B=2-161"/>
</dbReference>
<dbReference type="PDB" id="4OO9">
    <property type="method" value="X-ray"/>
    <property type="resolution" value="2.60 A"/>
    <property type="chains" value="A=2-161"/>
</dbReference>
<dbReference type="PDB" id="4PHU">
    <property type="method" value="X-ray"/>
    <property type="resolution" value="2.33 A"/>
    <property type="chains" value="A=2-161"/>
</dbReference>
<dbReference type="PDB" id="4QKX">
    <property type="method" value="X-ray"/>
    <property type="resolution" value="3.30 A"/>
    <property type="chains" value="A=2-161"/>
</dbReference>
<dbReference type="PDB" id="4RWS">
    <property type="method" value="X-ray"/>
    <property type="resolution" value="3.10 A"/>
    <property type="chains" value="A=2-161"/>
</dbReference>
<dbReference type="PDB" id="4S0W">
    <property type="method" value="X-ray"/>
    <property type="resolution" value="2.12 A"/>
    <property type="chains" value="A/B=1-164"/>
</dbReference>
<dbReference type="PDB" id="4TN3">
    <property type="method" value="X-ray"/>
    <property type="resolution" value="3.20 A"/>
    <property type="chains" value="A/B=1-164"/>
</dbReference>
<dbReference type="PDB" id="4U14">
    <property type="method" value="X-ray"/>
    <property type="resolution" value="3.57 A"/>
    <property type="chains" value="A=1-161"/>
</dbReference>
<dbReference type="PDB" id="4W51">
    <property type="method" value="X-ray"/>
    <property type="resolution" value="1.45 A"/>
    <property type="chains" value="A=1-164"/>
</dbReference>
<dbReference type="PDB" id="4W52">
    <property type="method" value="X-ray"/>
    <property type="resolution" value="1.50 A"/>
    <property type="chains" value="A=1-164"/>
</dbReference>
<dbReference type="PDB" id="4W53">
    <property type="method" value="X-ray"/>
    <property type="resolution" value="1.56 A"/>
    <property type="chains" value="A=1-164"/>
</dbReference>
<dbReference type="PDB" id="4W54">
    <property type="method" value="X-ray"/>
    <property type="resolution" value="1.79 A"/>
    <property type="chains" value="A=1-164"/>
</dbReference>
<dbReference type="PDB" id="4W55">
    <property type="method" value="X-ray"/>
    <property type="resolution" value="1.64 A"/>
    <property type="chains" value="A=1-164"/>
</dbReference>
<dbReference type="PDB" id="4W56">
    <property type="method" value="X-ray"/>
    <property type="resolution" value="1.63 A"/>
    <property type="chains" value="A=1-164"/>
</dbReference>
<dbReference type="PDB" id="4W57">
    <property type="method" value="X-ray"/>
    <property type="resolution" value="1.68 A"/>
    <property type="chains" value="A=1-164"/>
</dbReference>
<dbReference type="PDB" id="4W58">
    <property type="method" value="X-ray"/>
    <property type="resolution" value="1.80 A"/>
    <property type="chains" value="A=1-164"/>
</dbReference>
<dbReference type="PDB" id="4W59">
    <property type="method" value="X-ray"/>
    <property type="resolution" value="1.39 A"/>
    <property type="chains" value="A=1-164"/>
</dbReference>
<dbReference type="PDB" id="4W8F">
    <property type="method" value="X-ray"/>
    <property type="resolution" value="3.54 A"/>
    <property type="chains" value="A/B=2-161"/>
</dbReference>
<dbReference type="PDB" id="4WTV">
    <property type="method" value="X-ray"/>
    <property type="resolution" value="1.90 A"/>
    <property type="chains" value="A/B=2-164"/>
</dbReference>
<dbReference type="PDB" id="4XEE">
    <property type="method" value="X-ray"/>
    <property type="resolution" value="2.90 A"/>
    <property type="chains" value="A=2-161"/>
</dbReference>
<dbReference type="PDB" id="4XES">
    <property type="method" value="X-ray"/>
    <property type="resolution" value="2.60 A"/>
    <property type="chains" value="A=2-161"/>
</dbReference>
<dbReference type="PDB" id="4YX7">
    <property type="method" value="X-ray"/>
    <property type="resolution" value="2.00 A"/>
    <property type="chains" value="C/F=2-164"/>
</dbReference>
<dbReference type="PDB" id="4YXA">
    <property type="method" value="X-ray"/>
    <property type="resolution" value="2.35 A"/>
    <property type="chains" value="C/F=2-164"/>
</dbReference>
<dbReference type="PDB" id="4YXC">
    <property type="method" value="X-ray"/>
    <property type="resolution" value="2.30 A"/>
    <property type="chains" value="A=2-161"/>
</dbReference>
<dbReference type="PDB" id="4ZWJ">
    <property type="method" value="X-ray"/>
    <property type="resolution" value="3.30 A"/>
    <property type="chains" value="A/B/C/D=2-161"/>
</dbReference>
<dbReference type="PDB" id="5B2G">
    <property type="method" value="X-ray"/>
    <property type="resolution" value="3.50 A"/>
    <property type="chains" value="A/C/E/G=2-162"/>
</dbReference>
<dbReference type="PDB" id="5CGC">
    <property type="method" value="X-ray"/>
    <property type="resolution" value="3.10 A"/>
    <property type="chains" value="A=2-161"/>
</dbReference>
<dbReference type="PDB" id="5CGD">
    <property type="method" value="X-ray"/>
    <property type="resolution" value="2.60 A"/>
    <property type="chains" value="A=2-161"/>
</dbReference>
<dbReference type="PDB" id="5CXV">
    <property type="method" value="X-ray"/>
    <property type="resolution" value="2.70 A"/>
    <property type="chains" value="A=2-161"/>
</dbReference>
<dbReference type="PDB" id="5D5A">
    <property type="method" value="X-ray"/>
    <property type="resolution" value="2.48 A"/>
    <property type="chains" value="A=2-161"/>
</dbReference>
<dbReference type="PDB" id="5D5B">
    <property type="method" value="X-ray"/>
    <property type="resolution" value="3.80 A"/>
    <property type="chains" value="A=2-161"/>
</dbReference>
<dbReference type="PDB" id="5D6L">
    <property type="method" value="X-ray"/>
    <property type="resolution" value="3.20 A"/>
    <property type="chains" value="A=2-162"/>
</dbReference>
<dbReference type="PDB" id="5DGY">
    <property type="method" value="X-ray"/>
    <property type="resolution" value="7.70 A"/>
    <property type="chains" value="A/B/C/D=2-161"/>
</dbReference>
<dbReference type="PDB" id="5DSG">
    <property type="method" value="X-ray"/>
    <property type="resolution" value="2.60 A"/>
    <property type="chains" value="A/B=61-161"/>
</dbReference>
<dbReference type="PDB" id="5EE7">
    <property type="method" value="X-ray"/>
    <property type="resolution" value="2.50 A"/>
    <property type="chains" value="A=2-160"/>
</dbReference>
<dbReference type="PDB" id="5EUT">
    <property type="method" value="X-ray"/>
    <property type="resolution" value="2.80 A"/>
    <property type="chains" value="A=2-163"/>
</dbReference>
<dbReference type="PDB" id="5EWX">
    <property type="method" value="X-ray"/>
    <property type="resolution" value="2.60 A"/>
    <property type="chains" value="A/B=1-35, A/B=38-164"/>
</dbReference>
<dbReference type="PDB" id="5G27">
    <property type="method" value="X-ray"/>
    <property type="resolution" value="1.61 A"/>
    <property type="chains" value="A=1-164"/>
</dbReference>
<dbReference type="PDB" id="5GLH">
    <property type="method" value="X-ray"/>
    <property type="resolution" value="2.80 A"/>
    <property type="chains" value="A=2-163"/>
</dbReference>
<dbReference type="PDB" id="5GLI">
    <property type="method" value="X-ray"/>
    <property type="resolution" value="2.50 A"/>
    <property type="chains" value="A=61-163"/>
</dbReference>
<dbReference type="PDB" id="5I14">
    <property type="method" value="X-ray"/>
    <property type="resolution" value="1.75 A"/>
    <property type="chains" value="A/B=1-11, A/B=61-164"/>
</dbReference>
<dbReference type="PDB" id="5JDT">
    <property type="method" value="X-ray"/>
    <property type="resolution" value="1.00 A"/>
    <property type="chains" value="A=1-164"/>
</dbReference>
<dbReference type="PDB" id="5JEA">
    <property type="method" value="X-ray"/>
    <property type="resolution" value="2.65 A"/>
    <property type="chains" value="K=1-164"/>
</dbReference>
<dbReference type="PDB" id="5JGN">
    <property type="method" value="X-ray"/>
    <property type="resolution" value="1.53 A"/>
    <property type="chains" value="A=1-164"/>
</dbReference>
<dbReference type="PDB" id="5JGR">
    <property type="method" value="X-ray"/>
    <property type="resolution" value="1.46 A"/>
    <property type="chains" value="A=1-164"/>
</dbReference>
<dbReference type="PDB" id="5JGU">
    <property type="method" value="X-ray"/>
    <property type="resolution" value="1.47 A"/>
    <property type="chains" value="A=1-164"/>
</dbReference>
<dbReference type="PDB" id="5JGV">
    <property type="method" value="X-ray"/>
    <property type="resolution" value="1.73 A"/>
    <property type="chains" value="A=1-164"/>
</dbReference>
<dbReference type="PDB" id="5JGX">
    <property type="method" value="X-ray"/>
    <property type="resolution" value="1.53 A"/>
    <property type="chains" value="A=1-164"/>
</dbReference>
<dbReference type="PDB" id="5JGZ">
    <property type="method" value="X-ray"/>
    <property type="resolution" value="1.53 A"/>
    <property type="chains" value="A=1-164"/>
</dbReference>
<dbReference type="PDB" id="5JQH">
    <property type="method" value="X-ray"/>
    <property type="resolution" value="3.20 A"/>
    <property type="chains" value="A/B=2-161"/>
</dbReference>
<dbReference type="PDB" id="5JWS">
    <property type="method" value="X-ray"/>
    <property type="resolution" value="1.65 A"/>
    <property type="chains" value="A=1-164"/>
</dbReference>
<dbReference type="PDB" id="5JWT">
    <property type="method" value="X-ray"/>
    <property type="resolution" value="1.41 A"/>
    <property type="chains" value="A=1-164"/>
</dbReference>
<dbReference type="PDB" id="5JWU">
    <property type="method" value="X-ray"/>
    <property type="resolution" value="1.70 A"/>
    <property type="chains" value="A=1-164"/>
</dbReference>
<dbReference type="PDB" id="5JWV">
    <property type="method" value="X-ray"/>
    <property type="resolution" value="1.30 A"/>
    <property type="chains" value="A=1-164"/>
</dbReference>
<dbReference type="PDB" id="5JWW">
    <property type="method" value="X-ray"/>
    <property type="resolution" value="1.47 A"/>
    <property type="chains" value="A=1-164"/>
</dbReference>
<dbReference type="PDB" id="5KGR">
    <property type="method" value="X-ray"/>
    <property type="resolution" value="1.47 A"/>
    <property type="chains" value="A=1-164"/>
</dbReference>
<dbReference type="PDB" id="5KHZ">
    <property type="method" value="X-ray"/>
    <property type="resolution" value="1.49 A"/>
    <property type="chains" value="A=1-164"/>
</dbReference>
<dbReference type="PDB" id="5KI1">
    <property type="method" value="X-ray"/>
    <property type="resolution" value="1.46 A"/>
    <property type="chains" value="A=1-164"/>
</dbReference>
<dbReference type="PDB" id="5KI2">
    <property type="method" value="X-ray"/>
    <property type="resolution" value="1.50 A"/>
    <property type="chains" value="A=1-164"/>
</dbReference>
<dbReference type="PDB" id="5KI3">
    <property type="method" value="X-ray"/>
    <property type="resolution" value="1.65 A"/>
    <property type="chains" value="A=1-164"/>
</dbReference>
<dbReference type="PDB" id="5KI8">
    <property type="method" value="X-ray"/>
    <property type="resolution" value="1.55 A"/>
    <property type="chains" value="A=1-164"/>
</dbReference>
<dbReference type="PDB" id="5KIG">
    <property type="method" value="X-ray"/>
    <property type="resolution" value="1.50 A"/>
    <property type="chains" value="A=1-164"/>
</dbReference>
<dbReference type="PDB" id="5KII">
    <property type="method" value="X-ray"/>
    <property type="resolution" value="1.56 A"/>
    <property type="chains" value="A=1-164"/>
</dbReference>
<dbReference type="PDB" id="5KIM">
    <property type="method" value="X-ray"/>
    <property type="resolution" value="1.50 A"/>
    <property type="chains" value="A=1-164"/>
</dbReference>
<dbReference type="PDB" id="5KIO">
    <property type="method" value="X-ray"/>
    <property type="resolution" value="1.63 A"/>
    <property type="chains" value="A=1-164"/>
</dbReference>
<dbReference type="PDB" id="5KW2">
    <property type="method" value="X-ray"/>
    <property type="resolution" value="2.76 A"/>
    <property type="chains" value="A=2-161"/>
</dbReference>
<dbReference type="PDB" id="5LWO">
    <property type="method" value="X-ray"/>
    <property type="resolution" value="1.18 A"/>
    <property type="chains" value="A=1-164"/>
</dbReference>
<dbReference type="PDB" id="5LZM">
    <property type="method" value="X-ray"/>
    <property type="resolution" value="1.80 A"/>
    <property type="chains" value="A=1-164"/>
</dbReference>
<dbReference type="PDB" id="5NDD">
    <property type="method" value="X-ray"/>
    <property type="resolution" value="2.80 A"/>
    <property type="chains" value="A=2-161"/>
</dbReference>
<dbReference type="PDB" id="5NDZ">
    <property type="method" value="X-ray"/>
    <property type="resolution" value="3.60 A"/>
    <property type="chains" value="A=2-161"/>
</dbReference>
<dbReference type="PDB" id="5T04">
    <property type="method" value="X-ray"/>
    <property type="resolution" value="3.30 A"/>
    <property type="chains" value="A=2-161"/>
</dbReference>
<dbReference type="PDB" id="5T1A">
    <property type="method" value="X-ray"/>
    <property type="resolution" value="2.81 A"/>
    <property type="chains" value="A=3-163"/>
</dbReference>
<dbReference type="PDB" id="5TZR">
    <property type="method" value="X-ray"/>
    <property type="resolution" value="2.20 A"/>
    <property type="chains" value="A=2-161"/>
</dbReference>
<dbReference type="PDB" id="5TZY">
    <property type="method" value="X-ray"/>
    <property type="resolution" value="3.22 A"/>
    <property type="chains" value="A=2-161"/>
</dbReference>
<dbReference type="PDB" id="5V7D">
    <property type="method" value="X-ray"/>
    <property type="resolution" value="1.35 A"/>
    <property type="chains" value="A=1-164"/>
</dbReference>
<dbReference type="PDB" id="5V7E">
    <property type="method" value="X-ray"/>
    <property type="resolution" value="1.36 A"/>
    <property type="chains" value="A=1-164"/>
</dbReference>
<dbReference type="PDB" id="5V7F">
    <property type="method" value="X-ray"/>
    <property type="resolution" value="1.65 A"/>
    <property type="chains" value="A=1-164"/>
</dbReference>
<dbReference type="PDB" id="5V83">
    <property type="method" value="X-ray"/>
    <property type="resolution" value="2.00 A"/>
    <property type="chains" value="A=1-164"/>
</dbReference>
<dbReference type="PDB" id="5V86">
    <property type="method" value="X-ray"/>
    <property type="resolution" value="1.37 A"/>
    <property type="chains" value="A=1-164"/>
</dbReference>
<dbReference type="PDB" id="5V88">
    <property type="method" value="X-ray"/>
    <property type="resolution" value="1.60 A"/>
    <property type="chains" value="A=1-164"/>
</dbReference>
<dbReference type="PDB" id="5VBA">
    <property type="method" value="X-ray"/>
    <property type="resolution" value="2.27 A"/>
    <property type="chains" value="A/B=2-162"/>
</dbReference>
<dbReference type="PDB" id="5VEW">
    <property type="method" value="X-ray"/>
    <property type="resolution" value="2.70 A"/>
    <property type="chains" value="A/B=5-161"/>
</dbReference>
<dbReference type="PDB" id="5VEX">
    <property type="method" value="X-ray"/>
    <property type="resolution" value="3.00 A"/>
    <property type="chains" value="A/B=5-161"/>
</dbReference>
<dbReference type="PDB" id="5VNQ">
    <property type="method" value="Neutron"/>
    <property type="resolution" value="2.20 A"/>
    <property type="chains" value="A=1-164"/>
</dbReference>
<dbReference type="PDB" id="5VNR">
    <property type="method" value="X-ray"/>
    <property type="resolution" value="1.63 A"/>
    <property type="chains" value="A=1-164"/>
</dbReference>
<dbReference type="PDB" id="5WF5">
    <property type="method" value="X-ray"/>
    <property type="resolution" value="2.60 A"/>
    <property type="chains" value="A=2-161"/>
</dbReference>
<dbReference type="PDB" id="5WF6">
    <property type="method" value="X-ray"/>
    <property type="resolution" value="2.90 A"/>
    <property type="chains" value="A=2-161"/>
</dbReference>
<dbReference type="PDB" id="5X7D">
    <property type="method" value="X-ray"/>
    <property type="resolution" value="2.70 A"/>
    <property type="chains" value="A=2-162"/>
</dbReference>
<dbReference type="PDB" id="5X93">
    <property type="method" value="X-ray"/>
    <property type="resolution" value="2.20 A"/>
    <property type="chains" value="A=61-161"/>
</dbReference>
<dbReference type="PDB" id="5XEZ">
    <property type="method" value="X-ray"/>
    <property type="resolution" value="3.00 A"/>
    <property type="chains" value="A/B=4-162"/>
</dbReference>
<dbReference type="PDB" id="5XF1">
    <property type="method" value="X-ray"/>
    <property type="resolution" value="3.19 A"/>
    <property type="chains" value="A/B=4-162"/>
</dbReference>
<dbReference type="PDB" id="5XPE">
    <property type="method" value="Other"/>
    <property type="resolution" value="1.65 A"/>
    <property type="chains" value="A=1-164"/>
</dbReference>
<dbReference type="PDB" id="5XPF">
    <property type="method" value="X-ray"/>
    <property type="resolution" value="1.04 A"/>
    <property type="chains" value="A=1-164"/>
</dbReference>
<dbReference type="PDB" id="5XPR">
    <property type="method" value="X-ray"/>
    <property type="resolution" value="3.60 A"/>
    <property type="chains" value="A=61-161"/>
</dbReference>
<dbReference type="PDB" id="5XSZ">
    <property type="method" value="X-ray"/>
    <property type="resolution" value="3.20 A"/>
    <property type="chains" value="A=2-161"/>
</dbReference>
<dbReference type="PDB" id="5YQR">
    <property type="method" value="X-ray"/>
    <property type="resolution" value="2.40 A"/>
    <property type="chains" value="A=2-161"/>
</dbReference>
<dbReference type="PDB" id="5YQZ">
    <property type="method" value="X-ray"/>
    <property type="resolution" value="3.00 A"/>
    <property type="chains" value="R=2-161"/>
</dbReference>
<dbReference type="PDB" id="5ZBH">
    <property type="method" value="X-ray"/>
    <property type="resolution" value="3.00 A"/>
    <property type="chains" value="A=3-161"/>
</dbReference>
<dbReference type="PDB" id="5ZBQ">
    <property type="method" value="X-ray"/>
    <property type="resolution" value="2.70 A"/>
    <property type="chains" value="A=1-161"/>
</dbReference>
<dbReference type="PDB" id="5ZHP">
    <property type="method" value="X-ray"/>
    <property type="resolution" value="3.10 A"/>
    <property type="chains" value="A/B=61-161"/>
</dbReference>
<dbReference type="PDB" id="6A73">
    <property type="method" value="X-ray"/>
    <property type="resolution" value="2.45 A"/>
    <property type="chains" value="A/B=2-164"/>
</dbReference>
<dbReference type="PDB" id="6A9E">
    <property type="method" value="X-ray"/>
    <property type="resolution" value="3.21 A"/>
    <property type="chains" value="A/B=1-161"/>
</dbReference>
<dbReference type="PDB" id="6A9J">
    <property type="method" value="X-ray"/>
    <property type="resolution" value="2.70 A"/>
    <property type="chains" value="A/B=1-161"/>
</dbReference>
<dbReference type="PDB" id="6BG3">
    <property type="method" value="X-ray"/>
    <property type="resolution" value="1.05 A"/>
    <property type="chains" value="A=1-164"/>
</dbReference>
<dbReference type="PDB" id="6BG5">
    <property type="method" value="X-ray"/>
    <property type="resolution" value="1.10 A"/>
    <property type="chains" value="A=1-164"/>
</dbReference>
<dbReference type="PDB" id="6CM4">
    <property type="method" value="X-ray"/>
    <property type="resolution" value="2.87 A"/>
    <property type="chains" value="A=2-162"/>
</dbReference>
<dbReference type="PDB" id="6D26">
    <property type="method" value="X-ray"/>
    <property type="resolution" value="2.80 A"/>
    <property type="chains" value="A=61-161"/>
</dbReference>
<dbReference type="PDB" id="6D27">
    <property type="method" value="X-ray"/>
    <property type="resolution" value="2.74 A"/>
    <property type="chains" value="A=61-161"/>
</dbReference>
<dbReference type="PDB" id="6D9M">
    <property type="method" value="X-ray"/>
    <property type="resolution" value="1.35 A"/>
    <property type="chains" value="A=1-161"/>
</dbReference>
<dbReference type="PDB" id="6FFH">
    <property type="method" value="X-ray"/>
    <property type="resolution" value="2.65 A"/>
    <property type="chains" value="A=2-162"/>
</dbReference>
<dbReference type="PDB" id="6FFI">
    <property type="method" value="X-ray"/>
    <property type="resolution" value="2.20 A"/>
    <property type="chains" value="A=2-162"/>
</dbReference>
<dbReference type="PDB" id="6IIH">
    <property type="method" value="X-ray"/>
    <property type="resolution" value="1.96 A"/>
    <property type="chains" value="A/B=1-161"/>
</dbReference>
<dbReference type="PDB" id="6J20">
    <property type="method" value="X-ray"/>
    <property type="resolution" value="2.70 A"/>
    <property type="chains" value="A=61-161"/>
</dbReference>
<dbReference type="PDB" id="6J21">
    <property type="method" value="X-ray"/>
    <property type="resolution" value="3.20 A"/>
    <property type="chains" value="A=61-161"/>
</dbReference>
<dbReference type="PDB" id="6K1Q">
    <property type="method" value="X-ray"/>
    <property type="resolution" value="2.70 A"/>
    <property type="chains" value="A=61-161"/>
</dbReference>
<dbReference type="PDB" id="6K69">
    <property type="method" value="X-ray"/>
    <property type="resolution" value="2.40 A"/>
    <property type="chains" value="B=1-164"/>
</dbReference>
<dbReference type="PDB" id="6KJV">
    <property type="method" value="X-ray"/>
    <property type="resolution" value="2.80 A"/>
    <property type="chains" value="A/B=2-161"/>
</dbReference>
<dbReference type="PDB" id="6KK1">
    <property type="method" value="X-ray"/>
    <property type="resolution" value="2.80 A"/>
    <property type="chains" value="A/B=2-161"/>
</dbReference>
<dbReference type="PDB" id="6KK7">
    <property type="method" value="X-ray"/>
    <property type="resolution" value="3.10 A"/>
    <property type="chains" value="A/B=2-161"/>
</dbReference>
<dbReference type="PDB" id="6KPC">
    <property type="method" value="X-ray"/>
    <property type="resolution" value="3.20 A"/>
    <property type="chains" value="A=2-161"/>
</dbReference>
<dbReference type="PDB" id="6LZM">
    <property type="method" value="X-ray"/>
    <property type="resolution" value="1.80 A"/>
    <property type="chains" value="A=1-164"/>
</dbReference>
<dbReference type="PDB" id="6M9T">
    <property type="method" value="X-ray"/>
    <property type="resolution" value="2.50 A"/>
    <property type="chains" value="A=2-161"/>
</dbReference>
<dbReference type="PDB" id="6MXT">
    <property type="method" value="X-ray"/>
    <property type="resolution" value="2.96 A"/>
    <property type="chains" value="A=2-161"/>
</dbReference>
<dbReference type="PDB" id="6QAJ">
    <property type="method" value="X-ray"/>
    <property type="resolution" value="2.90 A"/>
    <property type="chains" value="A/B=2-161"/>
</dbReference>
<dbReference type="PDB" id="6U0B">
    <property type="method" value="Other"/>
    <property type="resolution" value="1.95 A"/>
    <property type="chains" value="A=1-164"/>
</dbReference>
<dbReference type="PDB" id="6U0C">
    <property type="method" value="Other"/>
    <property type="resolution" value="2.00 A"/>
    <property type="chains" value="A=1-164"/>
</dbReference>
<dbReference type="PDB" id="6U0F">
    <property type="method" value="Other"/>
    <property type="resolution" value="2.05 A"/>
    <property type="chains" value="A=1-164"/>
</dbReference>
<dbReference type="PDB" id="6WSK">
    <property type="method" value="X-ray"/>
    <property type="resolution" value="1.55 A"/>
    <property type="chains" value="A=1-161"/>
</dbReference>
<dbReference type="PDB" id="6XYR">
    <property type="method" value="X-ray"/>
    <property type="resolution" value="2.08 A"/>
    <property type="chains" value="A=2-164"/>
</dbReference>
<dbReference type="PDB" id="6ZFZ">
    <property type="method" value="X-ray"/>
    <property type="resolution" value="2.17 A"/>
    <property type="chains" value="A=2-161"/>
</dbReference>
<dbReference type="PDB" id="6ZG4">
    <property type="method" value="X-ray"/>
    <property type="resolution" value="2.33 A"/>
    <property type="chains" value="A=2-161"/>
</dbReference>
<dbReference type="PDB" id="6ZG9">
    <property type="method" value="X-ray"/>
    <property type="resolution" value="2.50 A"/>
    <property type="chains" value="A=2-161"/>
</dbReference>
<dbReference type="PDB" id="6ZX9">
    <property type="method" value="X-ray"/>
    <property type="resolution" value="2.52 A"/>
    <property type="chains" value="C=2-164"/>
</dbReference>
<dbReference type="PDB" id="7DWS">
    <property type="method" value="X-ray"/>
    <property type="resolution" value="2.80 A"/>
    <property type="chains" value="A/B/C=1-162"/>
</dbReference>
<dbReference type="PDB" id="7F8U">
    <property type="method" value="X-ray"/>
    <property type="resolution" value="2.80 A"/>
    <property type="chains" value="A=2-161"/>
</dbReference>
<dbReference type="PDB" id="7F8X">
    <property type="method" value="X-ray"/>
    <property type="resolution" value="3.00 A"/>
    <property type="chains" value="A=2-161"/>
</dbReference>
<dbReference type="PDB" id="7F8Y">
    <property type="method" value="X-ray"/>
    <property type="resolution" value="2.50 A"/>
    <property type="chains" value="A=2-161"/>
</dbReference>
<dbReference type="PDB" id="7L37">
    <property type="method" value="X-ray"/>
    <property type="resolution" value="1.44 A"/>
    <property type="chains" value="A=1-164"/>
</dbReference>
<dbReference type="PDB" id="7L38">
    <property type="method" value="X-ray"/>
    <property type="resolution" value="1.33 A"/>
    <property type="chains" value="A=1-164"/>
</dbReference>
<dbReference type="PDB" id="7L39">
    <property type="method" value="X-ray"/>
    <property type="resolution" value="1.35 A"/>
    <property type="chains" value="A=1-164"/>
</dbReference>
<dbReference type="PDB" id="7L3A">
    <property type="method" value="X-ray"/>
    <property type="resolution" value="1.11 A"/>
    <property type="chains" value="A=1-164"/>
</dbReference>
<dbReference type="PDB" id="7L3B">
    <property type="method" value="X-ray"/>
    <property type="resolution" value="1.27 A"/>
    <property type="chains" value="A=1-164"/>
</dbReference>
<dbReference type="PDB" id="7L3C">
    <property type="method" value="X-ray"/>
    <property type="resolution" value="1.31 A"/>
    <property type="chains" value="A=1-164"/>
</dbReference>
<dbReference type="PDB" id="7L3D">
    <property type="method" value="X-ray"/>
    <property type="resolution" value="1.35 A"/>
    <property type="chains" value="A=1-164"/>
</dbReference>
<dbReference type="PDB" id="7L3E">
    <property type="method" value="X-ray"/>
    <property type="resolution" value="1.13 A"/>
    <property type="chains" value="A=1-164"/>
</dbReference>
<dbReference type="PDB" id="7L3F">
    <property type="method" value="X-ray"/>
    <property type="resolution" value="1.49 A"/>
    <property type="chains" value="A=1-164"/>
</dbReference>
<dbReference type="PDB" id="7L3G">
    <property type="method" value="X-ray"/>
    <property type="resolution" value="1.27 A"/>
    <property type="chains" value="A=1-164"/>
</dbReference>
<dbReference type="PDB" id="7L3H">
    <property type="method" value="X-ray"/>
    <property type="resolution" value="1.39 A"/>
    <property type="chains" value="A=1-164"/>
</dbReference>
<dbReference type="PDB" id="7L3I">
    <property type="method" value="X-ray"/>
    <property type="resolution" value="1.46 A"/>
    <property type="chains" value="A=1-164"/>
</dbReference>
<dbReference type="PDB" id="7L3J">
    <property type="method" value="X-ray"/>
    <property type="resolution" value="1.49 A"/>
    <property type="chains" value="A=1-164"/>
</dbReference>
<dbReference type="PDB" id="7L3K">
    <property type="method" value="X-ray"/>
    <property type="resolution" value="1.11 A"/>
    <property type="chains" value="A=1-164"/>
</dbReference>
<dbReference type="PDB" id="7LOA">
    <property type="method" value="X-ray"/>
    <property type="resolution" value="1.07 A"/>
    <property type="chains" value="A=1-164"/>
</dbReference>
<dbReference type="PDB" id="7LOB">
    <property type="method" value="X-ray"/>
    <property type="resolution" value="1.10 A"/>
    <property type="chains" value="A=1-164"/>
</dbReference>
<dbReference type="PDB" id="7LOC">
    <property type="method" value="X-ray"/>
    <property type="resolution" value="1.16 A"/>
    <property type="chains" value="A=1-164"/>
</dbReference>
<dbReference type="PDB" id="7LOD">
    <property type="method" value="X-ray"/>
    <property type="resolution" value="1.02 A"/>
    <property type="chains" value="A=1-164"/>
</dbReference>
<dbReference type="PDB" id="7LOE">
    <property type="method" value="X-ray"/>
    <property type="resolution" value="1.01 A"/>
    <property type="chains" value="A=1-164"/>
</dbReference>
<dbReference type="PDB" id="7LOF">
    <property type="method" value="X-ray"/>
    <property type="resolution" value="1.05 A"/>
    <property type="chains" value="A=1-164"/>
</dbReference>
<dbReference type="PDB" id="7LOJ">
    <property type="method" value="X-ray"/>
    <property type="resolution" value="1.50 A"/>
    <property type="chains" value="A=1-164"/>
</dbReference>
<dbReference type="PDB" id="7LX6">
    <property type="method" value="X-ray"/>
    <property type="resolution" value="1.05 A"/>
    <property type="chains" value="A=1-164"/>
</dbReference>
<dbReference type="PDB" id="7LX7">
    <property type="method" value="X-ray"/>
    <property type="resolution" value="1.05 A"/>
    <property type="chains" value="A=1-164"/>
</dbReference>
<dbReference type="PDB" id="7LX8">
    <property type="method" value="X-ray"/>
    <property type="resolution" value="1.03 A"/>
    <property type="chains" value="A=1-164"/>
</dbReference>
<dbReference type="PDB" id="7LX9">
    <property type="method" value="X-ray"/>
    <property type="resolution" value="1.19 A"/>
    <property type="chains" value="A=1-164"/>
</dbReference>
<dbReference type="PDB" id="7LZM">
    <property type="method" value="X-ray"/>
    <property type="resolution" value="1.80 A"/>
    <property type="chains" value="A=1-164"/>
</dbReference>
<dbReference type="PDB" id="7MI3">
    <property type="method" value="EM"/>
    <property type="resolution" value="3.50 A"/>
    <property type="chains" value="A=4-161"/>
</dbReference>
<dbReference type="PDB" id="7MI6">
    <property type="method" value="EM"/>
    <property type="resolution" value="3.90 A"/>
    <property type="chains" value="A=4-161"/>
</dbReference>
<dbReference type="PDB" id="7MI8">
    <property type="method" value="EM"/>
    <property type="resolution" value="3.70 A"/>
    <property type="chains" value="A=4-161"/>
</dbReference>
<dbReference type="PDB" id="7P2L">
    <property type="method" value="X-ray"/>
    <property type="resolution" value="2.54 A"/>
    <property type="chains" value="A=2-162"/>
</dbReference>
<dbReference type="PDB" id="7RX9">
    <property type="method" value="X-ray"/>
    <property type="resolution" value="3.22 A"/>
    <property type="chains" value="A=2-161"/>
</dbReference>
<dbReference type="PDB" id="7SJ6">
    <property type="method" value="X-ray"/>
    <property type="resolution" value="1.72 A"/>
    <property type="chains" value="A/B=1-164"/>
</dbReference>
<dbReference type="PDB" id="7XB5">
    <property type="method" value="X-ray"/>
    <property type="resolution" value="3.44 A"/>
    <property type="chains" value="A=2-161"/>
</dbReference>
<dbReference type="PDB" id="7XK9">
    <property type="method" value="X-ray"/>
    <property type="resolution" value="3.40 A"/>
    <property type="chains" value="A=2-161"/>
</dbReference>
<dbReference type="PDB" id="7XKA">
    <property type="method" value="X-ray"/>
    <property type="resolution" value="3.10 A"/>
    <property type="chains" value="A=2-161"/>
</dbReference>
<dbReference type="PDB" id="7Z36">
    <property type="method" value="X-ray"/>
    <property type="resolution" value="2.80 A"/>
    <property type="chains" value="A/B=2-161"/>
</dbReference>
<dbReference type="PDB" id="8A5X">
    <property type="method" value="X-ray"/>
    <property type="resolution" value="2.40 A"/>
    <property type="chains" value="A=2-164"/>
</dbReference>
<dbReference type="PDB" id="8DCR">
    <property type="method" value="EM"/>
    <property type="resolution" value="2.60 A"/>
    <property type="chains" value="R=2-161"/>
</dbReference>
<dbReference type="PDB" id="8DCS">
    <property type="method" value="EM"/>
    <property type="resolution" value="2.50 A"/>
    <property type="chains" value="R=2-161"/>
</dbReference>
<dbReference type="PDB" id="8EIT">
    <property type="method" value="EM"/>
    <property type="resolution" value="2.80 A"/>
    <property type="chains" value="R=2-161"/>
</dbReference>
<dbReference type="PDB" id="8THK">
    <property type="method" value="EM"/>
    <property type="resolution" value="2.60 A"/>
    <property type="chains" value="R=2-161"/>
</dbReference>
<dbReference type="PDB" id="8THL">
    <property type="method" value="EM"/>
    <property type="resolution" value="3.10 A"/>
    <property type="chains" value="R=2-161"/>
</dbReference>
<dbReference type="PDB" id="8UGW">
    <property type="method" value="X-ray"/>
    <property type="resolution" value="3.90 A"/>
    <property type="chains" value="A=60-164"/>
</dbReference>
<dbReference type="PDB" id="8W1V">
    <property type="method" value="X-ray"/>
    <property type="resolution" value="3.00 A"/>
    <property type="chains" value="A/B=2-161"/>
</dbReference>
<dbReference type="PDB" id="8YIC">
    <property type="method" value="EM"/>
    <property type="resolution" value="3.47 A"/>
    <property type="chains" value="R=2-161"/>
</dbReference>
<dbReference type="PDB" id="9CBL">
    <property type="method" value="EM"/>
    <property type="resolution" value="2.80 A"/>
    <property type="chains" value="R=2-161"/>
</dbReference>
<dbReference type="PDB" id="9CBM">
    <property type="method" value="EM"/>
    <property type="resolution" value="3.20 A"/>
    <property type="chains" value="R=2-161"/>
</dbReference>
<dbReference type="PDBsum" id="102L"/>
<dbReference type="PDBsum" id="103L"/>
<dbReference type="PDBsum" id="104L"/>
<dbReference type="PDBsum" id="107L"/>
<dbReference type="PDBsum" id="108L"/>
<dbReference type="PDBsum" id="109L"/>
<dbReference type="PDBsum" id="110L"/>
<dbReference type="PDBsum" id="111L"/>
<dbReference type="PDBsum" id="112L"/>
<dbReference type="PDBsum" id="113L"/>
<dbReference type="PDBsum" id="114L"/>
<dbReference type="PDBsum" id="115L"/>
<dbReference type="PDBsum" id="118L"/>
<dbReference type="PDBsum" id="119L"/>
<dbReference type="PDBsum" id="120L"/>
<dbReference type="PDBsum" id="122L"/>
<dbReference type="PDBsum" id="123L"/>
<dbReference type="PDBsum" id="125L"/>
<dbReference type="PDBsum" id="126L"/>
<dbReference type="PDBsum" id="127L"/>
<dbReference type="PDBsum" id="128L"/>
<dbReference type="PDBsum" id="129L"/>
<dbReference type="PDBsum" id="130L"/>
<dbReference type="PDBsum" id="131L"/>
<dbReference type="PDBsum" id="137L"/>
<dbReference type="PDBsum" id="138L"/>
<dbReference type="PDBsum" id="139L"/>
<dbReference type="PDBsum" id="140L"/>
<dbReference type="PDBsum" id="141L"/>
<dbReference type="PDBsum" id="142L"/>
<dbReference type="PDBsum" id="143L"/>
<dbReference type="PDBsum" id="144L"/>
<dbReference type="PDBsum" id="145L"/>
<dbReference type="PDBsum" id="146L"/>
<dbReference type="PDBsum" id="147L"/>
<dbReference type="PDBsum" id="148L"/>
<dbReference type="PDBsum" id="149L"/>
<dbReference type="PDBsum" id="150L"/>
<dbReference type="PDBsum" id="151L"/>
<dbReference type="PDBsum" id="152L"/>
<dbReference type="PDBsum" id="155L"/>
<dbReference type="PDBsum" id="156L"/>
<dbReference type="PDBsum" id="157L"/>
<dbReference type="PDBsum" id="158L"/>
<dbReference type="PDBsum" id="159L"/>
<dbReference type="PDBsum" id="160L"/>
<dbReference type="PDBsum" id="161L"/>
<dbReference type="PDBsum" id="162L"/>
<dbReference type="PDBsum" id="163L"/>
<dbReference type="PDBsum" id="164L"/>
<dbReference type="PDBsum" id="165L"/>
<dbReference type="PDBsum" id="166L"/>
<dbReference type="PDBsum" id="167L"/>
<dbReference type="PDBsum" id="168L"/>
<dbReference type="PDBsum" id="169L"/>
<dbReference type="PDBsum" id="170L"/>
<dbReference type="PDBsum" id="171L"/>
<dbReference type="PDBsum" id="172L"/>
<dbReference type="PDBsum" id="173L"/>
<dbReference type="PDBsum" id="174L"/>
<dbReference type="PDBsum" id="175L"/>
<dbReference type="PDBsum" id="176L"/>
<dbReference type="PDBsum" id="177L"/>
<dbReference type="PDBsum" id="178L"/>
<dbReference type="PDBsum" id="180L"/>
<dbReference type="PDBsum" id="181L"/>
<dbReference type="PDBsum" id="182L"/>
<dbReference type="PDBsum" id="183L"/>
<dbReference type="PDBsum" id="184L"/>
<dbReference type="PDBsum" id="185L"/>
<dbReference type="PDBsum" id="186L"/>
<dbReference type="PDBsum" id="187L"/>
<dbReference type="PDBsum" id="188L"/>
<dbReference type="PDBsum" id="189L"/>
<dbReference type="PDBsum" id="190L"/>
<dbReference type="PDBsum" id="191L"/>
<dbReference type="PDBsum" id="192L"/>
<dbReference type="PDBsum" id="195L"/>
<dbReference type="PDBsum" id="196L"/>
<dbReference type="PDBsum" id="197L"/>
<dbReference type="PDBsum" id="198L"/>
<dbReference type="PDBsum" id="199L"/>
<dbReference type="PDBsum" id="1B6I"/>
<dbReference type="PDBsum" id="1C60"/>
<dbReference type="PDBsum" id="1C61"/>
<dbReference type="PDBsum" id="1C62"/>
<dbReference type="PDBsum" id="1C63"/>
<dbReference type="PDBsum" id="1C64"/>
<dbReference type="PDBsum" id="1C65"/>
<dbReference type="PDBsum" id="1C66"/>
<dbReference type="PDBsum" id="1C67"/>
<dbReference type="PDBsum" id="1C68"/>
<dbReference type="PDBsum" id="1C69"/>
<dbReference type="PDBsum" id="1C6A"/>
<dbReference type="PDBsum" id="1C6B"/>
<dbReference type="PDBsum" id="1C6C"/>
<dbReference type="PDBsum" id="1C6D"/>
<dbReference type="PDBsum" id="1C6E"/>
<dbReference type="PDBsum" id="1C6F"/>
<dbReference type="PDBsum" id="1C6G"/>
<dbReference type="PDBsum" id="1C6H"/>
<dbReference type="PDBsum" id="1C6I"/>
<dbReference type="PDBsum" id="1C6J"/>
<dbReference type="PDBsum" id="1C6K"/>
<dbReference type="PDBsum" id="1C6L"/>
<dbReference type="PDBsum" id="1C6M"/>
<dbReference type="PDBsum" id="1C6N"/>
<dbReference type="PDBsum" id="1C6P"/>
<dbReference type="PDBsum" id="1C6Q"/>
<dbReference type="PDBsum" id="1C6T"/>
<dbReference type="PDBsum" id="1CTW"/>
<dbReference type="PDBsum" id="1CU0"/>
<dbReference type="PDBsum" id="1CU2"/>
<dbReference type="PDBsum" id="1CU3"/>
<dbReference type="PDBsum" id="1CU5"/>
<dbReference type="PDBsum" id="1CU6"/>
<dbReference type="PDBsum" id="1CUP"/>
<dbReference type="PDBsum" id="1CUQ"/>
<dbReference type="PDBsum" id="1CV0"/>
<dbReference type="PDBsum" id="1CV1"/>
<dbReference type="PDBsum" id="1CV3"/>
<dbReference type="PDBsum" id="1CV4"/>
<dbReference type="PDBsum" id="1CV5"/>
<dbReference type="PDBsum" id="1CV6"/>
<dbReference type="PDBsum" id="1CVK"/>
<dbReference type="PDBsum" id="1CX6"/>
<dbReference type="PDBsum" id="1CX7"/>
<dbReference type="PDBsum" id="1D2W"/>
<dbReference type="PDBsum" id="1D2Y"/>
<dbReference type="PDBsum" id="1D3F"/>
<dbReference type="PDBsum" id="1D3J"/>
<dbReference type="PDBsum" id="1D3M"/>
<dbReference type="PDBsum" id="1D3N"/>
<dbReference type="PDBsum" id="1D9W"/>
<dbReference type="PDBsum" id="1DYA"/>
<dbReference type="PDBsum" id="1DYB"/>
<dbReference type="PDBsum" id="1DYC"/>
<dbReference type="PDBsum" id="1DYD"/>
<dbReference type="PDBsum" id="1DYE"/>
<dbReference type="PDBsum" id="1DYF"/>
<dbReference type="PDBsum" id="1DYG"/>
<dbReference type="PDBsum" id="1EPY"/>
<dbReference type="PDBsum" id="1G06"/>
<dbReference type="PDBsum" id="1G07"/>
<dbReference type="PDBsum" id="1G0G"/>
<dbReference type="PDBsum" id="1G0J"/>
<dbReference type="PDBsum" id="1G0K"/>
<dbReference type="PDBsum" id="1G0L"/>
<dbReference type="PDBsum" id="1G0M"/>
<dbReference type="PDBsum" id="1G0P"/>
<dbReference type="PDBsum" id="1G0Q"/>
<dbReference type="PDBsum" id="1G1V"/>
<dbReference type="PDBsum" id="1G1W"/>
<dbReference type="PDBsum" id="1I6S"/>
<dbReference type="PDBsum" id="1JQU"/>
<dbReference type="PDBsum" id="1JTM"/>
<dbReference type="PDBsum" id="1JTN"/>
<dbReference type="PDBsum" id="1KNI"/>
<dbReference type="PDBsum" id="1KS3"/>
<dbReference type="PDBsum" id="1KW5"/>
<dbReference type="PDBsum" id="1KW7"/>
<dbReference type="PDBsum" id="1KY0"/>
<dbReference type="PDBsum" id="1KY1"/>
<dbReference type="PDBsum" id="1L00"/>
<dbReference type="PDBsum" id="1L01"/>
<dbReference type="PDBsum" id="1L02"/>
<dbReference type="PDBsum" id="1L03"/>
<dbReference type="PDBsum" id="1L04"/>
<dbReference type="PDBsum" id="1L05"/>
<dbReference type="PDBsum" id="1L06"/>
<dbReference type="PDBsum" id="1L07"/>
<dbReference type="PDBsum" id="1L08"/>
<dbReference type="PDBsum" id="1L09"/>
<dbReference type="PDBsum" id="1L0J"/>
<dbReference type="PDBsum" id="1L0K"/>
<dbReference type="PDBsum" id="1L10"/>
<dbReference type="PDBsum" id="1L11"/>
<dbReference type="PDBsum" id="1L12"/>
<dbReference type="PDBsum" id="1L13"/>
<dbReference type="PDBsum" id="1L14"/>
<dbReference type="PDBsum" id="1L15"/>
<dbReference type="PDBsum" id="1L16"/>
<dbReference type="PDBsum" id="1L17"/>
<dbReference type="PDBsum" id="1L18"/>
<dbReference type="PDBsum" id="1L19"/>
<dbReference type="PDBsum" id="1L20"/>
<dbReference type="PDBsum" id="1L21"/>
<dbReference type="PDBsum" id="1L22"/>
<dbReference type="PDBsum" id="1L23"/>
<dbReference type="PDBsum" id="1L24"/>
<dbReference type="PDBsum" id="1L25"/>
<dbReference type="PDBsum" id="1L26"/>
<dbReference type="PDBsum" id="1L27"/>
<dbReference type="PDBsum" id="1L28"/>
<dbReference type="PDBsum" id="1L29"/>
<dbReference type="PDBsum" id="1L30"/>
<dbReference type="PDBsum" id="1L31"/>
<dbReference type="PDBsum" id="1L32"/>
<dbReference type="PDBsum" id="1L33"/>
<dbReference type="PDBsum" id="1L34"/>
<dbReference type="PDBsum" id="1L35"/>
<dbReference type="PDBsum" id="1L36"/>
<dbReference type="PDBsum" id="1L37"/>
<dbReference type="PDBsum" id="1L38"/>
<dbReference type="PDBsum" id="1L39"/>
<dbReference type="PDBsum" id="1L40"/>
<dbReference type="PDBsum" id="1L41"/>
<dbReference type="PDBsum" id="1L42"/>
<dbReference type="PDBsum" id="1L43"/>
<dbReference type="PDBsum" id="1L44"/>
<dbReference type="PDBsum" id="1L45"/>
<dbReference type="PDBsum" id="1L46"/>
<dbReference type="PDBsum" id="1L47"/>
<dbReference type="PDBsum" id="1L48"/>
<dbReference type="PDBsum" id="1L49"/>
<dbReference type="PDBsum" id="1L50"/>
<dbReference type="PDBsum" id="1L51"/>
<dbReference type="PDBsum" id="1L52"/>
<dbReference type="PDBsum" id="1L53"/>
<dbReference type="PDBsum" id="1L54"/>
<dbReference type="PDBsum" id="1L55"/>
<dbReference type="PDBsum" id="1L56"/>
<dbReference type="PDBsum" id="1L57"/>
<dbReference type="PDBsum" id="1L58"/>
<dbReference type="PDBsum" id="1L59"/>
<dbReference type="PDBsum" id="1L60"/>
<dbReference type="PDBsum" id="1L61"/>
<dbReference type="PDBsum" id="1L62"/>
<dbReference type="PDBsum" id="1L63"/>
<dbReference type="PDBsum" id="1L64"/>
<dbReference type="PDBsum" id="1L65"/>
<dbReference type="PDBsum" id="1L66"/>
<dbReference type="PDBsum" id="1L67"/>
<dbReference type="PDBsum" id="1L68"/>
<dbReference type="PDBsum" id="1L69"/>
<dbReference type="PDBsum" id="1L70"/>
<dbReference type="PDBsum" id="1L71"/>
<dbReference type="PDBsum" id="1L72"/>
<dbReference type="PDBsum" id="1L73"/>
<dbReference type="PDBsum" id="1L74"/>
<dbReference type="PDBsum" id="1L75"/>
<dbReference type="PDBsum" id="1L76"/>
<dbReference type="PDBsum" id="1L77"/>
<dbReference type="PDBsum" id="1L79"/>
<dbReference type="PDBsum" id="1L80"/>
<dbReference type="PDBsum" id="1L81"/>
<dbReference type="PDBsum" id="1L82"/>
<dbReference type="PDBsum" id="1L83"/>
<dbReference type="PDBsum" id="1L84"/>
<dbReference type="PDBsum" id="1L85"/>
<dbReference type="PDBsum" id="1L86"/>
<dbReference type="PDBsum" id="1L87"/>
<dbReference type="PDBsum" id="1L88"/>
<dbReference type="PDBsum" id="1L89"/>
<dbReference type="PDBsum" id="1L90"/>
<dbReference type="PDBsum" id="1L91"/>
<dbReference type="PDBsum" id="1L92"/>
<dbReference type="PDBsum" id="1L93"/>
<dbReference type="PDBsum" id="1L94"/>
<dbReference type="PDBsum" id="1L95"/>
<dbReference type="PDBsum" id="1L96"/>
<dbReference type="PDBsum" id="1L97"/>
<dbReference type="PDBsum" id="1L98"/>
<dbReference type="PDBsum" id="1L99"/>
<dbReference type="PDBsum" id="1LGU"/>
<dbReference type="PDBsum" id="1LGW"/>
<dbReference type="PDBsum" id="1LGX"/>
<dbReference type="PDBsum" id="1LI2"/>
<dbReference type="PDBsum" id="1LI3"/>
<dbReference type="PDBsum" id="1LI6"/>
<dbReference type="PDBsum" id="1LLH"/>
<dbReference type="PDBsum" id="1LPY"/>
<dbReference type="PDBsum" id="1LW9"/>
<dbReference type="PDBsum" id="1LWG"/>
<dbReference type="PDBsum" id="1LWK"/>
<dbReference type="PDBsum" id="1LYD"/>
<dbReference type="PDBsum" id="1LYE"/>
<dbReference type="PDBsum" id="1LYF"/>
<dbReference type="PDBsum" id="1LYG"/>
<dbReference type="PDBsum" id="1LYH"/>
<dbReference type="PDBsum" id="1LYI"/>
<dbReference type="PDBsum" id="1LYJ"/>
<dbReference type="PDBsum" id="1NHB"/>
<dbReference type="PDBsum" id="1OV5"/>
<dbReference type="PDBsum" id="1OV7"/>
<dbReference type="PDBsum" id="1OVH"/>
<dbReference type="PDBsum" id="1OVJ"/>
<dbReference type="PDBsum" id="1OVK"/>
<dbReference type="PDBsum" id="1OWY"/>
<dbReference type="PDBsum" id="1OWZ"/>
<dbReference type="PDBsum" id="1OYU"/>
<dbReference type="PDBsum" id="1P2L"/>
<dbReference type="PDBsum" id="1P2R"/>
<dbReference type="PDBsum" id="1P36"/>
<dbReference type="PDBsum" id="1P37"/>
<dbReference type="PDBsum" id="1P3N"/>
<dbReference type="PDBsum" id="1P46"/>
<dbReference type="PDBsum" id="1P56"/>
<dbReference type="PDBsum" id="1P5C"/>
<dbReference type="PDBsum" id="1P64"/>
<dbReference type="PDBsum" id="1P6Y"/>
<dbReference type="PDBsum" id="1P7S"/>
<dbReference type="PDBsum" id="1PQD"/>
<dbReference type="PDBsum" id="1PQI"/>
<dbReference type="PDBsum" id="1PQJ"/>
<dbReference type="PDBsum" id="1PQK"/>
<dbReference type="PDBsum" id="1PQM"/>
<dbReference type="PDBsum" id="1PQO"/>
<dbReference type="PDBsum" id="1QS5"/>
<dbReference type="PDBsum" id="1QS9"/>
<dbReference type="PDBsum" id="1QSB"/>
<dbReference type="PDBsum" id="1QSQ"/>
<dbReference type="PDBsum" id="1QT3"/>
<dbReference type="PDBsum" id="1QT4"/>
<dbReference type="PDBsum" id="1QT5"/>
<dbReference type="PDBsum" id="1QT6"/>
<dbReference type="PDBsum" id="1QT7"/>
<dbReference type="PDBsum" id="1QT8"/>
<dbReference type="PDBsum" id="1QTB"/>
<dbReference type="PDBsum" id="1QTC"/>
<dbReference type="PDBsum" id="1QTD"/>
<dbReference type="PDBsum" id="1QTH"/>
<dbReference type="PDBsum" id="1QTV"/>
<dbReference type="PDBsum" id="1QTZ"/>
<dbReference type="PDBsum" id="1QUD"/>
<dbReference type="PDBsum" id="1QUG"/>
<dbReference type="PDBsum" id="1QUH"/>
<dbReference type="PDBsum" id="1QUO"/>
<dbReference type="PDBsum" id="1SSW"/>
<dbReference type="PDBsum" id="1SSY"/>
<dbReference type="PDBsum" id="1SWY"/>
<dbReference type="PDBsum" id="1SWZ"/>
<dbReference type="PDBsum" id="1SX2"/>
<dbReference type="PDBsum" id="1SX7"/>
<dbReference type="PDBsum" id="1T6H"/>
<dbReference type="PDBsum" id="1T8A"/>
<dbReference type="PDBsum" id="1T8F"/>
<dbReference type="PDBsum" id="1T8G"/>
<dbReference type="PDBsum" id="1T97"/>
<dbReference type="PDBsum" id="1TLA"/>
<dbReference type="PDBsum" id="1XEP"/>
<dbReference type="PDBsum" id="1ZUR"/>
<dbReference type="PDBsum" id="1ZWN"/>
<dbReference type="PDBsum" id="1ZYT"/>
<dbReference type="PDBsum" id="200L"/>
<dbReference type="PDBsum" id="201L"/>
<dbReference type="PDBsum" id="205L"/>
<dbReference type="PDBsum" id="206L"/>
<dbReference type="PDBsum" id="209L"/>
<dbReference type="PDBsum" id="210L"/>
<dbReference type="PDBsum" id="211L"/>
<dbReference type="PDBsum" id="212L"/>
<dbReference type="PDBsum" id="213L"/>
<dbReference type="PDBsum" id="214L"/>
<dbReference type="PDBsum" id="215L"/>
<dbReference type="PDBsum" id="216L"/>
<dbReference type="PDBsum" id="217L"/>
<dbReference type="PDBsum" id="218L"/>
<dbReference type="PDBsum" id="219L"/>
<dbReference type="PDBsum" id="220L"/>
<dbReference type="PDBsum" id="221L"/>
<dbReference type="PDBsum" id="222L"/>
<dbReference type="PDBsum" id="223L"/>
<dbReference type="PDBsum" id="224L"/>
<dbReference type="PDBsum" id="225L"/>
<dbReference type="PDBsum" id="226L"/>
<dbReference type="PDBsum" id="227L"/>
<dbReference type="PDBsum" id="228L"/>
<dbReference type="PDBsum" id="229L"/>
<dbReference type="PDBsum" id="230L"/>
<dbReference type="PDBsum" id="231L"/>
<dbReference type="PDBsum" id="232L"/>
<dbReference type="PDBsum" id="233L"/>
<dbReference type="PDBsum" id="234L"/>
<dbReference type="PDBsum" id="235L"/>
<dbReference type="PDBsum" id="236L"/>
<dbReference type="PDBsum" id="237L"/>
<dbReference type="PDBsum" id="238L"/>
<dbReference type="PDBsum" id="239L"/>
<dbReference type="PDBsum" id="240L"/>
<dbReference type="PDBsum" id="241L"/>
<dbReference type="PDBsum" id="242L"/>
<dbReference type="PDBsum" id="243L"/>
<dbReference type="PDBsum" id="244L"/>
<dbReference type="PDBsum" id="245L"/>
<dbReference type="PDBsum" id="246L"/>
<dbReference type="PDBsum" id="247L"/>
<dbReference type="PDBsum" id="248L"/>
<dbReference type="PDBsum" id="249L"/>
<dbReference type="PDBsum" id="250L"/>
<dbReference type="PDBsum" id="251L"/>
<dbReference type="PDBsum" id="252L"/>
<dbReference type="PDBsum" id="253L"/>
<dbReference type="PDBsum" id="254L"/>
<dbReference type="PDBsum" id="255L"/>
<dbReference type="PDBsum" id="256L"/>
<dbReference type="PDBsum" id="257L"/>
<dbReference type="PDBsum" id="258L"/>
<dbReference type="PDBsum" id="259L"/>
<dbReference type="PDBsum" id="260L"/>
<dbReference type="PDBsum" id="261L"/>
<dbReference type="PDBsum" id="262L"/>
<dbReference type="PDBsum" id="2A4T"/>
<dbReference type="PDBsum" id="2B6T"/>
<dbReference type="PDBsum" id="2B6W"/>
<dbReference type="PDBsum" id="2B6X"/>
<dbReference type="PDBsum" id="2B6Y"/>
<dbReference type="PDBsum" id="2B6Z"/>
<dbReference type="PDBsum" id="2B70"/>
<dbReference type="PDBsum" id="2B72"/>
<dbReference type="PDBsum" id="2B73"/>
<dbReference type="PDBsum" id="2B74"/>
<dbReference type="PDBsum" id="2B75"/>
<dbReference type="PDBsum" id="2B7X"/>
<dbReference type="PDBsum" id="2CUU"/>
<dbReference type="PDBsum" id="2F2Q"/>
<dbReference type="PDBsum" id="2F32"/>
<dbReference type="PDBsum" id="2F47"/>
<dbReference type="PDBsum" id="2HUK"/>
<dbReference type="PDBsum" id="2HUL"/>
<dbReference type="PDBsum" id="2HUM"/>
<dbReference type="PDBsum" id="2IGC"/>
<dbReference type="PDBsum" id="2L78"/>
<dbReference type="PDBsum" id="2LC9"/>
<dbReference type="PDBsum" id="2LCB"/>
<dbReference type="PDBsum" id="2LZM"/>
<dbReference type="PDBsum" id="2NTG"/>
<dbReference type="PDBsum" id="2NTH"/>
<dbReference type="PDBsum" id="2O4W"/>
<dbReference type="PDBsum" id="2O79"/>
<dbReference type="PDBsum" id="2O7A"/>
<dbReference type="PDBsum" id="2OE4"/>
<dbReference type="PDBsum" id="2OE7"/>
<dbReference type="PDBsum" id="2OE9"/>
<dbReference type="PDBsum" id="2OEA"/>
<dbReference type="PDBsum" id="2OTY"/>
<dbReference type="PDBsum" id="2OTZ"/>
<dbReference type="PDBsum" id="2OU0"/>
<dbReference type="PDBsum" id="2OU8"/>
<dbReference type="PDBsum" id="2OU9"/>
<dbReference type="PDBsum" id="2Q9D"/>
<dbReference type="PDBsum" id="2Q9E"/>
<dbReference type="PDBsum" id="2QAR"/>
<dbReference type="PDBsum" id="2QB0"/>
<dbReference type="PDBsum" id="2RAY"/>
<dbReference type="PDBsum" id="2RAZ"/>
<dbReference type="PDBsum" id="2RB0"/>
<dbReference type="PDBsum" id="2RB1"/>
<dbReference type="PDBsum" id="2RB2"/>
<dbReference type="PDBsum" id="2RBN"/>
<dbReference type="PDBsum" id="2RBO"/>
<dbReference type="PDBsum" id="2RBP"/>
<dbReference type="PDBsum" id="2RBQ"/>
<dbReference type="PDBsum" id="2RBR"/>
<dbReference type="PDBsum" id="2RBS"/>
<dbReference type="PDBsum" id="2RH1"/>
<dbReference type="PDBsum" id="3C7W"/>
<dbReference type="PDBsum" id="3C7Y"/>
<dbReference type="PDBsum" id="3C7Z"/>
<dbReference type="PDBsum" id="3C80"/>
<dbReference type="PDBsum" id="3C81"/>
<dbReference type="PDBsum" id="3C82"/>
<dbReference type="PDBsum" id="3C83"/>
<dbReference type="PDBsum" id="3C8Q"/>
<dbReference type="PDBsum" id="3C8R"/>
<dbReference type="PDBsum" id="3C8S"/>
<dbReference type="PDBsum" id="3CDO"/>
<dbReference type="PDBsum" id="3CDQ"/>
<dbReference type="PDBsum" id="3CDR"/>
<dbReference type="PDBsum" id="3CDT"/>
<dbReference type="PDBsum" id="3CDV"/>
<dbReference type="PDBsum" id="3D4S"/>
<dbReference type="PDBsum" id="3DKE"/>
<dbReference type="PDBsum" id="3DMV"/>
<dbReference type="PDBsum" id="3DMX"/>
<dbReference type="PDBsum" id="3DMZ"/>
<dbReference type="PDBsum" id="3DN0"/>
<dbReference type="PDBsum" id="3DN1"/>
<dbReference type="PDBsum" id="3DN2"/>
<dbReference type="PDBsum" id="3DN3"/>
<dbReference type="PDBsum" id="3DN4"/>
<dbReference type="PDBsum" id="3DN6"/>
<dbReference type="PDBsum" id="3DN8"/>
<dbReference type="PDBsum" id="3DNA"/>
<dbReference type="PDBsum" id="3EML"/>
<dbReference type="PDBsum" id="3F8V"/>
<dbReference type="PDBsum" id="3F9L"/>
<dbReference type="PDBsum" id="3FA0"/>
<dbReference type="PDBsum" id="3FAD"/>
<dbReference type="PDBsum" id="3FI5"/>
<dbReference type="PDBsum" id="3G3V"/>
<dbReference type="PDBsum" id="3G3W"/>
<dbReference type="PDBsum" id="3G3X"/>
<dbReference type="PDBsum" id="3GUI"/>
<dbReference type="PDBsum" id="3GUJ"/>
<dbReference type="PDBsum" id="3GUK"/>
<dbReference type="PDBsum" id="3GUL"/>
<dbReference type="PDBsum" id="3GUM"/>
<dbReference type="PDBsum" id="3GUN"/>
<dbReference type="PDBsum" id="3GUO"/>
<dbReference type="PDBsum" id="3GUP"/>
<dbReference type="PDBsum" id="3HH3"/>
<dbReference type="PDBsum" id="3HH4"/>
<dbReference type="PDBsum" id="3HH5"/>
<dbReference type="PDBsum" id="3HH6"/>
<dbReference type="PDBsum" id="3HT6"/>
<dbReference type="PDBsum" id="3HT7"/>
<dbReference type="PDBsum" id="3HT8"/>
<dbReference type="PDBsum" id="3HT9"/>
<dbReference type="PDBsum" id="3HTB"/>
<dbReference type="PDBsum" id="3HTD"/>
<dbReference type="PDBsum" id="3HTF"/>
<dbReference type="PDBsum" id="3HTG"/>
<dbReference type="PDBsum" id="3HU8"/>
<dbReference type="PDBsum" id="3HU9"/>
<dbReference type="PDBsum" id="3HUA"/>
<dbReference type="PDBsum" id="3HUK"/>
<dbReference type="PDBsum" id="3HUQ"/>
<dbReference type="PDBsum" id="3HWL"/>
<dbReference type="PDBsum" id="3JR6"/>
<dbReference type="PDBsum" id="3K2R"/>
<dbReference type="PDBsum" id="3L2X"/>
<dbReference type="PDBsum" id="3L64"/>
<dbReference type="PDBsum" id="3LZM"/>
<dbReference type="PDBsum" id="3NY8"/>
<dbReference type="PDBsum" id="3NY9"/>
<dbReference type="PDBsum" id="3NYA"/>
<dbReference type="PDBsum" id="3ODU"/>
<dbReference type="PDBsum" id="3OE0"/>
<dbReference type="PDBsum" id="3OE6"/>
<dbReference type="PDBsum" id="3OE8"/>
<dbReference type="PDBsum" id="3OE9"/>
<dbReference type="PDBsum" id="3P0G"/>
<dbReference type="PDBsum" id="3PBL"/>
<dbReference type="PDBsum" id="3PDS"/>
<dbReference type="PDBsum" id="3QAK"/>
<dbReference type="PDBsum" id="3RUN"/>
<dbReference type="PDBsum" id="3RZE"/>
<dbReference type="PDBsum" id="3SB5"/>
<dbReference type="PDBsum" id="3SB6"/>
<dbReference type="PDBsum" id="3SB7"/>
<dbReference type="PDBsum" id="3SB8"/>
<dbReference type="PDBsum" id="3SB9"/>
<dbReference type="PDBsum" id="3SBA"/>
<dbReference type="PDBsum" id="3SBB"/>
<dbReference type="PDBsum" id="3SN6"/>
<dbReference type="PDBsum" id="3UON"/>
<dbReference type="PDBsum" id="3V2W"/>
<dbReference type="PDBsum" id="3V2Y"/>
<dbReference type="PDBsum" id="3VW7"/>
<dbReference type="PDBsum" id="4ARJ"/>
<dbReference type="PDBsum" id="4DAJ"/>
<dbReference type="PDBsum" id="4DJH"/>
<dbReference type="PDBsum" id="4DKL"/>
<dbReference type="PDBsum" id="4E97"/>
<dbReference type="PDBsum" id="4EJ4"/>
<dbReference type="PDBsum" id="4EKP"/>
<dbReference type="PDBsum" id="4EKQ"/>
<dbReference type="PDBsum" id="4EKR"/>
<dbReference type="PDBsum" id="4EKS"/>
<dbReference type="PDBsum" id="4EPI"/>
<dbReference type="PDBsum" id="4EXM"/>
<dbReference type="PDBsum" id="4GBR"/>
<dbReference type="PDBsum" id="4GRV"/>
<dbReference type="PDBsum" id="4HTT"/>
<dbReference type="PDBsum" id="4I7J"/>
<dbReference type="PDBsum" id="4I7K"/>
<dbReference type="PDBsum" id="4I7L"/>
<dbReference type="PDBsum" id="4I7M"/>
<dbReference type="PDBsum" id="4I7N"/>
<dbReference type="PDBsum" id="4I7O"/>
<dbReference type="PDBsum" id="4I7P"/>
<dbReference type="PDBsum" id="4I7Q"/>
<dbReference type="PDBsum" id="4I7R"/>
<dbReference type="PDBsum" id="4I7S"/>
<dbReference type="PDBsum" id="4I7T"/>
<dbReference type="PDBsum" id="4IAP"/>
<dbReference type="PDBsum" id="4K5Y"/>
<dbReference type="PDBsum" id="4LDE"/>
<dbReference type="PDBsum" id="4LDL"/>
<dbReference type="PDBsum" id="4LDO"/>
<dbReference type="PDBsum" id="4LZM"/>
<dbReference type="PDBsum" id="4N9N"/>
<dbReference type="PDBsum" id="4OO9"/>
<dbReference type="PDBsum" id="4PHU"/>
<dbReference type="PDBsum" id="4QKX"/>
<dbReference type="PDBsum" id="4RWS"/>
<dbReference type="PDBsum" id="4S0W"/>
<dbReference type="PDBsum" id="4TN3"/>
<dbReference type="PDBsum" id="4U14"/>
<dbReference type="PDBsum" id="4W51"/>
<dbReference type="PDBsum" id="4W52"/>
<dbReference type="PDBsum" id="4W53"/>
<dbReference type="PDBsum" id="4W54"/>
<dbReference type="PDBsum" id="4W55"/>
<dbReference type="PDBsum" id="4W56"/>
<dbReference type="PDBsum" id="4W57"/>
<dbReference type="PDBsum" id="4W58"/>
<dbReference type="PDBsum" id="4W59"/>
<dbReference type="PDBsum" id="4W8F"/>
<dbReference type="PDBsum" id="4WTV"/>
<dbReference type="PDBsum" id="4XEE"/>
<dbReference type="PDBsum" id="4XES"/>
<dbReference type="PDBsum" id="4YX7"/>
<dbReference type="PDBsum" id="4YXA"/>
<dbReference type="PDBsum" id="4YXC"/>
<dbReference type="PDBsum" id="4ZWJ"/>
<dbReference type="PDBsum" id="5B2G"/>
<dbReference type="PDBsum" id="5CGC"/>
<dbReference type="PDBsum" id="5CGD"/>
<dbReference type="PDBsum" id="5CXV"/>
<dbReference type="PDBsum" id="5D5A"/>
<dbReference type="PDBsum" id="5D5B"/>
<dbReference type="PDBsum" id="5D6L"/>
<dbReference type="PDBsum" id="5DGY"/>
<dbReference type="PDBsum" id="5DSG"/>
<dbReference type="PDBsum" id="5EE7"/>
<dbReference type="PDBsum" id="5EUT"/>
<dbReference type="PDBsum" id="5EWX"/>
<dbReference type="PDBsum" id="5G27"/>
<dbReference type="PDBsum" id="5GLH"/>
<dbReference type="PDBsum" id="5GLI"/>
<dbReference type="PDBsum" id="5I14"/>
<dbReference type="PDBsum" id="5JDT"/>
<dbReference type="PDBsum" id="5JEA"/>
<dbReference type="PDBsum" id="5JGN"/>
<dbReference type="PDBsum" id="5JGR"/>
<dbReference type="PDBsum" id="5JGU"/>
<dbReference type="PDBsum" id="5JGV"/>
<dbReference type="PDBsum" id="5JGX"/>
<dbReference type="PDBsum" id="5JGZ"/>
<dbReference type="PDBsum" id="5JQH"/>
<dbReference type="PDBsum" id="5JWS"/>
<dbReference type="PDBsum" id="5JWT"/>
<dbReference type="PDBsum" id="5JWU"/>
<dbReference type="PDBsum" id="5JWV"/>
<dbReference type="PDBsum" id="5JWW"/>
<dbReference type="PDBsum" id="5KGR"/>
<dbReference type="PDBsum" id="5KHZ"/>
<dbReference type="PDBsum" id="5KI1"/>
<dbReference type="PDBsum" id="5KI2"/>
<dbReference type="PDBsum" id="5KI3"/>
<dbReference type="PDBsum" id="5KI8"/>
<dbReference type="PDBsum" id="5KIG"/>
<dbReference type="PDBsum" id="5KII"/>
<dbReference type="PDBsum" id="5KIM"/>
<dbReference type="PDBsum" id="5KIO"/>
<dbReference type="PDBsum" id="5KW2"/>
<dbReference type="PDBsum" id="5LWO"/>
<dbReference type="PDBsum" id="5LZM"/>
<dbReference type="PDBsum" id="5NDD"/>
<dbReference type="PDBsum" id="5NDZ"/>
<dbReference type="PDBsum" id="5T04"/>
<dbReference type="PDBsum" id="5T1A"/>
<dbReference type="PDBsum" id="5TZR"/>
<dbReference type="PDBsum" id="5TZY"/>
<dbReference type="PDBsum" id="5V7D"/>
<dbReference type="PDBsum" id="5V7E"/>
<dbReference type="PDBsum" id="5V7F"/>
<dbReference type="PDBsum" id="5V83"/>
<dbReference type="PDBsum" id="5V86"/>
<dbReference type="PDBsum" id="5V88"/>
<dbReference type="PDBsum" id="5VBA"/>
<dbReference type="PDBsum" id="5VEW"/>
<dbReference type="PDBsum" id="5VEX"/>
<dbReference type="PDBsum" id="5VNQ"/>
<dbReference type="PDBsum" id="5VNR"/>
<dbReference type="PDBsum" id="5WF5"/>
<dbReference type="PDBsum" id="5WF6"/>
<dbReference type="PDBsum" id="5X7D"/>
<dbReference type="PDBsum" id="5X93"/>
<dbReference type="PDBsum" id="5XEZ"/>
<dbReference type="PDBsum" id="5XF1"/>
<dbReference type="PDBsum" id="5XPE"/>
<dbReference type="PDBsum" id="5XPF"/>
<dbReference type="PDBsum" id="5XPR"/>
<dbReference type="PDBsum" id="5XSZ"/>
<dbReference type="PDBsum" id="5YQR"/>
<dbReference type="PDBsum" id="5YQZ"/>
<dbReference type="PDBsum" id="5ZBH"/>
<dbReference type="PDBsum" id="5ZBQ"/>
<dbReference type="PDBsum" id="5ZHP"/>
<dbReference type="PDBsum" id="6A73"/>
<dbReference type="PDBsum" id="6A9E"/>
<dbReference type="PDBsum" id="6A9J"/>
<dbReference type="PDBsum" id="6BG3"/>
<dbReference type="PDBsum" id="6BG5"/>
<dbReference type="PDBsum" id="6CM4"/>
<dbReference type="PDBsum" id="6D26"/>
<dbReference type="PDBsum" id="6D27"/>
<dbReference type="PDBsum" id="6D9M"/>
<dbReference type="PDBsum" id="6FFH"/>
<dbReference type="PDBsum" id="6FFI"/>
<dbReference type="PDBsum" id="6IIH"/>
<dbReference type="PDBsum" id="6J20"/>
<dbReference type="PDBsum" id="6J21"/>
<dbReference type="PDBsum" id="6K1Q"/>
<dbReference type="PDBsum" id="6K69"/>
<dbReference type="PDBsum" id="6KJV"/>
<dbReference type="PDBsum" id="6KK1"/>
<dbReference type="PDBsum" id="6KK7"/>
<dbReference type="PDBsum" id="6KPC"/>
<dbReference type="PDBsum" id="6LZM"/>
<dbReference type="PDBsum" id="6M9T"/>
<dbReference type="PDBsum" id="6MXT"/>
<dbReference type="PDBsum" id="6QAJ"/>
<dbReference type="PDBsum" id="6U0B"/>
<dbReference type="PDBsum" id="6U0C"/>
<dbReference type="PDBsum" id="6U0F"/>
<dbReference type="PDBsum" id="6WSK"/>
<dbReference type="PDBsum" id="6XYR"/>
<dbReference type="PDBsum" id="6ZFZ"/>
<dbReference type="PDBsum" id="6ZG4"/>
<dbReference type="PDBsum" id="6ZG9"/>
<dbReference type="PDBsum" id="6ZX9"/>
<dbReference type="PDBsum" id="7DWS"/>
<dbReference type="PDBsum" id="7F8U"/>
<dbReference type="PDBsum" id="7F8X"/>
<dbReference type="PDBsum" id="7F8Y"/>
<dbReference type="PDBsum" id="7L37"/>
<dbReference type="PDBsum" id="7L38"/>
<dbReference type="PDBsum" id="7L39"/>
<dbReference type="PDBsum" id="7L3A"/>
<dbReference type="PDBsum" id="7L3B"/>
<dbReference type="PDBsum" id="7L3C"/>
<dbReference type="PDBsum" id="7L3D"/>
<dbReference type="PDBsum" id="7L3E"/>
<dbReference type="PDBsum" id="7L3F"/>
<dbReference type="PDBsum" id="7L3G"/>
<dbReference type="PDBsum" id="7L3H"/>
<dbReference type="PDBsum" id="7L3I"/>
<dbReference type="PDBsum" id="7L3J"/>
<dbReference type="PDBsum" id="7L3K"/>
<dbReference type="PDBsum" id="7LOA"/>
<dbReference type="PDBsum" id="7LOB"/>
<dbReference type="PDBsum" id="7LOC"/>
<dbReference type="PDBsum" id="7LOD"/>
<dbReference type="PDBsum" id="7LOE"/>
<dbReference type="PDBsum" id="7LOF"/>
<dbReference type="PDBsum" id="7LOJ"/>
<dbReference type="PDBsum" id="7LX6"/>
<dbReference type="PDBsum" id="7LX7"/>
<dbReference type="PDBsum" id="7LX8"/>
<dbReference type="PDBsum" id="7LX9"/>
<dbReference type="PDBsum" id="7LZM"/>
<dbReference type="PDBsum" id="7MI3"/>
<dbReference type="PDBsum" id="7MI6"/>
<dbReference type="PDBsum" id="7MI8"/>
<dbReference type="PDBsum" id="7P2L"/>
<dbReference type="PDBsum" id="7RX9"/>
<dbReference type="PDBsum" id="7SJ6"/>
<dbReference type="PDBsum" id="7XB5"/>
<dbReference type="PDBsum" id="7XK9"/>
<dbReference type="PDBsum" id="7XKA"/>
<dbReference type="PDBsum" id="7Z36"/>
<dbReference type="PDBsum" id="8A5X"/>
<dbReference type="PDBsum" id="8DCR"/>
<dbReference type="PDBsum" id="8DCS"/>
<dbReference type="PDBsum" id="8EIT"/>
<dbReference type="PDBsum" id="8THK"/>
<dbReference type="PDBsum" id="8THL"/>
<dbReference type="PDBsum" id="8UGW"/>
<dbReference type="PDBsum" id="8W1V"/>
<dbReference type="PDBsum" id="8YIC"/>
<dbReference type="PDBsum" id="9CBL"/>
<dbReference type="PDBsum" id="9CBM"/>
<dbReference type="BMRB" id="P00720"/>
<dbReference type="EMDB" id="EMD-27328"/>
<dbReference type="EMDB" id="EMD-27329"/>
<dbReference type="SMR" id="P00720"/>
<dbReference type="BindingDB" id="P00720"/>
<dbReference type="ChEMBL" id="CHEMBL5206"/>
<dbReference type="DrugBank" id="DB06934">
    <property type="generic name" value="(1R)-3-chloro-1-phenylpropan-1-ol"/>
</dbReference>
<dbReference type="DrugBank" id="DB07543">
    <property type="generic name" value="(S)-carazolol"/>
</dbReference>
<dbReference type="DrugBank" id="DB03301">
    <property type="generic name" value="2-Allyl-6-Methyl-Phenol"/>
</dbReference>
<dbReference type="DrugBank" id="DB02534">
    <property type="generic name" value="2-Allylphenol"/>
</dbReference>
<dbReference type="DrugBank" id="DB03842">
    <property type="generic name" value="2-Chloro-6-Methyl-Aniline"/>
</dbReference>
<dbReference type="DrugBank" id="DB02403">
    <property type="generic name" value="2-Fluoroaniline"/>
</dbReference>
<dbReference type="DrugBank" id="DB02486">
    <property type="generic name" value="2-Hydroxyethyl Disulfide"/>
</dbReference>
<dbReference type="DrugBank" id="DB02970">
    <property type="generic name" value="2-Propyl-Aniline"/>
</dbReference>
<dbReference type="DrugBank" id="DB03238">
    <property type="generic name" value="3,5-Difluoroaniline"/>
</dbReference>
<dbReference type="DrugBank" id="DB01957">
    <property type="generic name" value="3-Chlorophenol"/>
</dbReference>
<dbReference type="DrugBank" id="DB01986">
    <property type="generic name" value="3-Fluoro-2-Methyl-Aniline"/>
</dbReference>
<dbReference type="DrugBank" id="DB03669">
    <property type="generic name" value="4-Fluorophenethyl Alcohol"/>
</dbReference>
<dbReference type="DrugBank" id="DB03660">
    <property type="generic name" value="4-Iodo-L-phenylalanine"/>
</dbReference>
<dbReference type="DrugBank" id="DB01932">
    <property type="generic name" value="5-Methylpyrrole"/>
</dbReference>
<dbReference type="DrugBank" id="DB04179">
    <property type="generic name" value="Benzofuran"/>
</dbReference>
<dbReference type="DrugBank" id="DB00536">
    <property type="generic name" value="Guanidine"/>
</dbReference>
<dbReference type="DrugBank" id="DB02210">
    <property type="generic name" value="Hexane-1,6-Diol"/>
</dbReference>
<dbReference type="DrugBank" id="DB04532">
    <property type="generic name" value="Indole"/>
</dbReference>
<dbReference type="DrugBank" id="DB03345">
    <property type="generic name" value="Mercaptoethanol"/>
</dbReference>
<dbReference type="DrugBank" id="DB02870">
    <property type="generic name" value="N-Allylaniline"/>
</dbReference>
<dbReference type="DrugBank" id="DB08456">
    <property type="generic name" value="S-[(1-Hydroxy-2,2,5,5-tetramethyl-4-phenyl-2,5-dihydro-1H-pyrrol-3-yl)methyl] methanesulfonothioate"/>
</dbReference>
<dbReference type="DrugBank" id="DB00373">
    <property type="generic name" value="Timolol"/>
</dbReference>
<dbReference type="DrugCentral" id="P00720"/>
<dbReference type="CAZy" id="GH24">
    <property type="family name" value="Glycoside Hydrolase Family 24"/>
</dbReference>
<dbReference type="GeneID" id="1258585"/>
<dbReference type="KEGG" id="vg:1258585"/>
<dbReference type="OrthoDB" id="2186at10239"/>
<dbReference type="BRENDA" id="3.2.1.17">
    <property type="organism ID" value="732"/>
</dbReference>
<dbReference type="EvolutionaryTrace" id="P00720"/>
<dbReference type="Proteomes" id="UP000009087">
    <property type="component" value="Segment"/>
</dbReference>
<dbReference type="GO" id="GO:0030430">
    <property type="term" value="C:host cell cytoplasm"/>
    <property type="evidence" value="ECO:0007669"/>
    <property type="project" value="UniProtKB-SubCell"/>
</dbReference>
<dbReference type="GO" id="GO:0003796">
    <property type="term" value="F:lysozyme activity"/>
    <property type="evidence" value="ECO:0000314"/>
    <property type="project" value="UniProtKB"/>
</dbReference>
<dbReference type="GO" id="GO:0016998">
    <property type="term" value="P:cell wall macromolecule catabolic process"/>
    <property type="evidence" value="ECO:0007669"/>
    <property type="project" value="InterPro"/>
</dbReference>
<dbReference type="GO" id="GO:0042742">
    <property type="term" value="P:defense response to bacterium"/>
    <property type="evidence" value="ECO:0007669"/>
    <property type="project" value="UniProtKB-KW"/>
</dbReference>
<dbReference type="GO" id="GO:0009253">
    <property type="term" value="P:peptidoglycan catabolic process"/>
    <property type="evidence" value="ECO:0007669"/>
    <property type="project" value="UniProtKB-UniRule"/>
</dbReference>
<dbReference type="GO" id="GO:0044659">
    <property type="term" value="P:viral release from host cell by cytolysis"/>
    <property type="evidence" value="ECO:0007669"/>
    <property type="project" value="UniProtKB-UniRule"/>
</dbReference>
<dbReference type="CDD" id="cd00735">
    <property type="entry name" value="T4-like_lys"/>
    <property type="match status" value="1"/>
</dbReference>
<dbReference type="FunFam" id="1.10.530.40:FF:000002">
    <property type="entry name" value="Endolysin"/>
    <property type="match status" value="1"/>
</dbReference>
<dbReference type="Gene3D" id="1.10.530.40">
    <property type="match status" value="1"/>
</dbReference>
<dbReference type="HAMAP" id="MF_04110">
    <property type="entry name" value="ENDOLYSIN_T4"/>
    <property type="match status" value="1"/>
</dbReference>
<dbReference type="InterPro" id="IPR034690">
    <property type="entry name" value="Endolysin_T4_type"/>
</dbReference>
<dbReference type="InterPro" id="IPR002196">
    <property type="entry name" value="Glyco_hydro_24"/>
</dbReference>
<dbReference type="InterPro" id="IPR023346">
    <property type="entry name" value="Lysozyme-like_dom_sf"/>
</dbReference>
<dbReference type="InterPro" id="IPR023347">
    <property type="entry name" value="Lysozyme_dom_sf"/>
</dbReference>
<dbReference type="InterPro" id="IPR052619">
    <property type="entry name" value="Phage_lysozyme-like"/>
</dbReference>
<dbReference type="InterPro" id="IPR001165">
    <property type="entry name" value="T4-type_lysozyme"/>
</dbReference>
<dbReference type="PANTHER" id="PTHR37406">
    <property type="entry name" value="T4-TYPE LYSOZYME 1-RELATED"/>
    <property type="match status" value="1"/>
</dbReference>
<dbReference type="PANTHER" id="PTHR37406:SF1">
    <property type="entry name" value="T4-TYPE LYSOZYME 1-RELATED"/>
    <property type="match status" value="1"/>
</dbReference>
<dbReference type="Pfam" id="PF00959">
    <property type="entry name" value="Phage_lysozyme"/>
    <property type="match status" value="1"/>
</dbReference>
<dbReference type="PRINTS" id="PR00684">
    <property type="entry name" value="T4LYSOZYME"/>
</dbReference>
<dbReference type="SUPFAM" id="SSF53955">
    <property type="entry name" value="Lysozyme-like"/>
    <property type="match status" value="1"/>
</dbReference>
<name>ENLYS_BPT4</name>
<keyword id="KW-0002">3D-structure</keyword>
<keyword id="KW-0929">Antimicrobial</keyword>
<keyword id="KW-0081">Bacteriolytic enzyme</keyword>
<keyword id="KW-0204">Cytolysis</keyword>
<keyword id="KW-0903">Direct protein sequencing</keyword>
<keyword id="KW-0326">Glycosidase</keyword>
<keyword id="KW-0578">Host cell lysis by virus</keyword>
<keyword id="KW-1035">Host cytoplasm</keyword>
<keyword id="KW-0378">Hydrolase</keyword>
<keyword id="KW-1185">Reference proteome</keyword>
<keyword id="KW-1188">Viral release from host cell</keyword>
<gene>
    <name type="primary">E</name>
</gene>
<reference key="1">
    <citation type="journal article" date="1970" name="J. Biol. Chem.">
        <title>The amino acid sequence of T4 phage lysozyme. IV. Dilute acid hydrolysis and the order of tryptic peptides.</title>
        <authorList>
            <person name="Inouye M."/>
            <person name="Imada M."/>
            <person name="Tsugita A."/>
        </authorList>
    </citation>
    <scope>PROTEIN SEQUENCE</scope>
</reference>
<reference key="2">
    <citation type="journal article" date="1983" name="J. Mol. Biol.">
        <title>Nucleotide sequence of the lysozyme gene of bacteriophage T4. Analysis of mutations involving repeated sequences.</title>
        <authorList>
            <person name="Owen J.E."/>
            <person name="Schultz D.W."/>
            <person name="Taylor A."/>
            <person name="Smith G.R."/>
        </authorList>
    </citation>
    <scope>NUCLEOTIDE SEQUENCE [GENOMIC DNA]</scope>
</reference>
<reference key="3">
    <citation type="journal article" date="1986" name="Nucleic Acids Res.">
        <title>Nucleotide sequence and analysis of the 58.3 to 65.5-kb early region of bacteriophage T4.</title>
        <authorList>
            <person name="Valerie K."/>
            <person name="Stevens J."/>
            <person name="Lynch M."/>
            <person name="Henderson E.E."/>
            <person name="de Riel J.K."/>
        </authorList>
    </citation>
    <scope>NUCLEOTIDE SEQUENCE [GENOMIC DNA]</scope>
</reference>
<reference key="4">
    <citation type="journal article" date="2003" name="Microbiol. Mol. Biol. Rev.">
        <title>Bacteriophage T4 genome.</title>
        <authorList>
            <person name="Miller E.S."/>
            <person name="Kutter E."/>
            <person name="Mosig G."/>
            <person name="Arisaka F."/>
            <person name="Kunisawa T."/>
            <person name="Ruger W."/>
        </authorList>
    </citation>
    <scope>NUCLEOTIDE SEQUENCE [LARGE SCALE GENOMIC DNA]</scope>
</reference>
<reference key="5">
    <citation type="journal article" date="1968" name="J. Biol. Chem.">
        <title>Purification of bacteriophage T4 lysozyme.</title>
        <authorList>
            <person name="Tsugita A."/>
            <person name="Inouye M."/>
        </authorList>
    </citation>
    <scope>CATALYTIC ACTIVITY</scope>
    <scope>BIOPHYSICOCHEMICAL PROPERTIES</scope>
</reference>
<reference key="6">
    <citation type="journal article" date="1988" name="Biochem. Biophys. Res. Commun.">
        <title>Mutation of active site residues in synthetic T4-lysozyme gene and their effect on lytic activity.</title>
        <authorList>
            <person name="Anand N.N."/>
            <person name="Stephen E.R."/>
            <person name="Narang S.A."/>
        </authorList>
    </citation>
    <scope>MUTAGENESIS OF GLU-11 AND ASP-20</scope>
    <scope>ACTIVE SITE</scope>
</reference>
<reference key="7">
    <citation type="journal article" date="1991" name="Biochemistry">
        <title>Reexamination of the role of Asp20 in catalysis by bacteriophage T4 lysozyme.</title>
        <authorList>
            <person name="Hardy L.W."/>
            <person name="Poteete A.R."/>
        </authorList>
    </citation>
    <scope>ACTIVE SITE</scope>
    <scope>MUTAGENESIS OF ASP-20</scope>
</reference>
<reference key="8">
    <citation type="journal article" date="2012" name="Protein Sci.">
        <title>Protein determinants of phage T4 lysis inhibition.</title>
        <authorList>
            <person name="Moussa S.H."/>
            <person name="Kuznetsov V."/>
            <person name="Tran T.A."/>
            <person name="Sacchettini J.C."/>
            <person name="Young R."/>
        </authorList>
    </citation>
    <scope>FUNCTION</scope>
</reference>
<reference key="9">
    <citation type="journal article" date="1974" name="Proc. Natl. Acad. Sci. U.S.A.">
        <title>The three dimensional structure of the lysozyme from bacteriophage T4.</title>
        <authorList>
            <person name="Matthews B.W."/>
            <person name="Remington S.J."/>
        </authorList>
    </citation>
    <scope>X-RAY CRYSTALLOGRAPHY (1.7 ANGSTROMS)</scope>
</reference>
<reference key="10">
    <citation type="journal article" date="1987" name="J. Mol. Biol.">
        <title>Structure of bacteriophage T4 lysozyme refined at 1.7-A resolution.</title>
        <authorList>
            <person name="Weaver L.H."/>
            <person name="Matthews B.W."/>
        </authorList>
    </citation>
    <scope>X-RAY CRYSTALLOGRAPHY (1.7 ANGSTROMS)</scope>
</reference>
<reference key="11">
    <citation type="journal article" date="1977" name="Biochem. Biophys. Res. Commun.">
        <title>Atomic coordinates for T4 phage lysozyme.</title>
        <authorList>
            <person name="Remington S.J."/>
            <person name="ten Eyck L.F."/>
            <person name="Matthews B.W."/>
        </authorList>
    </citation>
    <scope>X-RAY CRYSTALLOGRAPHY (2.4 ANGSTROMS)</scope>
</reference>
<reference key="12">
    <citation type="journal article" date="1988" name="Nature">
        <title>Hydrophobic stabilization in T4 lysozyme determined directly by multiple substitutions of Ile 3.</title>
        <authorList>
            <person name="Matsumura M."/>
            <person name="Becktel W.J."/>
            <person name="Matthews B.W."/>
        </authorList>
    </citation>
    <scope>X-RAY CRYSTALLOGRAPHY (1.7 ANGSTROMS) OF MUTANT ILE-3</scope>
</reference>
<reference key="13">
    <citation type="journal article" date="1990" name="Nature">
        <title>A mutant T4 lysozyme displays five different crystal conformations.</title>
        <authorList>
            <person name="Faber H.R."/>
            <person name="Matthews B.W."/>
        </authorList>
    </citation>
    <scope>X-RAY CRYSTALLOGRAPHY (1.8 ANGSTROMS) OF MUTANT</scope>
</reference>
<reference key="14">
    <citation type="journal article" date="1992" name="Nature">
        <title>A cavity-containing mutant of T4 lysozyme is stabilized by buried benzene.</title>
        <authorList>
            <person name="Eriksson A.E."/>
            <person name="Baase W.A."/>
            <person name="Wozniak J.A."/>
            <person name="Matthews B.W."/>
        </authorList>
    </citation>
    <scope>X-RAY CRYSTALLOGRAPHY (1.7 ANGSTROMS) OF MUTANT</scope>
</reference>
<reference key="15">
    <citation type="journal article" date="1990" name="Biochemistry">
        <title>Assignment of the backbone 1H and 15N NMR resonances of bacteriophage T4 lysozyme.</title>
        <authorList>
            <person name="McIntosh L.P."/>
            <person name="Wand A.J."/>
            <person name="Lowry D.F."/>
            <person name="Redfield A.G."/>
            <person name="Dahlquist F.W."/>
        </authorList>
    </citation>
    <scope>STRUCTURE BY NMR</scope>
</reference>
<reference key="16">
    <citation type="journal article" date="1993" name="Science">
        <title>A covalent enzyme-substrate intermediate with saccharide distortion in a mutant T4 lysozyme.</title>
        <authorList>
            <person name="Kuroki R."/>
            <person name="Weaver L.H."/>
            <person name="Matthews B.W."/>
        </authorList>
    </citation>
    <scope>X-RAY CRYSTALLOGRAPHY (1.90 ANGSTROMS) IN COMPLEX WITH N-ACETYL-D-GLUCOSAMINE</scope>
    <scope>MUTAGENESIS OF THR-26</scope>
    <scope>ACTIVE SITE</scope>
</reference>
<reference key="17">
    <citation type="journal article" date="1995" name="Proc. Natl. Acad. Sci. U.S.A.">
        <title>A relationship between protein stability and protein function.</title>
        <authorList>
            <person name="Shoichet B.K."/>
            <person name="Baase W.A."/>
            <person name="Kuroki R."/>
            <person name="Matthews B.W."/>
        </authorList>
    </citation>
    <scope>X-RAY CRYSTALLOGRAPHY (1.80 ANGSTROMS)</scope>
    <scope>MUTAGENESIS OF GLU-11; ASP-20; GLY-30; SER-117 AND ASN-132</scope>
    <scope>ACTIVE SITE</scope>
</reference>
<reference evidence="11 12" key="18">
    <citation type="journal article" date="2017" name="Protein Sci.">
        <title>Neutron structure of the T26H mutant of T4 phage lysozyme provides insight into the catalytic activity of the mutant enzyme and how it differs from that of wild type.</title>
        <authorList>
            <person name="Hiromoto T."/>
            <person name="Meilleur F."/>
            <person name="Shimizu R."/>
            <person name="Shibazaki C."/>
            <person name="Adachi M."/>
            <person name="Tamada T."/>
            <person name="Kuroki R."/>
        </authorList>
    </citation>
    <scope>X-RAY CRYSTALLOGRAPHY (1.04 ANGSTROMS)</scope>
    <scope>MUTAGENESIS OF THR-26</scope>
</reference>
<organismHost>
    <name type="scientific">Escherichia coli</name>
    <dbReference type="NCBI Taxonomy" id="562"/>
</organismHost>
<accession>P00720</accession>
<accession>Q38170</accession>
<accession>Q94N07</accession>
<evidence type="ECO:0000255" key="1">
    <source>
        <dbReference type="HAMAP-Rule" id="MF_04110"/>
    </source>
</evidence>
<evidence type="ECO:0000269" key="2">
    <source>
    </source>
</evidence>
<evidence type="ECO:0000269" key="3">
    <source>
    </source>
</evidence>
<evidence type="ECO:0000269" key="4">
    <source>
    </source>
</evidence>
<evidence type="ECO:0000269" key="5">
    <source>
    </source>
</evidence>
<evidence type="ECO:0000269" key="6">
    <source>
    </source>
</evidence>
<evidence type="ECO:0000269" key="7">
    <source>
    </source>
</evidence>
<evidence type="ECO:0000269" key="8">
    <source>
    </source>
</evidence>
<evidence type="ECO:0000303" key="9">
    <source>
    </source>
</evidence>
<evidence type="ECO:0000305" key="10"/>
<evidence type="ECO:0007744" key="11">
    <source>
        <dbReference type="PDB" id="5XPE"/>
    </source>
</evidence>
<evidence type="ECO:0007744" key="12">
    <source>
        <dbReference type="PDB" id="5XPF"/>
    </source>
</evidence>
<evidence type="ECO:0007829" key="13">
    <source>
        <dbReference type="PDB" id="209L"/>
    </source>
</evidence>
<evidence type="ECO:0007829" key="14">
    <source>
        <dbReference type="PDB" id="2O7A"/>
    </source>
</evidence>
<evidence type="ECO:0007829" key="15">
    <source>
        <dbReference type="PDB" id="3HH3"/>
    </source>
</evidence>
<evidence type="ECO:0007829" key="16">
    <source>
        <dbReference type="PDB" id="4ARJ"/>
    </source>
</evidence>
<evidence type="ECO:0007829" key="17">
    <source>
        <dbReference type="PDB" id="5JDT"/>
    </source>
</evidence>
<evidence type="ECO:0007829" key="18">
    <source>
        <dbReference type="PDB" id="5V88"/>
    </source>
</evidence>
<evidence type="ECO:0007829" key="19">
    <source>
        <dbReference type="PDB" id="6D26"/>
    </source>
</evidence>
<evidence type="ECO:0007829" key="20">
    <source>
        <dbReference type="PDB" id="7LOE"/>
    </source>
</evidence>
<evidence type="ECO:0007829" key="21">
    <source>
        <dbReference type="PDB" id="8A5X"/>
    </source>
</evidence>
<organism>
    <name type="scientific">Enterobacteria phage T4</name>
    <name type="common">Bacteriophage T4</name>
    <dbReference type="NCBI Taxonomy" id="10665"/>
    <lineage>
        <taxon>Viruses</taxon>
        <taxon>Duplodnaviria</taxon>
        <taxon>Heunggongvirae</taxon>
        <taxon>Uroviricota</taxon>
        <taxon>Caudoviricetes</taxon>
        <taxon>Straboviridae</taxon>
        <taxon>Tevenvirinae</taxon>
        <taxon>Tequatrovirus</taxon>
    </lineage>
</organism>
<feature type="chain" id="PRO_0000218107" description="Endolysin">
    <location>
        <begin position="1"/>
        <end position="164"/>
    </location>
</feature>
<feature type="active site" description="Proton donor/acceptor" evidence="1 5 7 8">
    <location>
        <position position="11"/>
    </location>
</feature>
<feature type="active site" description="Proton donor/acceptor" evidence="1 2 5 7 8">
    <location>
        <position position="20"/>
    </location>
</feature>
<feature type="binding site" evidence="8">
    <location>
        <position position="32"/>
    </location>
    <ligand>
        <name>substrate</name>
    </ligand>
</feature>
<feature type="binding site" evidence="8">
    <location>
        <position position="104"/>
    </location>
    <ligand>
        <name>substrate</name>
    </ligand>
</feature>
<feature type="binding site" evidence="9">
    <location>
        <position position="117"/>
    </location>
    <ligand>
        <name>substrate</name>
    </ligand>
</feature>
<feature type="binding site" evidence="9">
    <location>
        <position position="132"/>
    </location>
    <ligand>
        <name>substrate</name>
    </ligand>
</feature>
<feature type="mutagenesis site" description="Complete loss of enzymatic activity." evidence="7">
    <original>E</original>
    <variation>A</variation>
    <variation>F</variation>
    <variation>H</variation>
    <variation>M</variation>
    <variation>N</variation>
    <location>
        <position position="11"/>
    </location>
</feature>
<feature type="mutagenesis site" description="Loss of 84% of enzymatic activity." evidence="5">
    <original>E</original>
    <variation>N</variation>
    <location>
        <position position="11"/>
    </location>
</feature>
<feature type="mutagenesis site" description="Complete loss of activity." evidence="5">
    <original>E</original>
    <variation>Q</variation>
    <location>
        <position position="11"/>
    </location>
</feature>
<feature type="mutagenesis site" description="Complete loss of enzymatic activity." evidence="7">
    <original>D</original>
    <variation>A</variation>
    <variation>N</variation>
    <variation>S</variation>
    <variation>T</variation>
    <location>
        <position position="20"/>
    </location>
</feature>
<feature type="mutagenesis site" description="Nearly no effet on specific enzymatic activity." evidence="2">
    <original>D</original>
    <variation>C</variation>
    <location>
        <position position="20"/>
    </location>
</feature>
<feature type="mutagenesis site" description="Loss of 99% of enzymatic activity." evidence="5">
    <original>D</original>
    <variation>E</variation>
    <variation>Q</variation>
    <location>
        <position position="20"/>
    </location>
</feature>
<feature type="mutagenesis site" description="Complete loss of activity at neutral pH; covalently bound substrate." evidence="8">
    <original>T</original>
    <variation>E</variation>
    <location>
        <position position="26"/>
    </location>
</feature>
<feature type="mutagenesis site" description="Facilitates transglycosylation more effectively than hydrolysis; covalently bound substrate." evidence="4">
    <original>T</original>
    <variation>H</variation>
    <location>
        <position position="26"/>
    </location>
</feature>
<feature type="mutagenesis site" description="Almost complete loss of enzymatic activity." evidence="7">
    <original>G</original>
    <variation>A</variation>
    <location>
        <position position="30"/>
    </location>
</feature>
<feature type="mutagenesis site" description="Almost complete loss of enzymatic activity. The enzyme is destabilized by 1.5 kcal/mol." evidence="7">
    <original>G</original>
    <variation>F</variation>
    <location>
        <position position="30"/>
    </location>
</feature>
<feature type="mutagenesis site" description="10-fold decrease in enzymatic activity." evidence="7">
    <original>S</original>
    <variation>F</variation>
    <location>
        <position position="117"/>
    </location>
</feature>
<feature type="mutagenesis site" description="500-fold decrease in enzymatic activity." evidence="7">
    <original>S</original>
    <variation>I</variation>
    <location>
        <position position="117"/>
    </location>
</feature>
<feature type="mutagenesis site" description="50-fold decrease in enzymatic activity." evidence="7">
    <original>S</original>
    <variation>V</variation>
    <location>
        <position position="117"/>
    </location>
</feature>
<feature type="mutagenesis site" description="5-fold decrease in enzymatic activity." evidence="7">
    <original>N</original>
    <variation>I</variation>
    <location>
        <position position="132"/>
    </location>
</feature>
<feature type="mutagenesis site" description="2-fold decrease in enzymatic activity." evidence="7">
    <original>N</original>
    <variation>M</variation>
    <variation>F</variation>
    <location>
        <position position="132"/>
    </location>
</feature>
<feature type="sequence conflict" description="In Ref. 1; AA sequence." evidence="10" ref="1">
    <original>R</original>
    <variation>G</variation>
    <location>
        <position position="12"/>
    </location>
</feature>
<feature type="sequence conflict" description="In Ref. 1; AA sequence." evidence="10" ref="1">
    <original>I</original>
    <variation>R</variation>
    <location>
        <position position="137"/>
    </location>
</feature>
<feature type="helix" evidence="14">
    <location>
        <begin position="3"/>
        <end position="11"/>
    </location>
</feature>
<feature type="strand" evidence="17">
    <location>
        <begin position="14"/>
        <end position="19"/>
    </location>
</feature>
<feature type="strand" evidence="18">
    <location>
        <begin position="21"/>
        <end position="23"/>
    </location>
</feature>
<feature type="strand" evidence="17">
    <location>
        <begin position="25"/>
        <end position="28"/>
    </location>
</feature>
<feature type="strand" evidence="20">
    <location>
        <begin position="31"/>
        <end position="37"/>
    </location>
</feature>
<feature type="helix" evidence="17">
    <location>
        <begin position="39"/>
        <end position="50"/>
    </location>
</feature>
<feature type="strand" evidence="15">
    <location>
        <begin position="55"/>
        <end position="57"/>
    </location>
</feature>
<feature type="helix" evidence="14">
    <location>
        <begin position="62"/>
        <end position="64"/>
    </location>
</feature>
<feature type="strand" evidence="19">
    <location>
        <begin position="65"/>
        <end position="67"/>
    </location>
</feature>
<feature type="helix" evidence="14">
    <location>
        <begin position="68"/>
        <end position="79"/>
    </location>
</feature>
<feature type="turn" evidence="14">
    <location>
        <begin position="82"/>
        <end position="84"/>
    </location>
</feature>
<feature type="helix" evidence="14">
    <location>
        <begin position="85"/>
        <end position="90"/>
    </location>
</feature>
<feature type="helix" evidence="14">
    <location>
        <begin position="93"/>
        <end position="106"/>
    </location>
</feature>
<feature type="helix" evidence="14">
    <location>
        <begin position="108"/>
        <end position="112"/>
    </location>
</feature>
<feature type="helix" evidence="14">
    <location>
        <begin position="115"/>
        <end position="122"/>
    </location>
</feature>
<feature type="turn" evidence="13">
    <location>
        <begin position="123"/>
        <end position="125"/>
    </location>
</feature>
<feature type="helix" evidence="14">
    <location>
        <begin position="126"/>
        <end position="133"/>
    </location>
</feature>
<feature type="strand" evidence="21">
    <location>
        <begin position="134"/>
        <end position="136"/>
    </location>
</feature>
<feature type="helix" evidence="14">
    <location>
        <begin position="137"/>
        <end position="141"/>
    </location>
</feature>
<feature type="helix" evidence="14">
    <location>
        <begin position="143"/>
        <end position="155"/>
    </location>
</feature>
<feature type="strand" evidence="20">
    <location>
        <begin position="156"/>
        <end position="158"/>
    </location>
</feature>
<feature type="turn" evidence="14">
    <location>
        <begin position="159"/>
        <end position="161"/>
    </location>
</feature>
<feature type="helix" evidence="16">
    <location>
        <begin position="162"/>
        <end position="164"/>
    </location>
</feature>
<sequence>MNIFEMLRIDERLRLKIYKDTEGYYTIGIGHLLTKSPSLNAAKSELDKAIGRNCNGVITKDEAEKLFNQDVDAAVRGILRNAKLKPVYDSLDAVRRCALINMVFQMGETGVAGFTNSLRMLQQKRWDEAAVNLAKSIWYNQTPNRAKRVITTFRTGTWDAYKNL</sequence>
<comment type="function">
    <text evidence="1 3">Endolysin with lysozyme activity that degrades host peptidoglycans and participates with the holin and spanin proteins in the sequential events which lead to the programmed host cell lysis releasing the mature viral particles. Once the holin has permeabilized the host cell membrane, the endolysin can reach the periplasm and break down the peptidoglycan layer.</text>
</comment>
<comment type="catalytic activity">
    <reaction evidence="1 6">
        <text>Hydrolysis of (1-&gt;4)-beta-linkages between N-acetylmuramic acid and N-acetyl-D-glucosamine residues in a peptidoglycan and between N-acetyl-D-glucosamine residues in chitodextrins.</text>
        <dbReference type="EC" id="3.2.1.17"/>
    </reaction>
</comment>
<comment type="biophysicochemical properties">
    <phDependence>
        <text evidence="6">Optimum pH is 7.3.</text>
    </phDependence>
</comment>
<comment type="subcellular location">
    <subcellularLocation>
        <location evidence="1">Host cytoplasm</location>
    </subcellularLocation>
    <text evidence="1">The endolysin is cytoplasmic, but can reach the periplasmic space with the help of the holins which disrupt the host cell membrane.</text>
</comment>
<comment type="induction">
    <text>Expressed late in the viral replication.</text>
</comment>
<comment type="similarity">
    <text evidence="1">Belongs to the glycosyl hydrolase 24 family.</text>
</comment>
<proteinExistence type="evidence at protein level"/>
<protein>
    <recommendedName>
        <fullName evidence="1">Endolysin</fullName>
        <ecNumber evidence="1 6">3.2.1.17</ecNumber>
    </recommendedName>
    <alternativeName>
        <fullName evidence="1">Lysis protein</fullName>
    </alternativeName>
    <alternativeName>
        <fullName evidence="1">Lysozyme</fullName>
    </alternativeName>
    <alternativeName>
        <fullName evidence="1">Muramidase</fullName>
    </alternativeName>
</protein>